<comment type="function">
    <text evidence="20 28 29 31 33 42 43 65 77 78">Non-receptor tyrosine kinase indispensable for B lymphocyte development, differentiation and signaling (PubMed:19290921). Binding of antigen to the B-cell antigen receptor (BCR) triggers signaling that ultimately leads to B-cell activation (PubMed:19290921). After BCR engagement and activation at the plasma membrane, phosphorylates PLCG2 at several sites, igniting the downstream signaling pathway through calcium mobilization, followed by activation of the protein kinase C (PKC) family members (PubMed:11606584). PLCG2 phosphorylation is performed in close cooperation with the adapter protein B-cell linker protein BLNK (PubMed:11606584). BTK acts as a platform to bring together a diverse array of signaling proteins and is implicated in cytokine receptor signaling pathways (PubMed:16517732, PubMed:17932028). Plays an important role in the function of immune cells of innate as well as adaptive immunity, as a component of the Toll-like receptors (TLR) pathway (PubMed:16517732). The TLR pathway acts as a primary surveillance system for the detection of pathogens and are crucial to the activation of host defense (PubMed:16517732). Especially, is a critical molecule in regulating TLR9 activation in splenic B-cells (PubMed:16517732, PubMed:17932028). Within the TLR pathway, induces tyrosine phosphorylation of TIRAP which leads to TIRAP degradation (PubMed:16415872). BTK also plays a critical role in transcription regulation (PubMed:19290921). Induces the activity of NF-kappa-B, which is involved in regulating the expression of hundreds of genes (PubMed:19290921). BTK is involved on the signaling pathway linking TLR8 and TLR9 to NF-kappa-B (PubMed:19290921). Acts as an activator of NLRP3 inflammasome assembly by mediating phosphorylation of NLRP3 (PubMed:34554188). Transiently phosphorylates transcription factor GTF2I on tyrosine residues in response to BCR (PubMed:9012831). GTF2I then translocates to the nucleus to bind regulatory enhancer elements to modulate gene expression (PubMed:9012831). ARID3A and NFAT are other transcriptional target of BTK (PubMed:16738337). BTK is required for the formation of functional ARID3A DNA-binding complexes (PubMed:16738337). There is however no evidence that BTK itself binds directly to DNA (PubMed:16738337). BTK has a dual role in the regulation of apoptosis (PubMed:9751072). Plays a role in STING1-mediated induction of type I interferon (IFN) response by phosphorylating DDX41 (PubMed:25704810).</text>
</comment>
<comment type="catalytic activity">
    <reaction evidence="7 20 43">
        <text>L-tyrosyl-[protein] + ATP = O-phospho-L-tyrosyl-[protein] + ADP + H(+)</text>
        <dbReference type="Rhea" id="RHEA:10596"/>
        <dbReference type="Rhea" id="RHEA-COMP:10136"/>
        <dbReference type="Rhea" id="RHEA-COMP:20101"/>
        <dbReference type="ChEBI" id="CHEBI:15378"/>
        <dbReference type="ChEBI" id="CHEBI:30616"/>
        <dbReference type="ChEBI" id="CHEBI:46858"/>
        <dbReference type="ChEBI" id="CHEBI:61978"/>
        <dbReference type="ChEBI" id="CHEBI:456216"/>
        <dbReference type="EC" id="2.7.10.2"/>
    </reaction>
</comment>
<comment type="cofactor">
    <cofactor evidence="9 68 76">
        <name>Zn(2+)</name>
        <dbReference type="ChEBI" id="CHEBI:29105"/>
    </cofactor>
    <text evidence="9 68 76">Binds 1 zinc ion per subunit.</text>
</comment>
<comment type="activity regulation">
    <text evidence="12 18 19 21 28 30 33 59">Activated by phosphorylation. In primary B lymphocytes, is almost always non-phosphorylated and is thus catalytically inactive. Stimulation of TLR8 and TLR9 causes BTK activation. As a negative feedback mechanism to fine-tune BCR signaling, activated PRKCB down-modulates BTK function via direct phosphorylation of BTK at Ser-180, resulting in translocation of BTK back to the cytoplasmic fraction. PIN1, SH3BP5, and IBTK were also identified as BTK activity inhibitors. Interaction with CAV1 leads to dramatic down-regulation of the kinase activity of BTK. LFM-13A is a specific inhibitor of BTK. Dasatinib, a cancer drug acting as a tyrosine kinase inhibitor, also blocks BTK activity.</text>
</comment>
<comment type="subunit">
    <text evidence="1 9 12 18 21 30 31 33 35 36 37 38 68 73 75 76">Part of a complex composed of EEIG1, TNFRSF11A/RANK, PLCG2, GAB2, TEC and BTK; complex formation increases in the presence of TNFSF11/RANKL (By similarity). Binds GTF2I through the PH domain. Interacts with SH3BP5 via the SH3 domain. Interacts with IBTK via its PH domain. Interacts with ARID3A, CAV1, FASLG, PIN1, TLR8 and TLR9. Interacts with MPL/TPOR (PubMed:24607955).</text>
</comment>
<comment type="interaction">
    <interactant intactId="EBI-624835">
        <id>Q06187</id>
    </interactant>
    <interactant intactId="EBI-77818">
        <id>Q13444</id>
        <label>ADAM15</label>
    </interactant>
    <organismsDiffer>false</organismsDiffer>
    <experiments>2</experiments>
</comment>
<comment type="interaction">
    <interactant intactId="EBI-624835">
        <id>Q06187</id>
    </interactant>
    <interactant intactId="EBI-5458244">
        <id>Q99856</id>
        <label>ARID3A</label>
    </interactant>
    <organismsDiffer>false</organismsDiffer>
    <experiments>3</experiments>
</comment>
<comment type="interaction">
    <interactant intactId="EBI-624835">
        <id>Q06187</id>
    </interactant>
    <interactant intactId="EBI-2623522">
        <id>Q8WV28</id>
        <label>BLNK</label>
    </interactant>
    <organismsDiffer>false</organismsDiffer>
    <experiments>2</experiments>
</comment>
<comment type="interaction">
    <interactant intactId="EBI-624835">
        <id>Q06187</id>
    </interactant>
    <interactant intactId="EBI-624835">
        <id>Q06187</id>
        <label>BTK</label>
    </interactant>
    <organismsDiffer>false</organismsDiffer>
    <experiments>2</experiments>
</comment>
<comment type="interaction">
    <interactant intactId="EBI-624835">
        <id>Q06187</id>
    </interactant>
    <interactant intactId="EBI-359622">
        <id>P78347</id>
        <label>GTF2I</label>
    </interactant>
    <organismsDiffer>false</organismsDiffer>
    <experiments>6</experiments>
</comment>
<comment type="interaction">
    <interactant intactId="EBI-624835">
        <id>Q06187</id>
    </interactant>
    <interactant intactId="EBI-352572">
        <id>P08238</id>
        <label>HSP90AB1</label>
    </interactant>
    <organismsDiffer>false</organismsDiffer>
    <experiments>3</experiments>
</comment>
<comment type="interaction">
    <interactant intactId="EBI-624835">
        <id>Q06187</id>
    </interactant>
    <interactant intactId="EBI-11147603">
        <id>Q9BVA0</id>
        <label>KATNB1</label>
    </interactant>
    <organismsDiffer>false</organismsDiffer>
    <experiments>2</experiments>
</comment>
<comment type="interaction">
    <interactant intactId="EBI-624835">
        <id>Q06187</id>
    </interactant>
    <interactant intactId="EBI-3932027">
        <id>P21145</id>
        <label>MAL</label>
    </interactant>
    <organismsDiffer>false</organismsDiffer>
    <experiments>5</experiments>
</comment>
<comment type="interaction">
    <interactant intactId="EBI-624835">
        <id>Q06187</id>
    </interactant>
    <interactant intactId="EBI-748397">
        <id>P50222</id>
        <label>MEOX2</label>
    </interactant>
    <organismsDiffer>false</organismsDiffer>
    <experiments>3</experiments>
</comment>
<comment type="interaction">
    <interactant intactId="EBI-624835">
        <id>Q06187</id>
    </interactant>
    <interactant intactId="EBI-374762">
        <id>Q04759</id>
        <label>PRKCQ</label>
    </interactant>
    <organismsDiffer>false</organismsDiffer>
    <experiments>2</experiments>
</comment>
<comment type="interaction">
    <interactant intactId="EBI-624835">
        <id>Q06187</id>
    </interactant>
    <interactant intactId="EBI-624860">
        <id>O60239</id>
        <label>SH3BP5</label>
    </interactant>
    <organismsDiffer>false</organismsDiffer>
    <experiments>4</experiments>
</comment>
<comment type="interaction">
    <interactant intactId="EBI-624835">
        <id>Q06187</id>
    </interactant>
    <interactant intactId="EBI-346375">
        <id>P42768</id>
        <label>WAS</label>
    </interactant>
    <organismsDiffer>false</organismsDiffer>
    <experiments>4</experiments>
</comment>
<comment type="subcellular location">
    <subcellularLocation>
        <location evidence="16 42">Cytoplasm</location>
    </subcellularLocation>
    <subcellularLocation>
        <location evidence="10 13">Cell membrane</location>
        <topology evidence="10 13">Peripheral membrane protein</topology>
    </subcellularLocation>
    <subcellularLocation>
        <location evidence="16">Nucleus</location>
    </subcellularLocation>
    <subcellularLocation>
        <location evidence="1">Membrane raft</location>
    </subcellularLocation>
    <text evidence="77">In steady state, BTK is predominantly cytosolic. Following B-cell receptor (BCR) engagement by antigen, translocates to the plasma membrane through its PH domain. Plasma membrane localization is a critical step in the activation of BTK. A fraction of BTK also shuttles between the nucleus and the cytoplasm, and nuclear export is mediated by the nuclear export receptor CRM1.</text>
</comment>
<comment type="alternative products">
    <event type="alternative promoter"/>
    <isoform>
        <id>Q06187-1</id>
        <name>BTK-A</name>
        <sequence type="displayed"/>
    </isoform>
    <isoform>
        <id>Q06187-2</id>
        <name>BTK-C</name>
        <sequence type="described" ref="VSP_053838"/>
    </isoform>
</comment>
<comment type="tissue specificity">
    <text>Predominantly expressed in B-lymphocytes.</text>
</comment>
<comment type="domain">
    <text evidence="9 10 21 55">The PH domain mediates the binding to inositol polyphosphate and phosphoinositides, leading to its targeting to the plasma membrane. It is extended in the BTK kinase family by a region designated the TH (Tec homology) domain, which consists of about 80 residues preceding the SH3 domain.</text>
</comment>
<comment type="PTM">
    <text evidence="19 23 26 30 33 59 65">Following B-cell receptor (BCR) engagement, translocates to the plasma membrane where it gets phosphorylated at Tyr-551 by LYN and SYK. Phosphorylation at Tyr-551 is followed by autophosphorylation of Tyr-223 which may create a docking site for a SH2 containing protein. Phosphorylation at Ser-180 by PRKCB, leads in translocation of BTK back to the cytoplasmic fraction. Phosphorylation at Ser-21 and Ser-115 creates a binding site for PIN1 at these Ser-Pro motifs, and promotes it's recruitment.</text>
</comment>
<comment type="disease" evidence="11 14 15 17 22 24 25 27 34 42 44 45 46 47 48 49 50 51 52 53 54 56 57 58 60 61 62 63 64 66 67 69 70 71 72">
    <disease id="DI-02427">
        <name>X-linked agammaglobulinemia</name>
        <acronym>XLA</acronym>
        <description>Humoral immunodeficiency disease which results in developmental defects in the maturation pathway of B-cells. Affected boys have normal levels of pre-B-cells in their bone marrow but virtually no circulating mature B-lymphocytes. This results in a lack of immunoglobulins of all classes and leads to recurrent bacterial infections like otitis, conjunctivitis, dermatitis, sinusitis in the first few years of life, or even some patients present overwhelming sepsis or meningitis, resulting in death in a few hours. Treatment in most cases is by infusion of intravenous immunoglobulin.</description>
        <dbReference type="MIM" id="300755"/>
    </disease>
    <text>The disease is caused by variants affecting the gene represented in this entry.</text>
</comment>
<comment type="disease" evidence="54">
    <disease id="DI-02446">
        <name>Growth hormone deficiency, isolated, 3, with agammaglobulinemia</name>
        <acronym>IGHD3</acronym>
        <description>An X-linked recessive disorder characterized by growth hormone deficiency, short stature, delayed bone age, agammaglobulinemia with markedly reduced numbers of B cells, and good response to treatment with growth hormone.</description>
        <dbReference type="MIM" id="307200"/>
    </disease>
    <text>The disease may be caused by variants affecting the gene represented in this entry.</text>
</comment>
<comment type="miscellaneous">
    <molecule>Isoform BTK-C</molecule>
    <text evidence="79">Produced by alternative promoter usage. Predominant form in many tumor cells where it may function as an anti-apoptotic cell survival factor.</text>
</comment>
<comment type="similarity">
    <text evidence="3">Belongs to the protein kinase superfamily. Tyr protein kinase family. TEC subfamily.</text>
</comment>
<comment type="online information" name="Atlas of Genetics and Cytogenetics in Oncology and Haematology">
    <link uri="https://atlasgeneticsoncology.org/gene/851/BTK"/>
</comment>
<comment type="online information" name="BTKbase">
    <link uri="https://databases.lovd.nl/shared/genes/BTK"/>
    <text>BTK mutation db</text>
</comment>
<reference key="1">
    <citation type="journal article" date="1993" name="Nature">
        <title>The gene involved in X-linked agammaglobulinaemia is a member of the src family of protein-tyrosine kinases.</title>
        <authorList>
            <person name="Vetrie D."/>
            <person name="Vorechovsky I."/>
            <person name="Sideras P."/>
            <person name="Holland J."/>
            <person name="Davies A."/>
            <person name="Flinter F."/>
            <person name="Hammarstroem L."/>
            <person name="Kinnon C."/>
            <person name="Levinsky R.J."/>
            <person name="Bobrow M."/>
            <person name="Smith C.I.E."/>
            <person name="Bentley D.R."/>
        </authorList>
    </citation>
    <scope>NUCLEOTIDE SEQUENCE [MRNA] (ISOFORM BTK-A)</scope>
</reference>
<reference key="2">
    <citation type="journal article" date="1993" name="Nature">
        <authorList>
            <person name="Vetrie D."/>
            <person name="Vorechovsky I."/>
            <person name="Sideras P."/>
            <person name="Holland J."/>
            <person name="Davies A."/>
            <person name="Flinter F."/>
            <person name="Hammarstroem L."/>
            <person name="Kinnon C."/>
            <person name="Levinsky R.J."/>
            <person name="Bobrow M."/>
            <person name="Smith C.I.E."/>
            <person name="Bentley D.R."/>
        </authorList>
    </citation>
    <scope>ERRATUM OF PUBMED:8380905</scope>
</reference>
<reference key="3">
    <citation type="journal article" date="1994" name="Proc. Natl. Acad. Sci. U.S.A.">
        <title>Genomic organization and structure of Bruton agammaglobulinemia tyrosine kinase: localization of mutations associated with varied clinical presentations and course in X chromosome-linked agammaglobulinemia.</title>
        <authorList>
            <person name="Ohta Y."/>
            <person name="Haire R.N."/>
            <person name="Litman R.T."/>
            <person name="Fu S.M."/>
            <person name="Nelson R.P."/>
            <person name="Kratz J."/>
            <person name="Kornfeld S.J."/>
            <person name="la Morena M."/>
            <person name="Good R.A."/>
            <person name="Litman G.W."/>
        </authorList>
    </citation>
    <scope>NUCLEOTIDE SEQUENCE [GENOMIC DNA]</scope>
    <source>
        <tissue>Blood</tissue>
    </source>
</reference>
<reference key="4">
    <citation type="journal article" date="1994" name="Immunogenetics">
        <title>The genomic structure of human BTK, the defective gene in X-linked agammaglobulinemia.</title>
        <authorList>
            <person name="Rohrer J."/>
            <person name="Parolini O."/>
            <person name="Belmont J.W."/>
            <person name="Conley M.E."/>
        </authorList>
    </citation>
    <scope>NUCLEOTIDE SEQUENCE [GENOMIC DNA]</scope>
</reference>
<reference key="5">
    <citation type="journal article" date="1994" name="Hum. Mol. Genet.">
        <title>Genomic organization of the Btk gene and exon scanning for mutations in patients with X-linked agammaglobulinemia.</title>
        <authorList>
            <person name="Hagemann T.L."/>
            <person name="Chen Y."/>
            <person name="Rosen F.S."/>
            <person name="Kwan S.-P."/>
        </authorList>
    </citation>
    <scope>NUCLEOTIDE SEQUENCE [GENOMIC DNA]</scope>
    <scope>VARIANTS XLA SER-334; ARG-506; GLN-520; TRP-562 AND LYS-630</scope>
</reference>
<reference key="6">
    <citation type="journal article" date="1995" name="Mamm. Genome">
        <title>Sixty-nine kilobases of contiguous human genomic sequence containing the alpha-galactosidase A and Bruton's tyrosine kinase loci.</title>
        <authorList>
            <person name="Oeltjen J.C."/>
            <person name="Liu X."/>
            <person name="Lu J."/>
            <person name="Allen R.C."/>
            <person name="Muzny D.M."/>
            <person name="Belmont J.W."/>
            <person name="Gibbs R.A."/>
        </authorList>
    </citation>
    <scope>NUCLEOTIDE SEQUENCE [GENOMIC DNA]</scope>
</reference>
<reference key="7">
    <citation type="journal article" date="2004" name="Nat. Genet.">
        <title>Complete sequencing and characterization of 21,243 full-length human cDNAs.</title>
        <authorList>
            <person name="Ota T."/>
            <person name="Suzuki Y."/>
            <person name="Nishikawa T."/>
            <person name="Otsuki T."/>
            <person name="Sugiyama T."/>
            <person name="Irie R."/>
            <person name="Wakamatsu A."/>
            <person name="Hayashi K."/>
            <person name="Sato H."/>
            <person name="Nagai K."/>
            <person name="Kimura K."/>
            <person name="Makita H."/>
            <person name="Sekine M."/>
            <person name="Obayashi M."/>
            <person name="Nishi T."/>
            <person name="Shibahara T."/>
            <person name="Tanaka T."/>
            <person name="Ishii S."/>
            <person name="Yamamoto J."/>
            <person name="Saito K."/>
            <person name="Kawai Y."/>
            <person name="Isono Y."/>
            <person name="Nakamura Y."/>
            <person name="Nagahari K."/>
            <person name="Murakami K."/>
            <person name="Yasuda T."/>
            <person name="Iwayanagi T."/>
            <person name="Wagatsuma M."/>
            <person name="Shiratori A."/>
            <person name="Sudo H."/>
            <person name="Hosoiri T."/>
            <person name="Kaku Y."/>
            <person name="Kodaira H."/>
            <person name="Kondo H."/>
            <person name="Sugawara M."/>
            <person name="Takahashi M."/>
            <person name="Kanda K."/>
            <person name="Yokoi T."/>
            <person name="Furuya T."/>
            <person name="Kikkawa E."/>
            <person name="Omura Y."/>
            <person name="Abe K."/>
            <person name="Kamihara K."/>
            <person name="Katsuta N."/>
            <person name="Sato K."/>
            <person name="Tanikawa M."/>
            <person name="Yamazaki M."/>
            <person name="Ninomiya K."/>
            <person name="Ishibashi T."/>
            <person name="Yamashita H."/>
            <person name="Murakawa K."/>
            <person name="Fujimori K."/>
            <person name="Tanai H."/>
            <person name="Kimata M."/>
            <person name="Watanabe M."/>
            <person name="Hiraoka S."/>
            <person name="Chiba Y."/>
            <person name="Ishida S."/>
            <person name="Ono Y."/>
            <person name="Takiguchi S."/>
            <person name="Watanabe S."/>
            <person name="Yosida M."/>
            <person name="Hotuta T."/>
            <person name="Kusano J."/>
            <person name="Kanehori K."/>
            <person name="Takahashi-Fujii A."/>
            <person name="Hara H."/>
            <person name="Tanase T.-O."/>
            <person name="Nomura Y."/>
            <person name="Togiya S."/>
            <person name="Komai F."/>
            <person name="Hara R."/>
            <person name="Takeuchi K."/>
            <person name="Arita M."/>
            <person name="Imose N."/>
            <person name="Musashino K."/>
            <person name="Yuuki H."/>
            <person name="Oshima A."/>
            <person name="Sasaki N."/>
            <person name="Aotsuka S."/>
            <person name="Yoshikawa Y."/>
            <person name="Matsunawa H."/>
            <person name="Ichihara T."/>
            <person name="Shiohata N."/>
            <person name="Sano S."/>
            <person name="Moriya S."/>
            <person name="Momiyama H."/>
            <person name="Satoh N."/>
            <person name="Takami S."/>
            <person name="Terashima Y."/>
            <person name="Suzuki O."/>
            <person name="Nakagawa S."/>
            <person name="Senoh A."/>
            <person name="Mizoguchi H."/>
            <person name="Goto Y."/>
            <person name="Shimizu F."/>
            <person name="Wakebe H."/>
            <person name="Hishigaki H."/>
            <person name="Watanabe T."/>
            <person name="Sugiyama A."/>
            <person name="Takemoto M."/>
            <person name="Kawakami B."/>
            <person name="Yamazaki M."/>
            <person name="Watanabe K."/>
            <person name="Kumagai A."/>
            <person name="Itakura S."/>
            <person name="Fukuzumi Y."/>
            <person name="Fujimori Y."/>
            <person name="Komiyama M."/>
            <person name="Tashiro H."/>
            <person name="Tanigami A."/>
            <person name="Fujiwara T."/>
            <person name="Ono T."/>
            <person name="Yamada K."/>
            <person name="Fujii Y."/>
            <person name="Ozaki K."/>
            <person name="Hirao M."/>
            <person name="Ohmori Y."/>
            <person name="Kawabata A."/>
            <person name="Hikiji T."/>
            <person name="Kobatake N."/>
            <person name="Inagaki H."/>
            <person name="Ikema Y."/>
            <person name="Okamoto S."/>
            <person name="Okitani R."/>
            <person name="Kawakami T."/>
            <person name="Noguchi S."/>
            <person name="Itoh T."/>
            <person name="Shigeta K."/>
            <person name="Senba T."/>
            <person name="Matsumura K."/>
            <person name="Nakajima Y."/>
            <person name="Mizuno T."/>
            <person name="Morinaga M."/>
            <person name="Sasaki M."/>
            <person name="Togashi T."/>
            <person name="Oyama M."/>
            <person name="Hata H."/>
            <person name="Watanabe M."/>
            <person name="Komatsu T."/>
            <person name="Mizushima-Sugano J."/>
            <person name="Satoh T."/>
            <person name="Shirai Y."/>
            <person name="Takahashi Y."/>
            <person name="Nakagawa K."/>
            <person name="Okumura K."/>
            <person name="Nagase T."/>
            <person name="Nomura N."/>
            <person name="Kikuchi H."/>
            <person name="Masuho Y."/>
            <person name="Yamashita R."/>
            <person name="Nakai K."/>
            <person name="Yada T."/>
            <person name="Nakamura Y."/>
            <person name="Ohara O."/>
            <person name="Isogai T."/>
            <person name="Sugano S."/>
        </authorList>
    </citation>
    <scope>NUCLEOTIDE SEQUENCE [LARGE SCALE MRNA] (ISOFORM BTK-A)</scope>
    <source>
        <tissue>Umbilical cord blood</tissue>
    </source>
</reference>
<reference key="8">
    <citation type="journal article" date="2005" name="Nature">
        <title>The DNA sequence of the human X chromosome.</title>
        <authorList>
            <person name="Ross M.T."/>
            <person name="Grafham D.V."/>
            <person name="Coffey A.J."/>
            <person name="Scherer S."/>
            <person name="McLay K."/>
            <person name="Muzny D."/>
            <person name="Platzer M."/>
            <person name="Howell G.R."/>
            <person name="Burrows C."/>
            <person name="Bird C.P."/>
            <person name="Frankish A."/>
            <person name="Lovell F.L."/>
            <person name="Howe K.L."/>
            <person name="Ashurst J.L."/>
            <person name="Fulton R.S."/>
            <person name="Sudbrak R."/>
            <person name="Wen G."/>
            <person name="Jones M.C."/>
            <person name="Hurles M.E."/>
            <person name="Andrews T.D."/>
            <person name="Scott C.E."/>
            <person name="Searle S."/>
            <person name="Ramser J."/>
            <person name="Whittaker A."/>
            <person name="Deadman R."/>
            <person name="Carter N.P."/>
            <person name="Hunt S.E."/>
            <person name="Chen R."/>
            <person name="Cree A."/>
            <person name="Gunaratne P."/>
            <person name="Havlak P."/>
            <person name="Hodgson A."/>
            <person name="Metzker M.L."/>
            <person name="Richards S."/>
            <person name="Scott G."/>
            <person name="Steffen D."/>
            <person name="Sodergren E."/>
            <person name="Wheeler D.A."/>
            <person name="Worley K.C."/>
            <person name="Ainscough R."/>
            <person name="Ambrose K.D."/>
            <person name="Ansari-Lari M.A."/>
            <person name="Aradhya S."/>
            <person name="Ashwell R.I."/>
            <person name="Babbage A.K."/>
            <person name="Bagguley C.L."/>
            <person name="Ballabio A."/>
            <person name="Banerjee R."/>
            <person name="Barker G.E."/>
            <person name="Barlow K.F."/>
            <person name="Barrett I.P."/>
            <person name="Bates K.N."/>
            <person name="Beare D.M."/>
            <person name="Beasley H."/>
            <person name="Beasley O."/>
            <person name="Beck A."/>
            <person name="Bethel G."/>
            <person name="Blechschmidt K."/>
            <person name="Brady N."/>
            <person name="Bray-Allen S."/>
            <person name="Bridgeman A.M."/>
            <person name="Brown A.J."/>
            <person name="Brown M.J."/>
            <person name="Bonnin D."/>
            <person name="Bruford E.A."/>
            <person name="Buhay C."/>
            <person name="Burch P."/>
            <person name="Burford D."/>
            <person name="Burgess J."/>
            <person name="Burrill W."/>
            <person name="Burton J."/>
            <person name="Bye J.M."/>
            <person name="Carder C."/>
            <person name="Carrel L."/>
            <person name="Chako J."/>
            <person name="Chapman J.C."/>
            <person name="Chavez D."/>
            <person name="Chen E."/>
            <person name="Chen G."/>
            <person name="Chen Y."/>
            <person name="Chen Z."/>
            <person name="Chinault C."/>
            <person name="Ciccodicola A."/>
            <person name="Clark S.Y."/>
            <person name="Clarke G."/>
            <person name="Clee C.M."/>
            <person name="Clegg S."/>
            <person name="Clerc-Blankenburg K."/>
            <person name="Clifford K."/>
            <person name="Cobley V."/>
            <person name="Cole C.G."/>
            <person name="Conquer J.S."/>
            <person name="Corby N."/>
            <person name="Connor R.E."/>
            <person name="David R."/>
            <person name="Davies J."/>
            <person name="Davis C."/>
            <person name="Davis J."/>
            <person name="Delgado O."/>
            <person name="Deshazo D."/>
            <person name="Dhami P."/>
            <person name="Ding Y."/>
            <person name="Dinh H."/>
            <person name="Dodsworth S."/>
            <person name="Draper H."/>
            <person name="Dugan-Rocha S."/>
            <person name="Dunham A."/>
            <person name="Dunn M."/>
            <person name="Durbin K.J."/>
            <person name="Dutta I."/>
            <person name="Eades T."/>
            <person name="Ellwood M."/>
            <person name="Emery-Cohen A."/>
            <person name="Errington H."/>
            <person name="Evans K.L."/>
            <person name="Faulkner L."/>
            <person name="Francis F."/>
            <person name="Frankland J."/>
            <person name="Fraser A.E."/>
            <person name="Galgoczy P."/>
            <person name="Gilbert J."/>
            <person name="Gill R."/>
            <person name="Gloeckner G."/>
            <person name="Gregory S.G."/>
            <person name="Gribble S."/>
            <person name="Griffiths C."/>
            <person name="Grocock R."/>
            <person name="Gu Y."/>
            <person name="Gwilliam R."/>
            <person name="Hamilton C."/>
            <person name="Hart E.A."/>
            <person name="Hawes A."/>
            <person name="Heath P.D."/>
            <person name="Heitmann K."/>
            <person name="Hennig S."/>
            <person name="Hernandez J."/>
            <person name="Hinzmann B."/>
            <person name="Ho S."/>
            <person name="Hoffs M."/>
            <person name="Howden P.J."/>
            <person name="Huckle E.J."/>
            <person name="Hume J."/>
            <person name="Hunt P.J."/>
            <person name="Hunt A.R."/>
            <person name="Isherwood J."/>
            <person name="Jacob L."/>
            <person name="Johnson D."/>
            <person name="Jones S."/>
            <person name="de Jong P.J."/>
            <person name="Joseph S.S."/>
            <person name="Keenan S."/>
            <person name="Kelly S."/>
            <person name="Kershaw J.K."/>
            <person name="Khan Z."/>
            <person name="Kioschis P."/>
            <person name="Klages S."/>
            <person name="Knights A.J."/>
            <person name="Kosiura A."/>
            <person name="Kovar-Smith C."/>
            <person name="Laird G.K."/>
            <person name="Langford C."/>
            <person name="Lawlor S."/>
            <person name="Leversha M."/>
            <person name="Lewis L."/>
            <person name="Liu W."/>
            <person name="Lloyd C."/>
            <person name="Lloyd D.M."/>
            <person name="Loulseged H."/>
            <person name="Loveland J.E."/>
            <person name="Lovell J.D."/>
            <person name="Lozado R."/>
            <person name="Lu J."/>
            <person name="Lyne R."/>
            <person name="Ma J."/>
            <person name="Maheshwari M."/>
            <person name="Matthews L.H."/>
            <person name="McDowall J."/>
            <person name="McLaren S."/>
            <person name="McMurray A."/>
            <person name="Meidl P."/>
            <person name="Meitinger T."/>
            <person name="Milne S."/>
            <person name="Miner G."/>
            <person name="Mistry S.L."/>
            <person name="Morgan M."/>
            <person name="Morris S."/>
            <person name="Mueller I."/>
            <person name="Mullikin J.C."/>
            <person name="Nguyen N."/>
            <person name="Nordsiek G."/>
            <person name="Nyakatura G."/>
            <person name="O'dell C.N."/>
            <person name="Okwuonu G."/>
            <person name="Palmer S."/>
            <person name="Pandian R."/>
            <person name="Parker D."/>
            <person name="Parrish J."/>
            <person name="Pasternak S."/>
            <person name="Patel D."/>
            <person name="Pearce A.V."/>
            <person name="Pearson D.M."/>
            <person name="Pelan S.E."/>
            <person name="Perez L."/>
            <person name="Porter K.M."/>
            <person name="Ramsey Y."/>
            <person name="Reichwald K."/>
            <person name="Rhodes S."/>
            <person name="Ridler K.A."/>
            <person name="Schlessinger D."/>
            <person name="Schueler M.G."/>
            <person name="Sehra H.K."/>
            <person name="Shaw-Smith C."/>
            <person name="Shen H."/>
            <person name="Sheridan E.M."/>
            <person name="Shownkeen R."/>
            <person name="Skuce C.D."/>
            <person name="Smith M.L."/>
            <person name="Sotheran E.C."/>
            <person name="Steingruber H.E."/>
            <person name="Steward C.A."/>
            <person name="Storey R."/>
            <person name="Swann R.M."/>
            <person name="Swarbreck D."/>
            <person name="Tabor P.E."/>
            <person name="Taudien S."/>
            <person name="Taylor T."/>
            <person name="Teague B."/>
            <person name="Thomas K."/>
            <person name="Thorpe A."/>
            <person name="Timms K."/>
            <person name="Tracey A."/>
            <person name="Trevanion S."/>
            <person name="Tromans A.C."/>
            <person name="d'Urso M."/>
            <person name="Verduzco D."/>
            <person name="Villasana D."/>
            <person name="Waldron L."/>
            <person name="Wall M."/>
            <person name="Wang Q."/>
            <person name="Warren J."/>
            <person name="Warry G.L."/>
            <person name="Wei X."/>
            <person name="West A."/>
            <person name="Whitehead S.L."/>
            <person name="Whiteley M.N."/>
            <person name="Wilkinson J.E."/>
            <person name="Willey D.L."/>
            <person name="Williams G."/>
            <person name="Williams L."/>
            <person name="Williamson A."/>
            <person name="Williamson H."/>
            <person name="Wilming L."/>
            <person name="Woodmansey R.L."/>
            <person name="Wray P.W."/>
            <person name="Yen J."/>
            <person name="Zhang J."/>
            <person name="Zhou J."/>
            <person name="Zoghbi H."/>
            <person name="Zorilla S."/>
            <person name="Buck D."/>
            <person name="Reinhardt R."/>
            <person name="Poustka A."/>
            <person name="Rosenthal A."/>
            <person name="Lehrach H."/>
            <person name="Meindl A."/>
            <person name="Minx P.J."/>
            <person name="Hillier L.W."/>
            <person name="Willard H.F."/>
            <person name="Wilson R.K."/>
            <person name="Waterston R.H."/>
            <person name="Rice C.M."/>
            <person name="Vaudin M."/>
            <person name="Coulson A."/>
            <person name="Nelson D.L."/>
            <person name="Weinstock G."/>
            <person name="Sulston J.E."/>
            <person name="Durbin R.M."/>
            <person name="Hubbard T."/>
            <person name="Gibbs R.A."/>
            <person name="Beck S."/>
            <person name="Rogers J."/>
            <person name="Bentley D.R."/>
        </authorList>
    </citation>
    <scope>NUCLEOTIDE SEQUENCE [LARGE SCALE GENOMIC DNA]</scope>
</reference>
<reference key="9">
    <citation type="journal article" date="2004" name="Genome Res.">
        <title>The status, quality, and expansion of the NIH full-length cDNA project: the Mammalian Gene Collection (MGC).</title>
        <authorList>
            <consortium name="The MGC Project Team"/>
        </authorList>
    </citation>
    <scope>NUCLEOTIDE SEQUENCE [LARGE SCALE MRNA] (ISOFORM BTK-A)</scope>
</reference>
<reference key="10">
    <citation type="journal article" date="1993" name="Cell">
        <title>Deficient expression of a B cell cytoplasmic tyrosine kinase in human X-linked agammaglobulinemia.</title>
        <authorList>
            <person name="Tsukada S."/>
            <person name="Saffran D.C."/>
            <person name="Rawlings D.J."/>
            <person name="Parolini O."/>
            <person name="Allen R.C."/>
            <person name="Klisak I."/>
            <person name="Sparkes R.S."/>
            <person name="Kubagawa H."/>
            <person name="Mohandas T."/>
            <person name="Quan S."/>
            <person name="Belmont J.W."/>
            <person name="Cooper M.D."/>
            <person name="Conley M.E."/>
            <person name="Witte O.N."/>
        </authorList>
    </citation>
    <scope>NUCLEOTIDE SEQUENCE OF 1-442</scope>
</reference>
<reference key="11">
    <citation type="submission" date="2005-11" db="UniProtKB">
        <authorList>
            <person name="Bienvenut W.V."/>
            <person name="Claeys D."/>
        </authorList>
    </citation>
    <scope>PROTEIN SEQUENCE OF 2-12 AND 323-332</scope>
    <scope>CLEAVAGE OF INITIATOR METHIONINE</scope>
    <scope>ACETYLATION AT ALA-2</scope>
    <scope>IDENTIFICATION BY MASS SPECTROMETRY</scope>
    <source>
        <tissue>Platelet</tissue>
    </source>
</reference>
<reference key="12">
    <citation type="journal article" date="2003" name="Biochim. Biophys. Acta">
        <title>Identification of phosphorylation sites within the SH3 domains of Tec family tyrosine kinases.</title>
        <authorList>
            <person name="Nore B.F."/>
            <person name="Mattsson P.T."/>
            <person name="Antonsson P."/>
            <person name="Backesjo C.-M."/>
            <person name="Westlund A."/>
            <person name="Lennartsson J."/>
            <person name="Hansson H."/>
            <person name="Low P."/>
            <person name="Ronnstrand L."/>
            <person name="Smith C.I.E."/>
        </authorList>
    </citation>
    <scope>PROTEIN SEQUENCE OF 219-235</scope>
    <scope>PHOSPHORYLATION AT TYR-223</scope>
</reference>
<reference key="13">
    <citation type="journal article" date="1994" name="FEBS Lett.">
        <title>An exon-skipping mutation in the btk gene of a patient with X-linked agammaglobulinemia and isolated growth hormone deficiency.</title>
        <authorList>
            <person name="Duriez B."/>
            <person name="Duquesnoy P."/>
            <person name="Dastot F."/>
            <person name="Bougneres P."/>
            <person name="Amselem S."/>
            <person name="Goossens M."/>
        </authorList>
    </citation>
    <scope>INVOLVEMENT IN IGHD3</scope>
</reference>
<reference key="14">
    <citation type="journal article" date="1994" name="FEBS Lett.">
        <title>Tec homology (TH) adjacent to the PH domain.</title>
        <authorList>
            <person name="Vihinen M."/>
            <person name="Nilsson L."/>
            <person name="Smith C.I."/>
        </authorList>
    </citation>
    <scope>DOMAIN PH</scope>
</reference>
<reference key="15">
    <citation type="journal article" date="1996" name="Immunity">
        <title>Regulation of Btk function by a major autophosphorylation site within the SH3 domain.</title>
        <authorList>
            <person name="Park H."/>
            <person name="Wahl M.I."/>
            <person name="Afar D.E."/>
            <person name="Turck C.W."/>
            <person name="Rawlings D.J."/>
            <person name="Tam C."/>
            <person name="Scharenberg A.M."/>
            <person name="Kinet J.P."/>
            <person name="Witte O.N."/>
        </authorList>
    </citation>
    <scope>PHOSPHORYLATION AT TYR-223 AND TYR-551</scope>
    <scope>MUTAGENESIS OF TYR-223</scope>
    <scope>ACTIVITY REGULATION</scope>
</reference>
<reference key="16">
    <citation type="journal article" date="1997" name="Proc. Natl. Acad. Sci. U.S.A.">
        <title>BAP-135, a target for Bruton's tyrosine kinase in response to B cell receptor engagement.</title>
        <authorList>
            <person name="Yang W."/>
            <person name="Desiderio S."/>
        </authorList>
    </citation>
    <scope>FUNCTION IN PHOSPHORYLATION OF GTF2I</scope>
    <scope>PHOSPHORYLATION AT TYR-223 AND TYR-551</scope>
    <scope>MUTAGENESIS OF GLU-41; PRO-189; TYR-223; TRP-251; ARG-307 AND TYR-551</scope>
</reference>
<reference key="17">
    <citation type="journal article" date="1998" name="Biochem. Biophys. Res. Commun.">
        <title>Identification and characterization of a novel SH3-domain binding protein, Sab, which preferentially associates with Bruton's tyrosine kinase (Btk).</title>
        <authorList>
            <person name="Matsushita M."/>
            <person name="Yamadori T."/>
            <person name="Kato S."/>
            <person name="Takemoto Y."/>
            <person name="Inazawa J."/>
            <person name="Baba Y."/>
            <person name="Hashimoto S."/>
            <person name="Sekine S."/>
            <person name="Arai S."/>
            <person name="Kunikata T."/>
            <person name="Kurimoto M."/>
            <person name="Kishimoto T."/>
            <person name="Tsukada S."/>
        </authorList>
    </citation>
    <scope>MUTAGENESIS OF 251-TRP-TRP-252</scope>
    <scope>INTERACTION WITH SH3BP5</scope>
</reference>
<reference key="18">
    <citation type="journal article" date="1999" name="J. Biol. Chem.">
        <title>Phosphatidylinositol 3-kinase-dependent membrane association of the Bruton's tyrosine kinase pleckstrin homology domain visualized in single living cells.</title>
        <authorList>
            <person name="Varnai P."/>
            <person name="Rother K.I."/>
            <person name="Balla T."/>
        </authorList>
    </citation>
    <scope>DOMAIN PH</scope>
    <scope>SUBCELLULAR LOCATION</scope>
</reference>
<reference key="19">
    <citation type="journal article" date="1999" name="Proc. Natl. Acad. Sci. U.S.A.">
        <title>Bruton's tyrosine kinase activity is negatively regulated by Sab, the Btk-SH3 domain-binding protein.</title>
        <authorList>
            <person name="Yamadori T."/>
            <person name="Baba Y."/>
            <person name="Mastushita M."/>
            <person name="Hashimoto S."/>
            <person name="Kurosaki M."/>
            <person name="Kurosaki T."/>
            <person name="Kishimoto T."/>
            <person name="Tsukada S."/>
        </authorList>
    </citation>
    <scope>INTERACTION WITH SH3BP5</scope>
    <scope>ACTIVITY REGULATION</scope>
</reference>
<reference key="20">
    <citation type="journal article" date="2000" name="Eur. J. Immunol.">
        <title>Redistribution of Bruton's tyrosine kinase by activation of phosphatidylinositol 3-kinase and Rho-family GTPases.</title>
        <authorList>
            <person name="Nore B.F."/>
            <person name="Vargas L."/>
            <person name="Mohamed A.J."/>
            <person name="Branden L.J."/>
            <person name="Backesjo C.M."/>
            <person name="Islam T.C."/>
            <person name="Mattsson P.T."/>
            <person name="Hultenby K."/>
            <person name="Christensson B."/>
            <person name="Smith C.I."/>
        </authorList>
    </citation>
    <scope>SUBCELLULAR LOCATION</scope>
</reference>
<reference key="21">
    <citation type="journal article" date="2000" name="J. Biol. Chem.">
        <title>Nucleocytoplasmic shuttling of Bruton's tyrosine kinase.</title>
        <authorList>
            <person name="Mohamed A.J."/>
            <person name="Vargas L."/>
            <person name="Nore B.F."/>
            <person name="Backesjo C.M."/>
            <person name="Christensson B."/>
            <person name="Smith C.I."/>
        </authorList>
    </citation>
    <scope>SUBCELLULAR LOCATION</scope>
</reference>
<reference key="22">
    <citation type="journal article" date="2001" name="EMBO J.">
        <title>PKCbeta modulates antigen receptor signaling via regulation of Btk membrane localization.</title>
        <authorList>
            <person name="Kang S.W."/>
            <person name="Wahl M.I."/>
            <person name="Chu J."/>
            <person name="Kitaura J."/>
            <person name="Kawakami Y."/>
            <person name="Kato R.M."/>
            <person name="Tabuchi R."/>
            <person name="Tarakhovsky A."/>
            <person name="Kawakami T."/>
            <person name="Turck C.W."/>
            <person name="Witte O.N."/>
            <person name="Rawlings D.J."/>
        </authorList>
    </citation>
    <scope>PHOSPHORYLATION AT SER-180</scope>
    <scope>ACTIVITY REGULATION</scope>
</reference>
<reference key="23">
    <citation type="journal article" date="2001" name="J. Biol. Chem.">
        <title>Tyrosine residues in phospholipase Cgamma 2 essential for the enzyme function in B-cell signaling.</title>
        <authorList>
            <person name="Rodriguez R."/>
            <person name="Matsuda M."/>
            <person name="Perisic O."/>
            <person name="Bravo J."/>
            <person name="Paul A."/>
            <person name="Jones N.P."/>
            <person name="Light Y."/>
            <person name="Swann K."/>
            <person name="Williams R.L."/>
            <person name="Katan M."/>
        </authorList>
    </citation>
    <scope>FUNCTION IN PHOSPHORYLATION OF PLCG2</scope>
    <scope>CATALYTIC ACTIVITY</scope>
</reference>
<reference key="24">
    <citation type="journal article" date="2001" name="Nat. Immunol.">
        <title>Direct inhibition of Bruton's tyrosine kinase by IBtk, a Btk-binding protein.</title>
        <authorList>
            <person name="Liu W."/>
            <person name="Quinto I."/>
            <person name="Chen X."/>
            <person name="Palmieri C."/>
            <person name="Rabin R.L."/>
            <person name="Schwartz O.M."/>
            <person name="Nelson D.L."/>
            <person name="Scala G."/>
        </authorList>
    </citation>
    <scope>INTERACTION WITH IBTK</scope>
    <scope>ACTIVITY REGULATION</scope>
</reference>
<reference key="25">
    <citation type="journal article" date="2002" name="J. Biol. Chem.">
        <title>Functional interaction of caveolin-1 with Bruton's tyrosine kinase and Bmx.</title>
        <authorList>
            <person name="Vargas L."/>
            <person name="Nore B.F."/>
            <person name="Berglof A."/>
            <person name="Heinonen J.E."/>
            <person name="Mattsson P.T."/>
            <person name="Smith C.I."/>
            <person name="Mohamed A.J."/>
        </authorList>
    </citation>
    <scope>DOMAIN</scope>
    <scope>INTERACTION WITH CAV1</scope>
    <scope>SUBCELLULAR LOCATION</scope>
    <scope>ACTIVITY REGULATION</scope>
</reference>
<reference key="26">
    <citation type="journal article" date="2004" name="Proc. Natl. Acad. Sci. U.S.A.">
        <title>A phosphorylation site in Bruton's tyrosine kinase selectively regulates B cell calcium signaling efficiency by altering phospholipase C-gamma activation.</title>
        <authorList>
            <person name="Guo S."/>
            <person name="Ferl G.Z."/>
            <person name="Deora R."/>
            <person name="Riedinger M."/>
            <person name="Yin S."/>
            <person name="Kerwin J.L."/>
            <person name="Loo J.A."/>
            <person name="Witte O.N."/>
        </authorList>
    </citation>
    <scope>PHOSPHORYLATION AT TYR-617 AND SER-623</scope>
    <scope>MUTAGENESIS OF TYR-617</scope>
</reference>
<reference key="27">
    <citation type="journal article" date="2006" name="J. Biol. Chem.">
        <title>Regulation of Bruton tyrosine kinase by the peptidylprolyl isomerase Pin1.</title>
        <authorList>
            <person name="Yu L."/>
            <person name="Mohamed A.J."/>
            <person name="Vargas L."/>
            <person name="Berglof A."/>
            <person name="Finn G."/>
            <person name="Lu K.P."/>
            <person name="Smith C.I."/>
        </authorList>
    </citation>
    <scope>INTERACTION WITH PIN1</scope>
    <scope>PHOSPHORYLATION AT SER-21 AND SER-115</scope>
    <scope>ACTIVITY REGULATION</scope>
</reference>
<reference key="28">
    <citation type="journal article" date="2006" name="J. Immunol.">
        <title>Bruton's tyrosine kinase is required for TLR2 and TLR4-induced TNF, but not IL-6, production.</title>
        <authorList>
            <person name="Horwood N.J."/>
            <person name="Page T.H."/>
            <person name="McDaid J.P."/>
            <person name="Palmer C.D."/>
            <person name="Campbell J."/>
            <person name="Mahon T."/>
            <person name="Brennan F.M."/>
            <person name="Webster D."/>
            <person name="Foxwell B.M."/>
        </authorList>
    </citation>
    <scope>FUNCTION IN THE TLR PATHWAY</scope>
</reference>
<reference key="29">
    <citation type="journal article" date="2006" name="Mol. Cell. Biol.">
        <title>Induction of immunoglobulin heavy-chain transcription through the transcription factor Bright requires TFII-I.</title>
        <authorList>
            <person name="Rajaiya J."/>
            <person name="Nixon J.C."/>
            <person name="Ayers N."/>
            <person name="Desgranges Z.P."/>
            <person name="Roy A.L."/>
            <person name="Webb C.F."/>
        </authorList>
    </citation>
    <scope>INTERACTION WITH GTF2I AND ARID3A</scope>
    <scope>FUNCTION</scope>
</reference>
<reference key="30">
    <citation type="journal article" date="2006" name="Nat. Immunol.">
        <title>Suppressor of cytokine signaling 1 negatively regulates Toll-like receptor signaling by mediating Mal degradation.</title>
        <authorList>
            <person name="Mansell A."/>
            <person name="Smith R."/>
            <person name="Doyle S.L."/>
            <person name="Gray P."/>
            <person name="Fenner J.E."/>
            <person name="Crack P.J."/>
            <person name="Nicholson S.E."/>
            <person name="Hilton D.J."/>
            <person name="O'Neill L.A."/>
            <person name="Hertzog P.J."/>
        </authorList>
    </citation>
    <scope>FUNCTION IN PHOSPHORYLATION OF TIRAP</scope>
    <scope>ACTIVITY REGULATION</scope>
</reference>
<reference key="31">
    <citation type="journal article" date="2007" name="J. Biol. Chem.">
        <title>Signaling by Toll-like receptors 8 and 9 requires Bruton's tyrosine kinase.</title>
        <authorList>
            <person name="Doyle S.L."/>
            <person name="Jefferies C.A."/>
            <person name="Feighery C."/>
            <person name="O'Neill L.A."/>
        </authorList>
    </citation>
    <scope>FUNCTION</scope>
    <scope>INTERACTION WITH TLR8 AND TLR9</scope>
    <scope>ACTIVITY REGULATION</scope>
    <scope>PHOSPHORYLATION AT TYR-223</scope>
</reference>
<reference key="32">
    <citation type="journal article" date="2009" name="BMC Immunol.">
        <title>Identification of SH3 domain interaction partners of human FasL (CD178) by phage display screening.</title>
        <authorList>
            <person name="Voss M."/>
            <person name="Lettau M."/>
            <person name="Janssen O."/>
        </authorList>
    </citation>
    <scope>INTERACTION WITH FASLG</scope>
</reference>
<reference key="33">
    <citation type="journal article" date="1998" name="Biochem. Pharmacol.">
        <title>Bruton's tyrosine kinase (BTK) as a dual-function regulator of apoptosis.</title>
        <authorList>
            <person name="Uckun F.M."/>
        </authorList>
    </citation>
    <scope>REVIEW ON FUNCTION IN REGULATION OF APOPTOSIS</scope>
</reference>
<reference key="34">
    <citation type="journal article" date="2009" name="Immunol. Rev.">
        <title>Bruton's tyrosine kinase (Btk): function, regulation, and transformation with special emphasis on the PH domain.</title>
        <authorList>
            <person name="Mohamed A.J."/>
            <person name="Yu L."/>
            <person name="Backesjo C.M."/>
            <person name="Vargas L."/>
            <person name="Faryal R."/>
            <person name="Aints A."/>
            <person name="Christensson B."/>
            <person name="Berglof A."/>
            <person name="Vihinen M."/>
            <person name="Nore B.F."/>
            <person name="Smith C.I."/>
        </authorList>
    </citation>
    <scope>REVIEW ON FUNCTION</scope>
    <scope>REVIEW ON ACTIVITY REGULATION</scope>
</reference>
<reference key="35">
    <citation type="journal article" date="2009" name="Mol. Cell. Proteomics">
        <title>Large-scale proteomics analysis of the human kinome.</title>
        <authorList>
            <person name="Oppermann F.S."/>
            <person name="Gnad F."/>
            <person name="Olsen J.V."/>
            <person name="Hornberger R."/>
            <person name="Greff Z."/>
            <person name="Keri G."/>
            <person name="Mann M."/>
            <person name="Daub H."/>
        </authorList>
    </citation>
    <scope>PHOSPHORYLATION [LARGE SCALE ANALYSIS] AT SER-55; THR-191; TYR-361 AND SER-659</scope>
    <scope>IDENTIFICATION BY MASS SPECTROMETRY [LARGE SCALE ANALYSIS]</scope>
</reference>
<reference key="36">
    <citation type="journal article" date="2011" name="BMC Syst. Biol.">
        <title>Initial characterization of the human central proteome.</title>
        <authorList>
            <person name="Burkard T.R."/>
            <person name="Planyavsky M."/>
            <person name="Kaupe I."/>
            <person name="Breitwieser F.P."/>
            <person name="Buerckstuemmer T."/>
            <person name="Bennett K.L."/>
            <person name="Superti-Furga G."/>
            <person name="Colinge J."/>
        </authorList>
    </citation>
    <scope>IDENTIFICATION BY MASS SPECTROMETRY [LARGE SCALE ANALYSIS]</scope>
</reference>
<reference key="37">
    <citation type="journal article" date="2013" name="Genes Chromosomes Cancer">
        <title>A novel isoform of the B cell tyrosine kinase BTK protects breast cancer cells from apoptosis.</title>
        <authorList>
            <person name="Eifert C."/>
            <person name="Wang X."/>
            <person name="Kokabee L."/>
            <person name="Kourtidis A."/>
            <person name="Jain R."/>
            <person name="Gerdes M.J."/>
            <person name="Conklin D.S."/>
        </authorList>
    </citation>
    <scope>ALTERNATIVE PROMOTER USAGE (ISOFORM BTK-C)</scope>
</reference>
<reference key="38">
    <citation type="journal article" date="2013" name="J. Proteome Res.">
        <title>Toward a comprehensive characterization of a human cancer cell phosphoproteome.</title>
        <authorList>
            <person name="Zhou H."/>
            <person name="Di Palma S."/>
            <person name="Preisinger C."/>
            <person name="Peng M."/>
            <person name="Polat A.N."/>
            <person name="Heck A.J."/>
            <person name="Mohammed S."/>
        </authorList>
    </citation>
    <scope>PHOSPHORYLATION [LARGE SCALE ANALYSIS] AT THR-191; TYR-223 AND SER-604</scope>
    <scope>IDENTIFICATION BY MASS SPECTROMETRY [LARGE SCALE ANALYSIS]</scope>
    <source>
        <tissue>Erythroleukemia</tissue>
    </source>
</reference>
<reference key="39">
    <citation type="journal article" date="2014" name="Exp. Hematol.">
        <title>Phosphorylated c-Mpl tyrosine 591 regulates thrombopoietin-induced signaling.</title>
        <authorList>
            <person name="Sangkhae V."/>
            <person name="Saur S.J."/>
            <person name="Kaushansky A."/>
            <person name="Kaushansky K."/>
            <person name="Hitchcock I.S."/>
        </authorList>
    </citation>
    <scope>INTERACTION WITH MPL/TPOR</scope>
</reference>
<reference key="40">
    <citation type="journal article" date="2015" name="Proteomics">
        <title>N-terminome analysis of the human mitochondrial proteome.</title>
        <authorList>
            <person name="Vaca Jacome A.S."/>
            <person name="Rabilloud T."/>
            <person name="Schaeffer-Reiss C."/>
            <person name="Rompais M."/>
            <person name="Ayoub D."/>
            <person name="Lane L."/>
            <person name="Bairoch A."/>
            <person name="Van Dorsselaer A."/>
            <person name="Carapito C."/>
        </authorList>
    </citation>
    <scope>ACETYLATION [LARGE SCALE ANALYSIS] AT ALA-2</scope>
    <scope>CLEAVAGE OF INITIATOR METHIONINE [LARGE SCALE ANALYSIS]</scope>
    <scope>IDENTIFICATION BY MASS SPECTROMETRY [LARGE SCALE ANALYSIS]</scope>
</reference>
<reference key="41">
    <citation type="journal article" date="2015" name="Cell Rep.">
        <title>Bruton's tyrosine kinase phosphorylates DDX41 and activates its binding of dsDNA and STING to initiate type 1 interferon response.</title>
        <authorList>
            <person name="Lee K.G."/>
            <person name="Kim S.S."/>
            <person name="Kui L."/>
            <person name="Voon D.C."/>
            <person name="Mauduit M."/>
            <person name="Bist P."/>
            <person name="Bi X."/>
            <person name="Pereira N.A."/>
            <person name="Liu C."/>
            <person name="Sukumaran B."/>
            <person name="Renia L."/>
            <person name="Ito Y."/>
            <person name="Lam K.P."/>
        </authorList>
    </citation>
    <scope>FUNCTION</scope>
    <scope>SUBCELLULAR LOCATION</scope>
    <scope>CHARACTERIZATION OF VARIANT XLA ARG-430</scope>
</reference>
<reference key="42">
    <citation type="journal article" date="2021" name="J. Exp. Med.">
        <title>BTK operates a phospho-tyrosine switch to regulate NLRP3 inflammasome activity.</title>
        <authorList>
            <person name="Bittner Z.A."/>
            <person name="Liu X."/>
            <person name="Mateo Tortola M."/>
            <person name="Tapia-Abellan A."/>
            <person name="Shankar S."/>
            <person name="Andreeva L."/>
            <person name="Mangan M."/>
            <person name="Spalinger M."/>
            <person name="Kalbacher H."/>
            <person name="Duewell P."/>
            <person name="Lovotti M."/>
            <person name="Bosch K."/>
            <person name="Dickhoefer S."/>
            <person name="Marcu A."/>
            <person name="Stevanovic S."/>
            <person name="Herster F."/>
            <person name="Cardona Gloria Y."/>
            <person name="Chang T.H."/>
            <person name="Bork F."/>
            <person name="Greve C.L."/>
            <person name="Loeffler M.W."/>
            <person name="Wolz O.O."/>
            <person name="Schilling N.A."/>
            <person name="Kuemmerle-Deschner J.B."/>
            <person name="Wagner S."/>
            <person name="Delor A."/>
            <person name="Grimbacher B."/>
            <person name="Hantschel O."/>
            <person name="Scharl M."/>
            <person name="Wu H."/>
            <person name="Latz E."/>
            <person name="Weber A.N.R."/>
        </authorList>
    </citation>
    <scope>FUNCTION</scope>
    <scope>CATALYTIC ACTIVITY</scope>
</reference>
<reference key="43">
    <citation type="journal article" date="1997" name="EMBO J.">
        <title>Structure of the PH domain and Btk motif from Bruton's tyrosine kinase: molecular explanations for X-linked agammaglobulinaemia.</title>
        <authorList>
            <person name="Hyvoenen M."/>
            <person name="Saraste M."/>
        </authorList>
    </citation>
    <scope>X-RAY CRYSTALLOGRAPHY (1.6 ANGSTROMS) OF 2-170 IN COMPLEX WITH ZINC</scope>
    <scope>COFACTOR</scope>
</reference>
<reference key="44">
    <citation type="journal article" date="1998" name="Biochemistry">
        <title>Solution structure of the SH3 domain from Bruton's tyrosine kinase.</title>
        <authorList>
            <person name="Hansson H."/>
            <person name="Mattsson P.T."/>
            <person name="Allard P."/>
            <person name="Haapaniemi P."/>
            <person name="Vihinen M."/>
            <person name="Smith C.I.E."/>
            <person name="Haerd T."/>
        </authorList>
    </citation>
    <scope>STRUCTURE BY NMR OF 212-275</scope>
</reference>
<reference key="45">
    <citation type="journal article" date="1999" name="Structure">
        <title>Structure of the PH domain from Bruton's tyrosine kinase in complex with inositol 1,3,4,5-tetrakisphosphate.</title>
        <authorList>
            <person name="Baraldi E."/>
            <person name="Carugo K.D."/>
            <person name="Hyvoenen M."/>
            <person name="Surdo P.L."/>
            <person name="Riley A.M."/>
            <person name="Potter B.V.L."/>
            <person name="O'Brien R."/>
            <person name="Ladbury J.E."/>
            <person name="Saraste M."/>
        </authorList>
    </citation>
    <scope>X-RAY CRYSTALLOGRAPHY (2.1 ANGSTROMS) OF 1-170 IN COMPLEX WITH INOSITOL-(1,3,4,5)-TETRAKISPHOSPHATE AND ZINC</scope>
    <scope>DOMAIN PH</scope>
    <scope>COFACTOR</scope>
</reference>
<reference key="46">
    <citation type="journal article" date="2000" name="J. Biomol. NMR">
        <title>Solution structure of the human BTK SH3 domain complexed with a proline-rich peptide from p120cbl.</title>
        <authorList>
            <person name="Tzeng S.R."/>
            <person name="Lou Y.C."/>
            <person name="Pai M.T."/>
            <person name="Jain M.L."/>
            <person name="Cheng J.W."/>
        </authorList>
    </citation>
    <scope>STRUCTURE BY NMR OF 216-273</scope>
</reference>
<reference key="47">
    <citation type="journal article" date="2001" name="J. Biol. Chem.">
        <title>Crystal structure of Bruton's tyrosine kinase domain suggests a novel pathway for activation and provides insights into the molecular basis of X-linked agammaglobulinemia.</title>
        <authorList>
            <person name="Mao C."/>
            <person name="Zhou M."/>
            <person name="Uckun F.M."/>
        </authorList>
    </citation>
    <scope>X-RAY CRYSTALLOGRAPHY (2.1 ANGSTROMS) OF 397-659</scope>
</reference>
<reference key="48">
    <citation type="journal article" date="2006" name="J. Biomol. NMR">
        <title>Solution structure and phosphopeptide binding of the SH2 domain from the human Bruton's tyrosine kinase.</title>
        <authorList>
            <person name="Huang K.C."/>
            <person name="Cheng H.T."/>
            <person name="Pai M.T."/>
            <person name="Tzeng S.R."/>
            <person name="Cheng J.W."/>
        </authorList>
    </citation>
    <scope>STRUCTURE BY NMR OF 270-386</scope>
</reference>
<reference evidence="83 84" key="49">
    <citation type="submission" date="2010-08" db="PDB data bank">
        <title>A novel, specific Btk inhibitor antagonizes BCR and Fc[gamma]R signaling and suppresses inflammatory arthritis.</title>
        <authorList>
            <person name="Di Paolo J.A."/>
            <person name="Huang T."/>
            <person name="Balazs M."/>
            <person name="Barbosa J."/>
            <person name="Barck K.H."/>
            <person name="Carano R.A.D."/>
            <person name="Darrow J."/>
            <person name="Davies D.R."/>
            <person name="DeForge L.E."/>
            <person name="Dennis G. Jr."/>
            <person name="Diehl L."/>
            <person name="Ferrando R."/>
        </authorList>
    </citation>
    <scope>X-RAY CRYSTALLOGRAPHY (1.80 ANGSTROMS) OF 393-656 IN COMPLEX WITH INHIBITOR</scope>
</reference>
<reference evidence="80" key="50">
    <citation type="submission" date="2007-05" db="PDB data bank">
        <title>Crystal structure of PH domain of Bruton's tyrosine kinase.</title>
        <authorList>
            <person name="Murayama K."/>
            <person name="Kato-Murayama M."/>
            <person name="Mishima C."/>
            <person name="Shirouzu M."/>
            <person name="Yokoyama S."/>
        </authorList>
    </citation>
    <scope>X-RAY CRYSTALLOGRAPHY (2.58 ANGSTROMS) OF 2-170 IN COMPLEX WITH INHIBITOR AND ZINC</scope>
    <scope>COFACTOR</scope>
</reference>
<reference evidence="81 82" key="51">
    <citation type="journal article" date="2010" name="Protein Sci.">
        <title>Structures of human Bruton's tyrosine kinase in active and inactive conformations suggest a mechanism of activation for TEC family kinases.</title>
        <authorList>
            <person name="Marcotte D.J."/>
            <person name="Liu Y.T."/>
            <person name="Arduini R.M."/>
            <person name="Hession C.A."/>
            <person name="Miatkowski K."/>
            <person name="Wildes C.P."/>
            <person name="Cullen P.F."/>
            <person name="Hong V."/>
            <person name="Hopkins B.T."/>
            <person name="Mertsching E."/>
            <person name="Jenkins T.J."/>
            <person name="Romanowski M.J."/>
            <person name="Baker D.P."/>
            <person name="Silvian L.F."/>
        </authorList>
    </citation>
    <scope>X-RAY CRYSTALLOGRAPHY (1.6 ANGSTROMS) OF 382-659 IN COMPLEX WITH INHIBITOR DASATINIB</scope>
</reference>
<reference key="52">
    <citation type="submission" date="2010-09" db="PDB data bank">
        <title>A novel, specific BTK inhibitor antagonizes BCR and FcgR signaling and suppresses inflammatory arthritis.</title>
        <authorList>
            <person name="Di Paolo J."/>
            <person name="Huang T."/>
            <person name="Balazs M."/>
            <person name="Barbosa J."/>
            <person name="Barck K.H."/>
            <person name="Bravo B."/>
            <person name="Carano R.A.D."/>
            <person name="Darrow J."/>
            <person name="Davies D.R."/>
            <person name="DeForge L.E."/>
            <person name="Diehl L."/>
            <person name="Ferrando R."/>
            <person name="Gallion S.L."/>
            <person name="Gianetti A.M."/>
            <person name="Gribling P."/>
            <person name="Hurez V."/>
            <person name="Hymowitz S.G."/>
            <person name="Jones R."/>
            <person name="Kropf J.E."/>
            <person name="Lee W.P."/>
            <person name="Maciejewski P.M."/>
            <person name="Mitchell S.A."/>
            <person name="Rong H."/>
            <person name="Staker B.L."/>
            <person name="Whitney J.A."/>
            <person name="Yeh S."/>
            <person name="Young W."/>
            <person name="Yu C."/>
            <person name="Zhang J."/>
            <person name="Reif K."/>
            <person name="Currie K.S."/>
        </authorList>
    </citation>
    <scope>X-RAY CRYSTALLOGRAPHY (2.30 ANGSTROMS) OF 393-659</scope>
</reference>
<reference evidence="85 86 87 88 89 90" key="53">
    <citation type="journal article" date="2011" name="Protein Sci.">
        <title>Insights into the conformational flexibility of Bruton's tyrosine kinase from multiple ligand complex structures.</title>
        <authorList>
            <person name="Kuglstatter A."/>
            <person name="Wong A."/>
            <person name="Tsing S."/>
            <person name="Lee S.W."/>
            <person name="Lou Y."/>
            <person name="Villasenor A.G."/>
            <person name="Bradshaw J.M."/>
            <person name="Shaw D."/>
            <person name="Barnett J.W."/>
            <person name="Browner M.F."/>
        </authorList>
    </citation>
    <scope>X-RAY CRYSTALLOGRAPHY (1.85 ANGSTROMS) OF 387-659 IN COMPLEX WITH INHIBITOR</scope>
</reference>
<reference key="54">
    <citation type="journal article" date="1996" name="Nucleic Acids Res.">
        <title>BTKbase, mutation database for X-linked agammaglobulinemia (XLA).</title>
        <authorList>
            <person name="Vihinen M."/>
            <person name="Iwata T."/>
            <person name="Kinnon C."/>
            <person name="Kwan S.-P."/>
            <person name="Ochs H.D."/>
            <person name="Vorechovsky I."/>
            <person name="Smith C.I.E."/>
        </authorList>
    </citation>
    <scope>REVIEW ON VARIANTS XLA</scope>
</reference>
<reference key="55">
    <citation type="journal article" date="1997" name="Nucleic Acids Res.">
        <title>BTKbase, mutation database for X-linked agammaglobulinemia (XLA).</title>
        <authorList>
            <person name="Vihinen M."/>
            <person name="Belohradsky B.H."/>
            <person name="Haire R.N."/>
            <person name="Holinski-Feder E."/>
            <person name="Kwan S.-P."/>
            <person name="Lappalainen I."/>
            <person name="Lehvaeslaiho H."/>
            <person name="Lester T."/>
            <person name="Meindl A."/>
            <person name="Ochs H.D."/>
            <person name="Ollila J."/>
            <person name="Vorechovsky I."/>
            <person name="Weiss M."/>
            <person name="Smith C.I.E."/>
        </authorList>
    </citation>
    <scope>REVIEW ON VARIANTS XLA</scope>
</reference>
<reference key="56">
    <citation type="journal article" date="1994" name="Hum. Mol. Genet.">
        <title>Mutation detection in the X-linked agammaglobulinemia gene, BTK, using single strand conformation polymorphism analysis.</title>
        <authorList>
            <person name="Bradley L.A.D."/>
            <person name="Sweatman A.K."/>
            <person name="Lovering R.C."/>
            <person name="Jones A.M."/>
            <person name="Morgan G."/>
            <person name="Levinsky R.J."/>
            <person name="Kinnon C."/>
        </authorList>
    </citation>
    <scope>VARIANTS XLA TRP-288; GLY-307; ASP-607 AND SER-VAL-PHE-SER-SER-THR-ARG-103 INS</scope>
</reference>
<reference key="57">
    <citation type="journal article" date="1994" name="Hum. Mol. Genet.">
        <title>Mutation analysis of the Bruton's tyrosine kinase gene in X-linked agammaglobulinemia: identification of a mutation which affects the same codon as is altered in immunodeficient xid mice.</title>
        <authorList>
            <person name="de Weers M."/>
            <person name="Mensink R.G.J."/>
            <person name="Kraakman M.E.M."/>
            <person name="Schuurman R.K.B."/>
            <person name="Hendriks R.W."/>
        </authorList>
    </citation>
    <scope>VARIANTS XLA HIS-28 AND TRP-288</scope>
</reference>
<reference key="58">
    <citation type="journal article" date="1994" name="Hum. Mol. Genet.">
        <title>Screening of genomic DNA to identify mutations in the gene for Bruton's tyrosine kinase.</title>
        <authorList>
            <person name="Conley M.E."/>
            <person name="Fitch-Hilgenberg M.E."/>
            <person name="Cleveland J.L."/>
            <person name="Parolini O."/>
            <person name="Rohrer J."/>
        </authorList>
    </citation>
    <scope>VARIANTS XLA ASP-113; CYS-361; GLN-520; PRO-542; TRP-562; ARG-581; LYS-630 AND PRO-652</scope>
</reference>
<reference key="59">
    <citation type="journal article" date="1994" name="Hum. Mol. Genet.">
        <title>Unique mutations of Bruton's tyrosine kinase in fourteen unrelated X-linked agammaglobulinemia families.</title>
        <authorList>
            <person name="Zhu Q."/>
            <person name="Zhang M."/>
            <person name="Winkelstein J."/>
            <person name="Chen S.-H."/>
            <person name="Ochs H.D."/>
        </authorList>
    </citation>
    <scope>VARIANTS XLA HIS-28; PRO-33; PRO-408; GLY-589; ASP-613 AND 260-GLN--GLU-280 DEL</scope>
</reference>
<reference key="60">
    <citation type="journal article" date="1994" name="Proc. Natl. Acad. Sci. U.S.A.">
        <title>Structural basis for chromosome X-linked agammaglobulinemia: a tyrosine kinase disease.</title>
        <authorList>
            <person name="Vihinen M."/>
            <person name="Vetrie D."/>
            <person name="Maniar H.S."/>
            <person name="Ochs H.D."/>
            <person name="Zhu Q."/>
            <person name="Vorechovsky I."/>
            <person name="Webster A.D.B."/>
            <person name="Notarangelo L.D."/>
            <person name="Nilsson L."/>
            <person name="Sowadski J.M."/>
            <person name="Smith C.I.E."/>
        </authorList>
    </citation>
    <scope>VARIANTS XLA GLU-430; GLN-520; GLN-525; PRO-562; VAL-582; GLY-589; GLU-594 AND ASP-613</scope>
</reference>
<reference key="61">
    <citation type="journal article" date="1995" name="Biochemistry">
        <title>Structural basis for pleckstrin homology domain mutations in X-linked agammaglobulinemia.</title>
        <authorList>
            <person name="Vihinen M."/>
            <person name="Zvelebil J.J.M."/>
            <person name="Zhu Q."/>
            <person name="Brooimans R.A."/>
            <person name="Ochs H.D."/>
            <person name="Zegers B.J.M."/>
            <person name="Nilsson L."/>
            <person name="Waterfield M.D."/>
            <person name="Smith C.I.E."/>
        </authorList>
    </citation>
    <scope>VARIANT XLA PHE-64</scope>
    <scope>CHARACTERIZATION OF OTHER XLA VARIANTS</scope>
</reference>
<reference key="62">
    <citation type="journal article" date="1995" name="Hum. Mol. Genet.">
        <title>DNA-based mutation analysis of Bruton's tyrosine kinase gene in patients with X-linked agammaglobulinaemia.</title>
        <authorList>
            <person name="Vorechovsky I."/>
            <person name="Vihinen M."/>
            <person name="de Saint Basile G."/>
            <person name="Honsova S."/>
            <person name="Hammarstroem L."/>
            <person name="Mueller S."/>
            <person name="Nilsson L."/>
            <person name="Fischer A."/>
            <person name="Smith C.I.E."/>
        </authorList>
    </citation>
    <scope>VARIANTS XLA SER-25; TRP-288; MET-370; VAL-509; PRO-525; LYS-526; TRP-562; VAL-582 AND ARG-594</scope>
</reference>
<reference key="63">
    <citation type="journal article" date="1995" name="Hum. Mol. Genet.">
        <title>Identification of Btk mutations in 20 unrelated patients with X-linked agammaglobulinaemia (XLA).</title>
        <authorList>
            <person name="Jin H."/>
            <person name="Webster A.D.B."/>
            <person name="Vihinen M."/>
            <person name="Sideras P."/>
            <person name="Vorechovsky I."/>
            <person name="Hammarstroem L."/>
            <person name="Bernatowska-Matuszkiewicz E."/>
            <person name="Smith C.I.E."/>
            <person name="Bobrow M."/>
            <person name="Vetrie D."/>
        </authorList>
    </citation>
    <scope>VARIANTS XLA LYS-567; LEU-587 AND HIS-641</scope>
</reference>
<reference key="64">
    <citation type="journal article" date="1995" name="Hum. Mol. Genet.">
        <title>Mutation analysis in Bruton's tyrosine kinase, the X-linked agammaglobulinaemia gene, including identification of an insertional hotspot.</title>
        <authorList>
            <person name="Gaspar H.B."/>
            <person name="Bradley L.A.D."/>
            <person name="Katz F."/>
            <person name="Lovering R.C."/>
            <person name="Roifman C.M."/>
            <person name="Morgan G."/>
            <person name="Levinsky R.J."/>
            <person name="Kinnon C."/>
        </authorList>
    </citation>
    <scope>VARIANTS XLA PRO-33; GLY-302 DEL; GLN-520 AND CYS-641</scope>
</reference>
<reference key="65">
    <citation type="journal article" date="1995" name="Hum. Mol. Genet.">
        <title>Improved oligonucleotide primer set for molecular diagnosis of X-linked agammaglobulinaemia: predominance of amino acid substitutions in the catalytic domain of Bruton's tyrosine kinase.</title>
        <authorList>
            <person name="Vorechovsky I."/>
            <person name="Luo L."/>
            <person name="de Saint Basile G."/>
            <person name="Hammarstroem L."/>
            <person name="Webster A.D.B."/>
            <person name="Smith C.I.E."/>
        </authorList>
    </citation>
    <scope>VARIANTS XLA ASN-429 AND ARG-477</scope>
</reference>
<reference key="66">
    <citation type="journal article" date="1995" name="Hum. Mutat.">
        <title>Characterization of germline mutations of the gene encoding Bruton's tyrosine kinase in families with X-linked agammaglobulinemia.</title>
        <authorList>
            <person name="Hagemann T.L."/>
            <person name="Rosen F.S."/>
            <person name="Kwan S.-P."/>
        </authorList>
    </citation>
    <scope>VARIANTS XLA GLU-302 AND ASP-476</scope>
</reference>
<reference key="67">
    <citation type="journal article" date="1995" name="J. Med. Genet.">
        <title>A new point mutation involving a highly conserved leucine in the Btk SH2 domain in a family with X linked agammaglobulinaemia.</title>
        <authorList>
            <person name="Ohashi Y."/>
            <person name="Tsuchiya S."/>
            <person name="Konno T."/>
        </authorList>
    </citation>
    <scope>VARIANT XLA PHE-358</scope>
</reference>
<reference key="68">
    <citation type="journal article" date="1996" name="Am. J. Med. Genet.">
        <title>Detection of a novel mutation in the SRC homology domain 2 (SH2) of Bruton's tyrosine kinase and direct female carrier evaluation in a family with X-linked agammaglobulinemia.</title>
        <authorList>
            <person name="Schuster V."/>
            <person name="Seidenspinner S."/>
            <person name="Kreth H.W."/>
        </authorList>
    </citation>
    <scope>VARIANT XLA PRO-295</scope>
</reference>
<reference key="69">
    <citation type="journal article" date="1996" name="Blood">
        <title>Identification of Bruton's tyrosine kinase (Btk) gene mutations and characterization of the derived proteins in 35 X-linked agammaglobulinemia families: a nationwide study of Btk deficiency in Japan.</title>
        <authorList>
            <person name="Hashimoto S."/>
            <person name="Tsukada S."/>
            <person name="Matsushita M."/>
            <person name="Miyawaki T."/>
            <person name="Niida Y."/>
            <person name="Yachie A."/>
            <person name="Kobayashi S."/>
            <person name="Iwata T."/>
            <person name="Hayakawa H."/>
            <person name="Matsuoka H."/>
            <person name="Tsuge I."/>
            <person name="Yamadori T."/>
            <person name="Kunikata T."/>
            <person name="Arai S."/>
            <person name="Yoshizaki K."/>
            <person name="Taniguchi N."/>
            <person name="Kishimoto T."/>
        </authorList>
    </citation>
    <scope>VARIANTS XLA ARG-12; PRO-28; GLU-302; TRP-502; HIS-521; TYR-633 AND SER-644</scope>
</reference>
<reference key="70">
    <citation type="journal article" date="1996" name="Clin. Immunol. Immunopathol.">
        <title>Neutropenia in X-linked agammaglobulinemia.</title>
        <authorList>
            <person name="Farrar J.E."/>
            <person name="Rohrer J."/>
            <person name="Conley M.E."/>
        </authorList>
    </citation>
    <scope>VARIANTS XLA PHE-115 AND ILE-509</scope>
</reference>
<reference key="71">
    <citation type="journal article" date="1996" name="Hum. Genet.">
        <title>Mutations of the Btk gene in 12 unrelated families with X-linked agammaglobulinemia in Japan.</title>
        <authorList>
            <person name="Kobayashi S."/>
            <person name="Iwata T."/>
            <person name="Saito M."/>
            <person name="Iwasaki R."/>
            <person name="Matsumoto H."/>
            <person name="Naritaka S."/>
            <person name="Kono Y."/>
            <person name="Hayashi Y."/>
        </authorList>
    </citation>
    <scope>VARIANTS XLA TRP-288; LYS-544 AND PRO-592</scope>
</reference>
<reference key="72">
    <citation type="journal article" date="1997" name="FEBS Lett.">
        <title>Missense mutations affecting a conserved cysteine pair in the TH domain of Btk.</title>
        <authorList>
            <person name="Vihinen M."/>
            <person name="Nore B."/>
            <person name="Mattsson P.T."/>
            <person name="Backesj C.-M."/>
            <person name="Nars M."/>
            <person name="Koutaniemi S."/>
            <person name="Watanabe C."/>
            <person name="Lester T."/>
            <person name="Jones A.M."/>
            <person name="Ochs H.D."/>
            <person name="Smith C.I.E."/>
        </authorList>
    </citation>
    <scope>VARIANTS XLA SER-154; ARG-155 AND GLY-155</scope>
</reference>
<reference key="73">
    <citation type="journal article" date="1997" name="J. Med. Genet.">
        <title>Identification of novel Bruton's tyrosine kinase mutations in 10 unrelated subjects with X linked agammaglobulinaemia.</title>
        <authorList>
            <person name="Brooimans R.A."/>
            <person name="van den Berg A.J."/>
            <person name="Rijkers G.T."/>
            <person name="Sanders L.A."/>
            <person name="van Amstel J.K."/>
            <person name="Tilanus M.G."/>
            <person name="Grubben M.J."/>
            <person name="Zegers B.J."/>
        </authorList>
    </citation>
    <scope>VARIANTS XLA PRO-11; GLN-362 AND TYR-365</scope>
</reference>
<reference key="74">
    <citation type="journal article" date="1997" name="Mol. Med.">
        <title>Molecular and structural characterization of five novel mutations in the Bruton's tyrosine kinase gene from patients with X-linked agammaglobulinemia.</title>
        <authorList>
            <person name="Saha B.K."/>
            <person name="Curtis S.K."/>
            <person name="Vogler L.B."/>
            <person name="Vihinen M."/>
        </authorList>
    </citation>
    <scope>VARIANTS XLA CYS-40; ASN-40 AND ASP-508</scope>
</reference>
<reference key="75">
    <citation type="journal article" date="1998" name="Am. J. Hum. Genet.">
        <title>Mutations in btk in patients with presumed X-linked agammaglobulinemia.</title>
        <authorList>
            <person name="Conley M.E."/>
            <person name="Mathias D."/>
            <person name="Treadaway J."/>
            <person name="Minegishi Y."/>
            <person name="Rohrer J."/>
        </authorList>
    </citation>
    <scope>VARIANTS XLA CYS-28; GLN-288; THR-307; ARG-430; ASP-445; GLY-525; PHE-535; LEU-563; ASP-589 AND PRO-622</scope>
</reference>
<reference key="76">
    <citation type="journal article" date="1998" name="Pediatrics">
        <title>Mutation screening of the BTK gene in 56 families with X-linked agammaglobulinemia (XLA): 47 unique mutations without correlation to clinical course.</title>
        <authorList>
            <person name="Holinski-Feder E."/>
            <person name="Weiss M."/>
            <person name="Brandau O."/>
            <person name="Jedele K.B."/>
            <person name="Nore B."/>
            <person name="Baeckesjoe C.-M."/>
            <person name="Vihinen M."/>
            <person name="Hubbard S.R."/>
            <person name="Belohradsky B.H."/>
            <person name="Smith C.I.E."/>
            <person name="Meindl A."/>
        </authorList>
    </citation>
    <scope>VARIANTS XLA GLU-19; HIS-28; ASN-61; PRO-117; HIS-127; ARG-155; PRO-295; PHE-369; GLY-372; ARG-414; TYR-506; GLY-521; GLN-525; SER-559; TRP-562; GLU-594; THR-619; GLY-626 AND HIS-641</scope>
</reference>
<reference key="77">
    <citation type="journal article" date="1999" name="Hum. Mutat.">
        <title>Mutations of the human BTK gene coding for Bruton tyrosine kinase in X-linked agammaglobulinemia.</title>
        <authorList>
            <person name="Vihinen M."/>
            <person name="Kwan S.-P."/>
            <person name="Lester T."/>
            <person name="Ochs H.D."/>
            <person name="Resnick I."/>
            <person name="Vaeliaho J."/>
            <person name="Conley M.E."/>
            <person name="Smith C.I.E."/>
        </authorList>
    </citation>
    <scope>VARIANTS XLA</scope>
</reference>
<reference key="78">
    <citation type="journal article" date="2000" name="Am. J. Med. Genet.">
        <title>Twin carriers of X-linked agammaglobulinemia (XLA) due to germline mutation in the Btk gene.</title>
        <authorList>
            <person name="Curtis S.K."/>
            <person name="Hebert M.D."/>
            <person name="Saha B.K."/>
        </authorList>
    </citation>
    <scope>VARIANT XLA PRO-562</scope>
</reference>
<reference key="79">
    <citation type="journal article" date="2000" name="Hum. Mutat.">
        <title>Identification of nine novel mutations in the Bruton's tyrosine kinase gene in X-linked agammaglobulinaemia patients.</title>
        <authorList>
            <person name="Orlandi P."/>
            <person name="Ritis K."/>
            <person name="Moschese V."/>
            <person name="Angelini F."/>
            <person name="Arvanitidis K."/>
            <person name="Speletas M."/>
            <person name="Sideras P."/>
            <person name="Plebani A."/>
            <person name="Rossi P."/>
        </authorList>
    </citation>
    <scope>VARIANTS XLA SER-39; PRO-512; GLN-512; GLY-544; TYR-578 AND LYS-589</scope>
</reference>
<reference key="80">
    <citation type="journal article" date="2001" name="Br. J. Haematol.">
        <title>Bruton's tyrosine kinase is present in normal platelets and its absence identifies patients with X-linked agammaglobulinaemia and carrier females.</title>
        <authorList>
            <person name="Futatani T."/>
            <person name="Watanabe C."/>
            <person name="Baba Y."/>
            <person name="Tsukada S."/>
            <person name="Ochs H.D."/>
        </authorList>
    </citation>
    <scope>VARIANT XLA PRO-647</scope>
</reference>
<reference key="81">
    <citation type="journal article" date="2002" name="Hum. Mutat.">
        <title>Identification of mutations of Bruton's tyrosine kinase gene (BTK) in Brazilian patients with X-linked agammaglobulinemia.</title>
        <authorList>
            <person name="Tani S.M."/>
            <person name="Wang Y."/>
            <person name="Kanegane H."/>
            <person name="Futatani T."/>
            <person name="Pinto J."/>
            <person name="Vilela M.M."/>
            <person name="Miyawaki T."/>
        </authorList>
    </citation>
    <scope>VARIANT XLA PRO-364</scope>
</reference>
<reference key="82">
    <citation type="journal article" date="2003" name="J. Hum. Genet.">
        <title>Identification of mutations in the Bruton's tyrosine kinase gene, including a novel genomic rearrangements resulting in large deletion, in Korean X-linked agammaglobulinemia patients.</title>
        <authorList>
            <person name="Jo E.K."/>
            <person name="Wang Y."/>
            <person name="Kanegane H."/>
            <person name="Futatani T."/>
            <person name="Song C.H."/>
            <person name="Park J.K."/>
            <person name="Kim J.S."/>
            <person name="Kim D.S."/>
            <person name="Ahn K.M."/>
            <person name="Lee S.I."/>
            <person name="Park H.J."/>
            <person name="Hahn Y.S."/>
            <person name="Lee J.H."/>
            <person name="Miyawaki T."/>
        </authorList>
    </citation>
    <scope>VARIANT XLA ASP-462</scope>
</reference>
<reference key="83">
    <citation type="journal article" date="2004" name="Hum. Mutat.">
        <title>Identification of the bruton tyrosine kinase (BTK) gene mutations in 20 Australian families with X-linked agammaglobulinemia (XLA).</title>
        <authorList>
            <person name="Velickovic M."/>
            <person name="Prasad M.L."/>
            <person name="Weston S.A."/>
            <person name="Benson E.M."/>
        </authorList>
    </citation>
    <scope>VARIANT XLA ARG-302</scope>
</reference>
<reference key="84">
    <citation type="journal article" date="2005" name="Immunol. Rev.">
        <title>Genetic analysis of patients with defects in early B-cell development.</title>
        <authorList>
            <person name="Conley M.E."/>
            <person name="Broides A."/>
            <person name="Hernandez-Trujillo V."/>
            <person name="Howard V."/>
            <person name="Kanegane H."/>
            <person name="Miyawaki T."/>
            <person name="Shurtleff S.A."/>
        </authorList>
    </citation>
    <scope>VARIANT XLA THR-630</scope>
</reference>
<reference key="85">
    <citation type="journal article" date="2007" name="Nature">
        <title>Patterns of somatic mutation in human cancer genomes.</title>
        <authorList>
            <person name="Greenman C."/>
            <person name="Stephens P."/>
            <person name="Smith R."/>
            <person name="Dalgliesh G.L."/>
            <person name="Hunter C."/>
            <person name="Bignell G."/>
            <person name="Davies H."/>
            <person name="Teague J."/>
            <person name="Butler A."/>
            <person name="Stevens C."/>
            <person name="Edkins S."/>
            <person name="O'Meara S."/>
            <person name="Vastrik I."/>
            <person name="Schmidt E.E."/>
            <person name="Avis T."/>
            <person name="Barthorpe S."/>
            <person name="Bhamra G."/>
            <person name="Buck G."/>
            <person name="Choudhury B."/>
            <person name="Clements J."/>
            <person name="Cole J."/>
            <person name="Dicks E."/>
            <person name="Forbes S."/>
            <person name="Gray K."/>
            <person name="Halliday K."/>
            <person name="Harrison R."/>
            <person name="Hills K."/>
            <person name="Hinton J."/>
            <person name="Jenkinson A."/>
            <person name="Jones D."/>
            <person name="Menzies A."/>
            <person name="Mironenko T."/>
            <person name="Perry J."/>
            <person name="Raine K."/>
            <person name="Richardson D."/>
            <person name="Shepherd R."/>
            <person name="Small A."/>
            <person name="Tofts C."/>
            <person name="Varian J."/>
            <person name="Webb T."/>
            <person name="West S."/>
            <person name="Widaa S."/>
            <person name="Yates A."/>
            <person name="Cahill D.P."/>
            <person name="Louis D.N."/>
            <person name="Goldstraw P."/>
            <person name="Nicholson A.G."/>
            <person name="Brasseur F."/>
            <person name="Looijenga L."/>
            <person name="Weber B.L."/>
            <person name="Chiew Y.-E."/>
            <person name="DeFazio A."/>
            <person name="Greaves M.F."/>
            <person name="Green A.R."/>
            <person name="Campbell P."/>
            <person name="Birney E."/>
            <person name="Easton D.F."/>
            <person name="Chenevix-Trench G."/>
            <person name="Tan M.-H."/>
            <person name="Khoo S.K."/>
            <person name="Teh B.T."/>
            <person name="Yuen S.T."/>
            <person name="Leung S.Y."/>
            <person name="Wooster R."/>
            <person name="Futreal P.A."/>
            <person name="Stratton M.R."/>
        </authorList>
    </citation>
    <scope>VARIANTS [LARGE SCALE ANALYSIS] LYS-82 AND LYS-190</scope>
</reference>
<reference key="86">
    <citation type="journal article" date="2008" name="Clin. Exp. Immunol.">
        <title>A minimally hypomorphic mutation in Btk resulting in reduced B cell numbers but no clinical disease.</title>
        <authorList>
            <person name="Conley M.E."/>
            <person name="Farmer D.M."/>
            <person name="Dobbs A.K."/>
            <person name="Howard V."/>
            <person name="Aiba Y."/>
            <person name="Shurtleff S.A."/>
            <person name="Kurosaki T."/>
        </authorList>
    </citation>
    <scope>VARIANT XLA HIS-418</scope>
</reference>
<reference key="87">
    <citation type="journal article" date="2014" name="N. Engl. J. Med.">
        <title>Resistance mechanisms for the Bruton's tyrosine kinase inhibitor ibrutinib.</title>
        <authorList>
            <person name="Woyach J.A."/>
            <person name="Furman R.R."/>
            <person name="Liu T.M."/>
            <person name="Ozer H.G."/>
            <person name="Zapatka M."/>
            <person name="Ruppert A.S."/>
            <person name="Xue L."/>
            <person name="Li D.H."/>
            <person name="Steggerda S.M."/>
            <person name="Versele M."/>
            <person name="Dave S.S."/>
            <person name="Zhang J."/>
            <person name="Yilmaz A.S."/>
            <person name="Jaglowski S.M."/>
            <person name="Blum K.A."/>
            <person name="Lozanski A."/>
            <person name="Lozanski G."/>
            <person name="James D.F."/>
            <person name="Barrientos J.C."/>
            <person name="Lichter P."/>
            <person name="Stilgenbauer S."/>
            <person name="Buggy J.J."/>
            <person name="Chang B.Y."/>
            <person name="Johnson A.J."/>
            <person name="Byrd J.C."/>
        </authorList>
    </citation>
    <scope>VARIANT SER-481</scope>
    <scope>CHARACTERIZATION OF VARIANT SER-481</scope>
</reference>
<reference key="88">
    <citation type="journal article" date="2014" name="N. Engl. J. Med.">
        <title>Ibrutinib resistance in chronic lymphocytic leukemia.</title>
        <authorList>
            <person name="Furman R.R."/>
            <person name="Cheng S."/>
            <person name="Lu P."/>
            <person name="Setty M."/>
            <person name="Perez A.R."/>
            <person name="Perez A.R."/>
            <person name="Guo A."/>
            <person name="Racchumi J."/>
            <person name="Xu G."/>
            <person name="Wu H."/>
            <person name="Ma J."/>
            <person name="Steggerda S.M."/>
            <person name="Coleman M."/>
            <person name="Leslie C."/>
            <person name="Wang Y.L."/>
        </authorList>
    </citation>
    <scope>CHARACTERIZATION OF VARIANT SER-481</scope>
</reference>
<reference key="89">
    <citation type="journal article" date="2015" name="Leukemia">
        <title>Functional characterization of BTK(C481S) mutation that confers ibrutinib resistance: exploration of alternative kinase inhibitors.</title>
        <authorList>
            <person name="Cheng S."/>
            <person name="Guo A."/>
            <person name="Lu P."/>
            <person name="Ma J."/>
            <person name="Coleman M."/>
            <person name="Wang Y.L."/>
        </authorList>
    </citation>
    <scope>CHARACTERIZATION OF VARIANT SER-481</scope>
</reference>
<sequence>MAAVILESIFLKRSQQKKKTSPLNFKKRLFLLTVHKLSYYEYDFERGRRGSKKGSIDVEKITCVETVVPEKNPPPERQIPRRGEESSEMEQISIIERFPYPFQVVYDEGPLYVFSPTEELRKRWIHQLKNVIRYNSDLVQKYHPCFWIDGQYLCCSQTAKNAMGCQILENRNGSLKPGSSHRKTKKPLPPTPEEDQILKKPLPPEPAAAPVSTSELKKVVALYDYMPMNANDLQLRKGDEYFILEESNLPWWRARDKNGQEGYIPSNYVTEAEDSIEMYEWYSKHMTRSQAEQLLKQEGKEGGFIVRDSSKAGKYTVSVFAKSTGDPQGVIRHYVVCSTPQSQYYLAEKHLFSTIPELINYHQHNSAGLISRLKYPVSQQNKNAPSTAGLGYGSWEIDPKDLTFLKELGTGQFGVVKYGKWRGQYDVAIKMIKEGSMSEDEFIEEAKVMMNLSHEKLVQLYGVCTKQRPIFIITEYMANGCLLNYLREMRHRFQTQQLLEMCKDVCEAMEYLESKQFLHRDLAARNCLVNDQGVVKVSDFGLSRYVLDDEYTSSVGSKFPVRWSPPEVLMYSKFSSKSDIWAFGVLMWEIYSLGKMPYERFTNSETAEHIAQGLRLYRPHLASEKVYTIMYSCWHEKADERPTFKILLSNILDVMDEES</sequence>
<keyword id="KW-0002">3D-structure</keyword>
<keyword id="KW-0007">Acetylation</keyword>
<keyword id="KW-1064">Adaptive immunity</keyword>
<keyword id="KW-0877">Alternative promoter usage</keyword>
<keyword id="KW-0053">Apoptosis</keyword>
<keyword id="KW-0067">ATP-binding</keyword>
<keyword id="KW-1003">Cell membrane</keyword>
<keyword id="KW-0963">Cytoplasm</keyword>
<keyword id="KW-0903">Direct protein sequencing</keyword>
<keyword id="KW-0225">Disease variant</keyword>
<keyword id="KW-0242">Dwarfism</keyword>
<keyword id="KW-0391">Immunity</keyword>
<keyword id="KW-0399">Innate immunity</keyword>
<keyword id="KW-0418">Kinase</keyword>
<keyword id="KW-0446">Lipid-binding</keyword>
<keyword id="KW-0472">Membrane</keyword>
<keyword id="KW-0479">Metal-binding</keyword>
<keyword id="KW-0547">Nucleotide-binding</keyword>
<keyword id="KW-0539">Nucleus</keyword>
<keyword id="KW-0597">Phosphoprotein</keyword>
<keyword id="KW-1267">Proteomics identification</keyword>
<keyword id="KW-1185">Reference proteome</keyword>
<keyword id="KW-0727">SH2 domain</keyword>
<keyword id="KW-0728">SH3 domain</keyword>
<keyword id="KW-0804">Transcription</keyword>
<keyword id="KW-0805">Transcription regulation</keyword>
<keyword id="KW-0808">Transferase</keyword>
<keyword id="KW-0829">Tyrosine-protein kinase</keyword>
<keyword id="KW-0862">Zinc</keyword>
<keyword id="KW-0863">Zinc-finger</keyword>
<organism>
    <name type="scientific">Homo sapiens</name>
    <name type="common">Human</name>
    <dbReference type="NCBI Taxonomy" id="9606"/>
    <lineage>
        <taxon>Eukaryota</taxon>
        <taxon>Metazoa</taxon>
        <taxon>Chordata</taxon>
        <taxon>Craniata</taxon>
        <taxon>Vertebrata</taxon>
        <taxon>Euteleostomi</taxon>
        <taxon>Mammalia</taxon>
        <taxon>Eutheria</taxon>
        <taxon>Euarchontoglires</taxon>
        <taxon>Primates</taxon>
        <taxon>Haplorrhini</taxon>
        <taxon>Catarrhini</taxon>
        <taxon>Hominidae</taxon>
        <taxon>Homo</taxon>
    </lineage>
</organism>
<proteinExistence type="evidence at protein level"/>
<evidence type="ECO:0000250" key="1">
    <source>
        <dbReference type="UniProtKB" id="P35991"/>
    </source>
</evidence>
<evidence type="ECO:0000255" key="2">
    <source>
        <dbReference type="PROSITE-ProRule" id="PRU00145"/>
    </source>
</evidence>
<evidence type="ECO:0000255" key="3">
    <source>
        <dbReference type="PROSITE-ProRule" id="PRU00159"/>
    </source>
</evidence>
<evidence type="ECO:0000255" key="4">
    <source>
        <dbReference type="PROSITE-ProRule" id="PRU00191"/>
    </source>
</evidence>
<evidence type="ECO:0000255" key="5">
    <source>
        <dbReference type="PROSITE-ProRule" id="PRU00192"/>
    </source>
</evidence>
<evidence type="ECO:0000255" key="6">
    <source>
        <dbReference type="PROSITE-ProRule" id="PRU00432"/>
    </source>
</evidence>
<evidence type="ECO:0000255" key="7">
    <source>
        <dbReference type="PROSITE-ProRule" id="PRU10028"/>
    </source>
</evidence>
<evidence type="ECO:0000256" key="8">
    <source>
        <dbReference type="SAM" id="MobiDB-lite"/>
    </source>
</evidence>
<evidence type="ECO:0000269" key="9">
    <source>
    </source>
</evidence>
<evidence type="ECO:0000269" key="10">
    <source>
    </source>
</evidence>
<evidence type="ECO:0000269" key="11">
    <source>
    </source>
</evidence>
<evidence type="ECO:0000269" key="12">
    <source>
    </source>
</evidence>
<evidence type="ECO:0000269" key="13">
    <source>
    </source>
</evidence>
<evidence type="ECO:0000269" key="14">
    <source>
    </source>
</evidence>
<evidence type="ECO:0000269" key="15">
    <source>
    </source>
</evidence>
<evidence type="ECO:0000269" key="16">
    <source>
    </source>
</evidence>
<evidence type="ECO:0000269" key="17">
    <source>
    </source>
</evidence>
<evidence type="ECO:0000269" key="18">
    <source>
    </source>
</evidence>
<evidence type="ECO:0000269" key="19">
    <source>
    </source>
</evidence>
<evidence type="ECO:0000269" key="20">
    <source>
    </source>
</evidence>
<evidence type="ECO:0000269" key="21">
    <source>
    </source>
</evidence>
<evidence type="ECO:0000269" key="22">
    <source>
    </source>
</evidence>
<evidence type="ECO:0000269" key="23">
    <source>
    </source>
</evidence>
<evidence type="ECO:0000269" key="24">
    <source>
    </source>
</evidence>
<evidence type="ECO:0000269" key="25">
    <source>
    </source>
</evidence>
<evidence type="ECO:0000269" key="26">
    <source>
    </source>
</evidence>
<evidence type="ECO:0000269" key="27">
    <source>
    </source>
</evidence>
<evidence type="ECO:0000269" key="28">
    <source>
    </source>
</evidence>
<evidence type="ECO:0000269" key="29">
    <source>
    </source>
</evidence>
<evidence type="ECO:0000269" key="30">
    <source>
    </source>
</evidence>
<evidence type="ECO:0000269" key="31">
    <source>
    </source>
</evidence>
<evidence type="ECO:0000269" key="32">
    <source>
    </source>
</evidence>
<evidence type="ECO:0000269" key="33">
    <source>
    </source>
</evidence>
<evidence type="ECO:0000269" key="34">
    <source>
    </source>
</evidence>
<evidence type="ECO:0000269" key="35">
    <source>
    </source>
</evidence>
<evidence type="ECO:0000269" key="36">
    <source>
    </source>
</evidence>
<evidence type="ECO:0000269" key="37">
    <source>
    </source>
</evidence>
<evidence type="ECO:0000269" key="38">
    <source>
    </source>
</evidence>
<evidence type="ECO:0000269" key="39">
    <source>
    </source>
</evidence>
<evidence type="ECO:0000269" key="40">
    <source>
    </source>
</evidence>
<evidence type="ECO:0000269" key="41">
    <source>
    </source>
</evidence>
<evidence type="ECO:0000269" key="42">
    <source>
    </source>
</evidence>
<evidence type="ECO:0000269" key="43">
    <source>
    </source>
</evidence>
<evidence type="ECO:0000269" key="44">
    <source>
    </source>
</evidence>
<evidence type="ECO:0000269" key="45">
    <source>
    </source>
</evidence>
<evidence type="ECO:0000269" key="46">
    <source>
    </source>
</evidence>
<evidence type="ECO:0000269" key="47">
    <source>
    </source>
</evidence>
<evidence type="ECO:0000269" key="48">
    <source>
    </source>
</evidence>
<evidence type="ECO:0000269" key="49">
    <source>
    </source>
</evidence>
<evidence type="ECO:0000269" key="50">
    <source>
    </source>
</evidence>
<evidence type="ECO:0000269" key="51">
    <source>
    </source>
</evidence>
<evidence type="ECO:0000269" key="52">
    <source>
    </source>
</evidence>
<evidence type="ECO:0000269" key="53">
    <source>
    </source>
</evidence>
<evidence type="ECO:0000269" key="54">
    <source>
    </source>
</evidence>
<evidence type="ECO:0000269" key="55">
    <source>
    </source>
</evidence>
<evidence type="ECO:0000269" key="56">
    <source>
    </source>
</evidence>
<evidence type="ECO:0000269" key="57">
    <source>
    </source>
</evidence>
<evidence type="ECO:0000269" key="58">
    <source>
    </source>
</evidence>
<evidence type="ECO:0000269" key="59">
    <source>
    </source>
</evidence>
<evidence type="ECO:0000269" key="60">
    <source>
    </source>
</evidence>
<evidence type="ECO:0000269" key="61">
    <source>
    </source>
</evidence>
<evidence type="ECO:0000269" key="62">
    <source>
    </source>
</evidence>
<evidence type="ECO:0000269" key="63">
    <source>
    </source>
</evidence>
<evidence type="ECO:0000269" key="64">
    <source>
    </source>
</evidence>
<evidence type="ECO:0000269" key="65">
    <source>
    </source>
</evidence>
<evidence type="ECO:0000269" key="66">
    <source>
    </source>
</evidence>
<evidence type="ECO:0000269" key="67">
    <source>
    </source>
</evidence>
<evidence type="ECO:0000269" key="68">
    <source>
    </source>
</evidence>
<evidence type="ECO:0000269" key="69">
    <source>
    </source>
</evidence>
<evidence type="ECO:0000269" key="70">
    <source>
    </source>
</evidence>
<evidence type="ECO:0000269" key="71">
    <source>
    </source>
</evidence>
<evidence type="ECO:0000269" key="72">
    <source>
    </source>
</evidence>
<evidence type="ECO:0000269" key="73">
    <source>
    </source>
</evidence>
<evidence type="ECO:0000269" key="74">
    <source ref="11"/>
</evidence>
<evidence type="ECO:0000269" key="75">
    <source ref="49"/>
</evidence>
<evidence type="ECO:0000269" key="76">
    <source ref="50"/>
</evidence>
<evidence type="ECO:0000303" key="77">
    <source>
    </source>
</evidence>
<evidence type="ECO:0000303" key="78">
    <source>
    </source>
</evidence>
<evidence type="ECO:0000305" key="79"/>
<evidence type="ECO:0007744" key="80">
    <source>
        <dbReference type="PDB" id="2Z0P"/>
    </source>
</evidence>
<evidence type="ECO:0007744" key="81">
    <source>
        <dbReference type="PDB" id="3GEN"/>
    </source>
</evidence>
<evidence type="ECO:0007744" key="82">
    <source>
        <dbReference type="PDB" id="3K54"/>
    </source>
</evidence>
<evidence type="ECO:0007744" key="83">
    <source>
        <dbReference type="PDB" id="3OCS"/>
    </source>
</evidence>
<evidence type="ECO:0007744" key="84">
    <source>
        <dbReference type="PDB" id="3OCT"/>
    </source>
</evidence>
<evidence type="ECO:0007744" key="85">
    <source>
        <dbReference type="PDB" id="3PIX"/>
    </source>
</evidence>
<evidence type="ECO:0007744" key="86">
    <source>
        <dbReference type="PDB" id="3PIY"/>
    </source>
</evidence>
<evidence type="ECO:0007744" key="87">
    <source>
        <dbReference type="PDB" id="3PIZ"/>
    </source>
</evidence>
<evidence type="ECO:0007744" key="88">
    <source>
        <dbReference type="PDB" id="3PJ1"/>
    </source>
</evidence>
<evidence type="ECO:0007744" key="89">
    <source>
        <dbReference type="PDB" id="3PJ2"/>
    </source>
</evidence>
<evidence type="ECO:0007744" key="90">
    <source>
        <dbReference type="PDB" id="3PJ3"/>
    </source>
</evidence>
<evidence type="ECO:0007744" key="91">
    <source>
    </source>
</evidence>
<evidence type="ECO:0007744" key="92">
    <source>
    </source>
</evidence>
<evidence type="ECO:0007744" key="93">
    <source>
    </source>
</evidence>
<evidence type="ECO:0007829" key="94">
    <source>
        <dbReference type="PDB" id="1AWW"/>
    </source>
</evidence>
<evidence type="ECO:0007829" key="95">
    <source>
        <dbReference type="PDB" id="1AWX"/>
    </source>
</evidence>
<evidence type="ECO:0007829" key="96">
    <source>
        <dbReference type="PDB" id="1QLY"/>
    </source>
</evidence>
<evidence type="ECO:0007829" key="97">
    <source>
        <dbReference type="PDB" id="2GE9"/>
    </source>
</evidence>
<evidence type="ECO:0007829" key="98">
    <source>
        <dbReference type="PDB" id="2Z0P"/>
    </source>
</evidence>
<evidence type="ECO:0007829" key="99">
    <source>
        <dbReference type="PDB" id="5P9J"/>
    </source>
</evidence>
<evidence type="ECO:0007829" key="100">
    <source>
        <dbReference type="PDB" id="6DI1"/>
    </source>
</evidence>
<evidence type="ECO:0007829" key="101">
    <source>
        <dbReference type="PDB" id="6HTF"/>
    </source>
</evidence>
<evidence type="ECO:0007829" key="102">
    <source>
        <dbReference type="PDB" id="6NFH"/>
    </source>
</evidence>
<evidence type="ECO:0007829" key="103">
    <source>
        <dbReference type="PDB" id="6O8I"/>
    </source>
</evidence>
<evidence type="ECO:0007829" key="104">
    <source>
        <dbReference type="PDB" id="6TT2"/>
    </source>
</evidence>
<evidence type="ECO:0007829" key="105">
    <source>
        <dbReference type="PDB" id="6TUH"/>
    </source>
</evidence>
<evidence type="ECO:0007829" key="106">
    <source>
        <dbReference type="PDB" id="6W7O"/>
    </source>
</evidence>
<evidence type="ECO:0007829" key="107">
    <source>
        <dbReference type="PDB" id="6YYG"/>
    </source>
</evidence>
<evidence type="ECO:0007829" key="108">
    <source>
        <dbReference type="PDB" id="7YC9"/>
    </source>
</evidence>
<accession>Q06187</accession>
<accession>B2RAW1</accession>
<accession>Q32ML5</accession>
<name>BTK_HUMAN</name>
<gene>
    <name type="primary">BTK</name>
    <name type="synonym">AGMX1</name>
    <name type="synonym">ATK</name>
    <name type="synonym">BPK</name>
</gene>
<protein>
    <recommendedName>
        <fullName>Tyrosine-protein kinase BTK</fullName>
        <ecNumber evidence="20 43">2.7.10.2</ecNumber>
    </recommendedName>
    <alternativeName>
        <fullName>Agammaglobulinemia tyrosine kinase</fullName>
        <shortName>ATK</shortName>
    </alternativeName>
    <alternativeName>
        <fullName>B-cell progenitor kinase</fullName>
        <shortName>BPK</shortName>
    </alternativeName>
    <alternativeName>
        <fullName>Bruton tyrosine kinase</fullName>
    </alternativeName>
</protein>
<feature type="initiator methionine" description="Removed" evidence="74 93">
    <location>
        <position position="1"/>
    </location>
</feature>
<feature type="chain" id="PRO_0000088065" description="Tyrosine-protein kinase BTK">
    <location>
        <begin position="2"/>
        <end position="659"/>
    </location>
</feature>
<feature type="domain" description="PH" evidence="2">
    <location>
        <begin position="3"/>
        <end position="133"/>
    </location>
</feature>
<feature type="domain" description="SH3" evidence="5">
    <location>
        <begin position="214"/>
        <end position="274"/>
    </location>
</feature>
<feature type="domain" description="SH2" evidence="4">
    <location>
        <begin position="281"/>
        <end position="377"/>
    </location>
</feature>
<feature type="domain" description="Protein kinase" evidence="3">
    <location>
        <begin position="402"/>
        <end position="655"/>
    </location>
</feature>
<feature type="zinc finger region" description="Btk-type" evidence="6">
    <location>
        <begin position="135"/>
        <end position="171"/>
    </location>
</feature>
<feature type="region of interest" description="Inositol-(1,3,4,5)-tetrakisphosphate 1-binding">
    <location>
        <begin position="12"/>
        <end position="24"/>
    </location>
</feature>
<feature type="region of interest" description="Disordered" evidence="8">
    <location>
        <begin position="171"/>
        <end position="210"/>
    </location>
</feature>
<feature type="short sequence motif" description="CAV1-binding">
    <location>
        <begin position="581"/>
        <end position="588"/>
    </location>
</feature>
<feature type="active site" description="Proton acceptor" evidence="3 7">
    <location>
        <position position="521"/>
    </location>
</feature>
<feature type="binding site" evidence="9">
    <location>
        <position position="26"/>
    </location>
    <ligand>
        <name>1D-myo-inositol 1,3,4,5-tetrakisphosphate</name>
        <dbReference type="ChEBI" id="CHEBI:57895"/>
    </ligand>
</feature>
<feature type="binding site" evidence="9">
    <location>
        <position position="28"/>
    </location>
    <ligand>
        <name>1D-myo-inositol 1,3,4,5-tetrakisphosphate</name>
        <dbReference type="ChEBI" id="CHEBI:57895"/>
    </ligand>
</feature>
<feature type="binding site" evidence="9">
    <location>
        <position position="39"/>
    </location>
    <ligand>
        <name>1D-myo-inositol 1,3,4,5-tetrakisphosphate</name>
        <dbReference type="ChEBI" id="CHEBI:57895"/>
    </ligand>
</feature>
<feature type="binding site" evidence="9">
    <location>
        <position position="53"/>
    </location>
    <ligand>
        <name>1D-myo-inositol 1,3,4,5-tetrakisphosphate</name>
        <dbReference type="ChEBI" id="CHEBI:57895"/>
    </ligand>
</feature>
<feature type="binding site" evidence="6 9 68 76">
    <location>
        <position position="143"/>
    </location>
    <ligand>
        <name>Zn(2+)</name>
        <dbReference type="ChEBI" id="CHEBI:29105"/>
    </ligand>
</feature>
<feature type="binding site" evidence="6 9 68 76">
    <location>
        <position position="154"/>
    </location>
    <ligand>
        <name>Zn(2+)</name>
        <dbReference type="ChEBI" id="CHEBI:29105"/>
    </ligand>
</feature>
<feature type="binding site" evidence="6 9 68 76">
    <location>
        <position position="155"/>
    </location>
    <ligand>
        <name>Zn(2+)</name>
        <dbReference type="ChEBI" id="CHEBI:29105"/>
    </ligand>
</feature>
<feature type="binding site" evidence="6 9 68 76">
    <location>
        <position position="165"/>
    </location>
    <ligand>
        <name>Zn(2+)</name>
        <dbReference type="ChEBI" id="CHEBI:29105"/>
    </ligand>
</feature>
<feature type="binding site" evidence="3">
    <location>
        <begin position="408"/>
        <end position="416"/>
    </location>
    <ligand>
        <name>ATP</name>
        <dbReference type="ChEBI" id="CHEBI:30616"/>
    </ligand>
</feature>
<feature type="binding site" evidence="3">
    <location>
        <position position="430"/>
    </location>
    <ligand>
        <name>ATP</name>
        <dbReference type="ChEBI" id="CHEBI:30616"/>
    </ligand>
</feature>
<feature type="binding site" evidence="37 86">
    <location>
        <begin position="474"/>
        <end position="477"/>
    </location>
    <ligand>
        <name>clofedanol</name>
        <dbReference type="ChEBI" id="CHEBI:187895"/>
        <note>inhibitor</note>
    </ligand>
</feature>
<feature type="binding site" evidence="36 82 84">
    <location>
        <begin position="474"/>
        <end position="477"/>
    </location>
    <ligand>
        <name>dasatinib</name>
        <dbReference type="ChEBI" id="CHEBI:190514"/>
        <note>inhibitor</note>
    </ligand>
</feature>
<feature type="binding site" evidence="37 86">
    <location>
        <position position="542"/>
    </location>
    <ligand>
        <name>clofedanol</name>
        <dbReference type="ChEBI" id="CHEBI:187895"/>
        <note>inhibitor</note>
    </ligand>
</feature>
<feature type="modified residue" description="N-acetylalanine" evidence="74 93">
    <location>
        <position position="2"/>
    </location>
</feature>
<feature type="modified residue" description="Phosphoserine" evidence="30">
    <location>
        <position position="21"/>
    </location>
</feature>
<feature type="modified residue" description="Phosphotyrosine" evidence="1">
    <location>
        <position position="40"/>
    </location>
</feature>
<feature type="modified residue" description="Phosphoserine" evidence="91">
    <location>
        <position position="55"/>
    </location>
</feature>
<feature type="modified residue" description="Phosphoserine" evidence="30">
    <location>
        <position position="115"/>
    </location>
</feature>
<feature type="modified residue" description="Phosphoserine; by PKC/PRKCB" evidence="19">
    <location>
        <position position="180"/>
    </location>
</feature>
<feature type="modified residue" description="Phosphothreonine" evidence="91 92">
    <location>
        <position position="191"/>
    </location>
</feature>
<feature type="modified residue" description="Phosphotyrosine; by autocatalysis" evidence="23 33 59 65 92">
    <location>
        <position position="223"/>
    </location>
</feature>
<feature type="modified residue" description="Phosphotyrosine" evidence="1">
    <location>
        <position position="344"/>
    </location>
</feature>
<feature type="modified residue" description="Phosphotyrosine" evidence="91">
    <location>
        <position position="361"/>
    </location>
</feature>
<feature type="modified residue" description="Phosphotyrosine; by LYN and SYK" evidence="59 65">
    <location>
        <position position="551"/>
    </location>
</feature>
<feature type="modified residue" description="Phosphoserine" evidence="92">
    <location>
        <position position="604"/>
    </location>
</feature>
<feature type="modified residue" description="Phosphotyrosine" evidence="26">
    <location>
        <position position="617"/>
    </location>
</feature>
<feature type="modified residue" description="Phosphoserine" evidence="26">
    <location>
        <position position="623"/>
    </location>
</feature>
<feature type="modified residue" description="Phosphoserine" evidence="91">
    <location>
        <position position="659"/>
    </location>
</feature>
<feature type="splice variant" id="VSP_053838" description="In isoform BTK-C." evidence="79">
    <original>M</original>
    <variation>MASWSIQQMVIGCPLCGRHCSGGEHTGELQKEEAM</variation>
    <location>
        <position position="1"/>
    </location>
</feature>
<feature type="sequence variant" id="VAR_006216" description="In XLA; dbSNP:rs1603020228." evidence="67">
    <original>L</original>
    <variation>P</variation>
    <location>
        <position position="11"/>
    </location>
</feature>
<feature type="sequence variant" id="VAR_006217" description="In XLA." evidence="61">
    <original>K</original>
    <variation>R</variation>
    <location>
        <position position="12"/>
    </location>
</feature>
<feature type="sequence variant" id="VAR_006218" description="In XLA; dbSNP:rs1057520682.">
    <original>S</original>
    <variation>F</variation>
    <location>
        <position position="14"/>
    </location>
</feature>
<feature type="sequence variant" id="VAR_008291" description="In XLA." evidence="71">
    <original>K</original>
    <variation>E</variation>
    <location>
        <position position="19"/>
    </location>
</feature>
<feature type="sequence variant" id="VAR_006219" description="In XLA." evidence="47">
    <original>F</original>
    <variation>S</variation>
    <location>
        <position position="25"/>
    </location>
</feature>
<feature type="sequence variant" id="VAR_008292" description="In XLA.">
    <original>K</original>
    <variation>R</variation>
    <location>
        <position position="27"/>
    </location>
</feature>
<feature type="sequence variant" id="VAR_008293" description="In XLA; no effect on phosphorylation of GTF2I." evidence="72">
    <original>R</original>
    <variation>C</variation>
    <location>
        <position position="28"/>
    </location>
</feature>
<feature type="sequence variant" id="VAR_006220" description="In XLA; moderate; dbSNP:rs128620185." evidence="51 56 71">
    <original>R</original>
    <variation>H</variation>
    <location>
        <position position="28"/>
    </location>
</feature>
<feature type="sequence variant" id="VAR_006221" description="In XLA." evidence="61">
    <original>R</original>
    <variation>P</variation>
    <location>
        <position position="28"/>
    </location>
</feature>
<feature type="sequence variant" id="VAR_006222" description="In XLA; severe; dbSNP:rs128620189." evidence="46 51">
    <original>T</original>
    <variation>P</variation>
    <location>
        <position position="33"/>
    </location>
</feature>
<feature type="sequence variant" id="VAR_008960" description="In XLA." evidence="14">
    <original>Y</original>
    <variation>S</variation>
    <location>
        <position position="39"/>
    </location>
</feature>
<feature type="sequence variant" id="VAR_008294" description="In XLA; dbSNP:rs1555980875." evidence="69">
    <original>Y</original>
    <variation>C</variation>
    <location>
        <position position="40"/>
    </location>
</feature>
<feature type="sequence variant" id="VAR_008295" description="In XLA." evidence="69">
    <original>Y</original>
    <variation>N</variation>
    <location>
        <position position="40"/>
    </location>
</feature>
<feature type="sequence variant" id="VAR_008296" description="In XLA." evidence="71">
    <original>I</original>
    <variation>N</variation>
    <location>
        <position position="61"/>
    </location>
</feature>
<feature type="sequence variant" id="VAR_008297" description="In XLA.">
    <original>V</original>
    <variation>D</variation>
    <location>
        <position position="64"/>
    </location>
</feature>
<feature type="sequence variant" id="VAR_006223" description="In XLA." evidence="49">
    <original>V</original>
    <variation>F</variation>
    <location>
        <position position="64"/>
    </location>
</feature>
<feature type="sequence variant" id="VAR_041676" description="In dbSNP:rs56035945." evidence="32">
    <original>R</original>
    <variation>K</variation>
    <location>
        <position position="82"/>
    </location>
</feature>
<feature type="sequence variant" id="VAR_006224" description="In XLA.">
    <original>Q</original>
    <variation>QSVFSSTR</variation>
    <location>
        <position position="103"/>
    </location>
</feature>
<feature type="sequence variant" id="VAR_006225" description="In XLA; dbSNP:rs128621190." evidence="50">
    <original>V</original>
    <variation>D</variation>
    <location>
        <position position="113"/>
    </location>
</feature>
<feature type="sequence variant" id="VAR_008298" description="In XLA." evidence="64">
    <original>S</original>
    <variation>F</variation>
    <location>
        <position position="115"/>
    </location>
</feature>
<feature type="sequence variant" id="VAR_008299" description="In XLA." evidence="71">
    <original>T</original>
    <variation>P</variation>
    <location>
        <position position="117"/>
    </location>
</feature>
<feature type="sequence variant" id="VAR_008300" description="In XLA." evidence="71">
    <original>Q</original>
    <variation>H</variation>
    <location>
        <position position="127"/>
    </location>
</feature>
<feature type="sequence variant" id="VAR_008301" description="In XLA." evidence="70">
    <original>C</original>
    <variation>S</variation>
    <location>
        <position position="154"/>
    </location>
</feature>
<feature type="sequence variant" id="VAR_008302" description="In XLA." evidence="70">
    <original>C</original>
    <variation>G</variation>
    <location>
        <position position="155"/>
    </location>
</feature>
<feature type="sequence variant" id="VAR_008303" description="In XLA." evidence="70 71">
    <original>C</original>
    <variation>R</variation>
    <location>
        <position position="155"/>
    </location>
</feature>
<feature type="sequence variant" id="VAR_008304" description="In XLA.">
    <original>T</original>
    <variation>P</variation>
    <location>
        <position position="184"/>
    </location>
</feature>
<feature type="sequence variant" id="VAR_041677" description="In a lung large cell carcinoma sample; somatic mutation; requires 2 nucleotide substitutions." evidence="32">
    <original>P</original>
    <variation>K</variation>
    <location>
        <position position="190"/>
    </location>
</feature>
<feature type="sequence variant" id="VAR_006226" description="In XLA; severe." evidence="51">
    <location>
        <begin position="260"/>
        <end position="280"/>
    </location>
</feature>
<feature type="sequence variant" id="VAR_008305" description="In XLA; dbSNP:rs1555978277." evidence="72">
    <original>R</original>
    <variation>Q</variation>
    <location>
        <position position="288"/>
    </location>
</feature>
<feature type="sequence variant" id="VAR_006227" description="In XLA; dbSNP:rs128621194." evidence="47 56 57 63">
    <original>R</original>
    <variation>W</variation>
    <location>
        <position position="288"/>
    </location>
</feature>
<feature type="sequence variant" id="VAR_006228" description="In XLA." evidence="62 71">
    <original>L</original>
    <variation>P</variation>
    <location>
        <position position="295"/>
    </location>
</feature>
<feature type="sequence variant" id="VAR_006230" description="In XLA." evidence="44 61">
    <original>G</original>
    <variation>E</variation>
    <location>
        <position position="302"/>
    </location>
</feature>
<feature type="sequence variant" id="VAR_008306" description="In XLA." evidence="25">
    <original>G</original>
    <variation>R</variation>
    <location>
        <position position="302"/>
    </location>
</feature>
<feature type="sequence variant" id="VAR_006229" description="In XLA." evidence="46">
    <location>
        <position position="302"/>
    </location>
</feature>
<feature type="sequence variant" id="VAR_006231" description="In XLA; loss of activity; dbSNP:rs128621195." evidence="57">
    <original>R</original>
    <variation>G</variation>
    <location>
        <position position="307"/>
    </location>
</feature>
<feature type="sequence variant" id="VAR_008307" description="In XLA." evidence="72">
    <original>R</original>
    <variation>T</variation>
    <location>
        <position position="307"/>
    </location>
</feature>
<feature type="sequence variant" id="VAR_008308" description="In XLA.">
    <original>D</original>
    <variation>E</variation>
    <location>
        <position position="308"/>
    </location>
</feature>
<feature type="sequence variant" id="VAR_008309" description="In XLA; moderate.">
    <original>V</original>
    <variation>A</variation>
    <location>
        <position position="319"/>
    </location>
</feature>
<feature type="sequence variant" id="VAR_006232" description="In XLA; dbSNP:rs128621196." evidence="52">
    <original>Y</original>
    <variation>S</variation>
    <location>
        <position position="334"/>
    </location>
</feature>
<feature type="sequence variant" id="VAR_006233" description="In XLA." evidence="53">
    <original>L</original>
    <variation>F</variation>
    <location>
        <position position="358"/>
    </location>
</feature>
<feature type="sequence variant" id="VAR_006234" description="In XLA; mild; dbSNP:rs28935478." evidence="50">
    <original>Y</original>
    <variation>C</variation>
    <location>
        <position position="361"/>
    </location>
</feature>
<feature type="sequence variant" id="VAR_006235" description="In XLA." evidence="67">
    <original>H</original>
    <variation>Q</variation>
    <location>
        <position position="362"/>
    </location>
</feature>
<feature type="sequence variant" id="VAR_006236" description="In XLA." evidence="22">
    <original>H</original>
    <variation>P</variation>
    <location>
        <position position="364"/>
    </location>
</feature>
<feature type="sequence variant" id="VAR_006237" description="In XLA." evidence="67">
    <original>N</original>
    <variation>Y</variation>
    <location>
        <position position="365"/>
    </location>
</feature>
<feature type="sequence variant" id="VAR_008310" description="In XLA.">
    <original>S</original>
    <variation>F</variation>
    <location>
        <position position="366"/>
    </location>
</feature>
<feature type="sequence variant" id="VAR_008311" description="In XLA." evidence="71">
    <original>L</original>
    <variation>F</variation>
    <location>
        <position position="369"/>
    </location>
</feature>
<feature type="sequence variant" id="VAR_006238" description="In XLA." evidence="47">
    <original>I</original>
    <variation>M</variation>
    <location>
        <position position="370"/>
    </location>
</feature>
<feature type="sequence variant" id="VAR_008312" description="In XLA." evidence="71">
    <original>R</original>
    <variation>G</variation>
    <location>
        <position position="372"/>
    </location>
</feature>
<feature type="sequence variant" id="VAR_006239" description="In XLA; moderate; dbSNP:rs128621198." evidence="51">
    <original>L</original>
    <variation>P</variation>
    <location>
        <position position="408"/>
    </location>
</feature>
<feature type="sequence variant" id="VAR_008313" description="In XLA." evidence="71">
    <original>G</original>
    <variation>R</variation>
    <location>
        <position position="414"/>
    </location>
</feature>
<feature type="sequence variant" id="VAR_006240" description="In XLA; dbSNP:rs144079566." evidence="34">
    <original>Y</original>
    <variation>H</variation>
    <location>
        <position position="418"/>
    </location>
</feature>
<feature type="sequence variant" id="VAR_006241" description="In XLA." evidence="60">
    <original>I</original>
    <variation>N</variation>
    <location>
        <position position="429"/>
    </location>
</feature>
<feature type="sequence variant" id="VAR_006242" description="In XLA; loss of phosphorylation of GTF2I; dbSNP:rs128620184." evidence="48">
    <original>K</original>
    <variation>E</variation>
    <location>
        <position position="430"/>
    </location>
</feature>
<feature type="sequence variant" id="VAR_008314" description="In XLA; complete loss of kinase activity." evidence="42 72">
    <original>K</original>
    <variation>R</variation>
    <location>
        <position position="430"/>
    </location>
</feature>
<feature type="sequence variant" id="VAR_008315" description="In XLA." evidence="72">
    <original>E</original>
    <variation>D</variation>
    <location>
        <position position="445"/>
    </location>
</feature>
<feature type="sequence variant" id="VAR_008316" description="In XLA." evidence="24">
    <original>G</original>
    <variation>D</variation>
    <location>
        <position position="462"/>
    </location>
</feature>
<feature type="sequence variant" id="VAR_008317" description="In XLA.">
    <original>G</original>
    <variation>V</variation>
    <location>
        <position position="462"/>
    </location>
</feature>
<feature type="sequence variant" id="VAR_006243" description="In XLA." evidence="44">
    <original>Y</original>
    <variation>D</variation>
    <location>
        <position position="476"/>
    </location>
</feature>
<feature type="sequence variant" id="VAR_006244" description="In XLA." evidence="60">
    <original>M</original>
    <variation>R</variation>
    <location>
        <position position="477"/>
    </location>
</feature>
<feature type="sequence variant" id="VAR_074309" description="Found in patients with chronic lymphocytic leukemia; uncertain significance; results in resistance to ibrutinib therapy; results in a protein that is reversibly inhibited by ibrutinib; disrupts the covalent binding between the enzyme and ibrutinib; dbSNP:rs1057519825 and dbSNP:rs1057519826." evidence="39 40 41">
    <original>C</original>
    <variation>S</variation>
    <location>
        <position position="481"/>
    </location>
</feature>
<feature type="sequence variant" id="VAR_006245" description="In XLA.">
    <original>C</original>
    <variation>F</variation>
    <location>
        <position position="502"/>
    </location>
</feature>
<feature type="sequence variant" id="VAR_006246" description="In XLA; dbSNP:rs41310709." evidence="61">
    <original>C</original>
    <variation>W</variation>
    <location>
        <position position="502"/>
    </location>
</feature>
<feature type="sequence variant" id="VAR_006247" description="In XLA; dbSNP:rs128621200." evidence="52">
    <original>C</original>
    <variation>R</variation>
    <location>
        <position position="506"/>
    </location>
</feature>
<feature type="sequence variant" id="VAR_006248" description="In XLA." evidence="71">
    <original>C</original>
    <variation>Y</variation>
    <location>
        <position position="506"/>
    </location>
</feature>
<feature type="sequence variant" id="VAR_008318" description="In XLA." evidence="69">
    <original>A</original>
    <variation>D</variation>
    <location>
        <position position="508"/>
    </location>
</feature>
<feature type="sequence variant" id="VAR_008319" description="In XLA." evidence="64">
    <original>M</original>
    <variation>I</variation>
    <location>
        <position position="509"/>
    </location>
</feature>
<feature type="sequence variant" id="VAR_006249" description="In XLA." evidence="47">
    <original>M</original>
    <variation>V</variation>
    <location>
        <position position="509"/>
    </location>
</feature>
<feature type="sequence variant" id="VAR_008961" description="In XLA." evidence="14">
    <original>L</original>
    <variation>P</variation>
    <location>
        <position position="512"/>
    </location>
</feature>
<feature type="sequence variant" id="VAR_008962" description="In XLA." evidence="14">
    <original>L</original>
    <variation>Q</variation>
    <location>
        <position position="512"/>
    </location>
</feature>
<feature type="sequence variant" id="VAR_008320" description="In XLA.">
    <original>L</original>
    <variation>R</variation>
    <location>
        <position position="518"/>
    </location>
</feature>
<feature type="sequence variant" id="VAR_006251" description="In XLA; severe; prevents activation due to absence of contact between the catalytic loop and the regulatory phosphorylated residue; dbSNP:rs128621202." evidence="46 48 50 52">
    <original>R</original>
    <variation>Q</variation>
    <location>
        <position position="520"/>
    </location>
</feature>
<feature type="sequence variant" id="VAR_008321" description="In XLA." evidence="71">
    <original>D</original>
    <variation>G</variation>
    <location>
        <position position="521"/>
    </location>
</feature>
<feature type="sequence variant" id="VAR_006252" description="In XLA; severe." evidence="61">
    <original>D</original>
    <variation>H</variation>
    <location>
        <position position="521"/>
    </location>
</feature>
<feature type="sequence variant" id="VAR_006253" description="In XLA; severe.">
    <original>D</original>
    <variation>N</variation>
    <location>
        <position position="521"/>
    </location>
</feature>
<feature type="sequence variant" id="VAR_008322" description="In XLA.">
    <original>A</original>
    <variation>E</variation>
    <location>
        <position position="523"/>
    </location>
</feature>
<feature type="sequence variant" id="VAR_008323" description="In XLA; dbSNP:rs886041149." evidence="72">
    <original>R</original>
    <variation>G</variation>
    <location>
        <position position="525"/>
    </location>
</feature>
<feature type="sequence variant" id="VAR_006254" description="In XLA." evidence="47">
    <original>R</original>
    <variation>P</variation>
    <location>
        <position position="525"/>
    </location>
</feature>
<feature type="sequence variant" id="VAR_006255" description="In XLA; severe; disturbs ATP-binding; dbSNP:rs128620183." evidence="48 71">
    <original>R</original>
    <variation>Q</variation>
    <location>
        <position position="525"/>
    </location>
</feature>
<feature type="sequence variant" id="VAR_006256" description="In XLA; dbSNP:rs1569291237." evidence="47">
    <original>N</original>
    <variation>K</variation>
    <location>
        <position position="526"/>
    </location>
</feature>
<feature type="sequence variant" id="VAR_008324" description="In XLA." evidence="72">
    <original>V</original>
    <variation>F</variation>
    <location>
        <position position="535"/>
    </location>
</feature>
<feature type="sequence variant" id="VAR_006257" description="In XLA; growth hormone deficiency; dbSNP:rs128621203." evidence="50">
    <original>L</original>
    <variation>P</variation>
    <location>
        <position position="542"/>
    </location>
</feature>
<feature type="sequence variant" id="VAR_008963" description="In XLA." evidence="14">
    <original>R</original>
    <variation>G</variation>
    <location>
        <position position="544"/>
    </location>
</feature>
<feature type="sequence variant" id="VAR_006258" description="In XLA." evidence="63">
    <original>R</original>
    <variation>K</variation>
    <location>
        <position position="544"/>
    </location>
</feature>
<feature type="sequence variant" id="VAR_008325" description="In XLA." evidence="71">
    <original>F</original>
    <variation>S</variation>
    <location>
        <position position="559"/>
    </location>
</feature>
<feature type="sequence variant" id="VAR_006259" description="In XLA; dbSNP:rs104894770." evidence="15 48">
    <original>R</original>
    <variation>P</variation>
    <location>
        <position position="562"/>
    </location>
</feature>
<feature type="sequence variant" id="VAR_006260" description="In XLA; dbSNP:rs128621204." evidence="47 50 52 71">
    <original>R</original>
    <variation>W</variation>
    <location>
        <position position="562"/>
    </location>
</feature>
<feature type="sequence variant" id="VAR_008326" description="In XLA; dbSNP:rs1555977474." evidence="72">
    <original>W</original>
    <variation>L</variation>
    <location>
        <position position="563"/>
    </location>
</feature>
<feature type="sequence variant" id="VAR_006261" description="In XLA; severe." evidence="45">
    <original>E</original>
    <variation>K</variation>
    <location>
        <position position="567"/>
    </location>
</feature>
<feature type="sequence variant" id="VAR_008964" description="In XLA." evidence="14">
    <original>S</original>
    <variation>Y</variation>
    <location>
        <position position="578"/>
    </location>
</feature>
<feature type="sequence variant" id="VAR_006262" description="In XLA; dbSNP:rs128621205." evidence="50">
    <original>W</original>
    <variation>R</variation>
    <location>
        <position position="581"/>
    </location>
</feature>
<feature type="sequence variant" id="VAR_006263" description="In XLA." evidence="47 48">
    <original>A</original>
    <variation>V</variation>
    <location>
        <position position="582"/>
    </location>
</feature>
<feature type="sequence variant" id="VAR_008327" description="In XLA.">
    <original>F</original>
    <variation>S</variation>
    <location>
        <position position="583"/>
    </location>
</feature>
<feature type="sequence variant" id="VAR_006264" description="In XLA; mild; dbSNP:rs1603001822." evidence="45">
    <original>M</original>
    <variation>L</variation>
    <location>
        <position position="587"/>
    </location>
</feature>
<feature type="sequence variant" id="VAR_008328" description="In XLA." evidence="72">
    <original>E</original>
    <variation>D</variation>
    <location>
        <position position="589"/>
    </location>
</feature>
<feature type="sequence variant" id="VAR_006265" description="In XLA; moderate; interferes with substrate binding; dbSNP:rs128621206." evidence="48 51">
    <original>E</original>
    <variation>G</variation>
    <location>
        <position position="589"/>
    </location>
</feature>
<feature type="sequence variant" id="VAR_008965" description="In XLA." evidence="14">
    <original>E</original>
    <variation>K</variation>
    <location>
        <position position="589"/>
    </location>
</feature>
<feature type="sequence variant" id="VAR_006267" description="In XLA; dbSNP:rs1603001783." evidence="63">
    <original>S</original>
    <variation>P</variation>
    <location>
        <position position="592"/>
    </location>
</feature>
<feature type="sequence variant" id="VAR_006268" description="In XLA; mild; interferes with substrate binding." evidence="48 71">
    <original>G</original>
    <variation>E</variation>
    <location>
        <position position="594"/>
    </location>
</feature>
<feature type="sequence variant" id="VAR_006269" description="In XLA; dbSNP:rs1555977339." evidence="47">
    <original>G</original>
    <variation>R</variation>
    <location>
        <position position="594"/>
    </location>
</feature>
<feature type="sequence variant" id="VAR_006270" description="In XLA.">
    <original>Y</original>
    <variation>C</variation>
    <location>
        <position position="598"/>
    </location>
</feature>
<feature type="sequence variant" id="VAR_006271" description="In XLA; mild; dbSNP:rs128621208." evidence="57">
    <original>A</original>
    <variation>D</variation>
    <location>
        <position position="607"/>
    </location>
</feature>
<feature type="sequence variant" id="VAR_006272" description="In XLA; mild; interferes with substrate binding and/or domain interactions; dbSNP:rs128621209." evidence="48 51">
    <original>G</original>
    <variation>D</variation>
    <location>
        <position position="613"/>
    </location>
</feature>
<feature type="sequence variant" id="VAR_008330" description="In XLA.">
    <original>P</original>
    <variation>A</variation>
    <location>
        <position position="619"/>
    </location>
</feature>
<feature type="sequence variant" id="VAR_006273" description="In XLA.">
    <original>P</original>
    <variation>S</variation>
    <location>
        <position position="619"/>
    </location>
</feature>
<feature type="sequence variant" id="VAR_008331" description="In XLA." evidence="71">
    <original>P</original>
    <variation>T</variation>
    <location>
        <position position="619"/>
    </location>
</feature>
<feature type="sequence variant" id="VAR_008332" description="In XLA." evidence="72">
    <original>A</original>
    <variation>P</variation>
    <location>
        <position position="622"/>
    </location>
</feature>
<feature type="sequence variant" id="VAR_008333" description="In XLA." evidence="71">
    <original>V</original>
    <variation>G</variation>
    <location>
        <position position="626"/>
    </location>
</feature>
<feature type="sequence variant" id="VAR_006274">
    <original>M</original>
    <variation>I</variation>
    <location>
        <position position="630"/>
    </location>
</feature>
<feature type="sequence variant" id="VAR_006275" description="In XLA; dbSNP:rs128621210." evidence="50 52">
    <original>M</original>
    <variation>K</variation>
    <location>
        <position position="630"/>
    </location>
</feature>
<feature type="sequence variant" id="VAR_008334" description="In XLA." evidence="27">
    <original>M</original>
    <variation>T</variation>
    <location>
        <position position="630"/>
    </location>
</feature>
<feature type="sequence variant" id="VAR_006276" description="In XLA." evidence="61">
    <original>C</original>
    <variation>Y</variation>
    <location>
        <position position="633"/>
    </location>
</feature>
<feature type="sequence variant" id="VAR_006277" description="In XLA." evidence="46">
    <original>R</original>
    <variation>C</variation>
    <location>
        <position position="641"/>
    </location>
</feature>
<feature type="sequence variant" id="VAR_006278" description="In XLA; severe." evidence="45 71">
    <original>R</original>
    <variation>H</variation>
    <location>
        <position position="641"/>
    </location>
</feature>
<feature type="sequence variant" id="VAR_008335" description="In XLA.">
    <original>F</original>
    <variation>L</variation>
    <location>
        <position position="644"/>
    </location>
</feature>
<feature type="sequence variant" id="VAR_006279" description="In XLA." evidence="61">
    <original>F</original>
    <variation>S</variation>
    <location>
        <position position="644"/>
    </location>
</feature>
<feature type="sequence variant" id="VAR_006280" description="In XLA." evidence="17">
    <original>L</original>
    <variation>P</variation>
    <location>
        <position position="647"/>
    </location>
</feature>
<feature type="sequence variant" id="VAR_006281" description="In XLA; dbSNP:rs128622212." evidence="50">
    <original>L</original>
    <variation>P</variation>
    <location>
        <position position="652"/>
    </location>
</feature>
<feature type="mutagenesis site" description="No effect on phosphorylation of GTF2I." evidence="65">
    <original>E</original>
    <variation>K</variation>
    <location>
        <position position="41"/>
    </location>
</feature>
<feature type="mutagenesis site" description="No effect on phosphorylation of GTF2I." evidence="65">
    <original>P</original>
    <variation>A</variation>
    <location>
        <position position="189"/>
    </location>
</feature>
<feature type="mutagenesis site" description="Loss of phosphorylation of GTF2I." evidence="59 65">
    <original>Y</original>
    <variation>F</variation>
    <location>
        <position position="223"/>
    </location>
</feature>
<feature type="mutagenesis site" description="Large decrease in binding by SH3BP5." evidence="73">
    <original>WW</original>
    <variation>LL</variation>
    <location>
        <begin position="251"/>
        <end position="252"/>
    </location>
</feature>
<feature type="mutagenesis site" description="No effect on phosphorylation of GTF2I." evidence="65">
    <original>W</original>
    <variation>L</variation>
    <location>
        <position position="251"/>
    </location>
</feature>
<feature type="mutagenesis site" description="Loss of phosphorylation of GTF2I." evidence="65">
    <original>R</original>
    <variation>K</variation>
    <location>
        <position position="307"/>
    </location>
</feature>
<feature type="mutagenesis site" description="Loss of phosphorylation of GTF2I." evidence="65">
    <original>Y</original>
    <variation>F</variation>
    <location>
        <position position="551"/>
    </location>
</feature>
<feature type="mutagenesis site" description="Defective in mediating calcium response." evidence="26">
    <original>Y</original>
    <variation>E</variation>
    <location>
        <position position="617"/>
    </location>
</feature>
<feature type="sequence conflict" description="In Ref. 7; BAG37008." evidence="79" ref="7">
    <original>R</original>
    <variation>K</variation>
    <location>
        <position position="253"/>
    </location>
</feature>
<feature type="strand" evidence="104">
    <location>
        <begin position="5"/>
        <end position="13"/>
    </location>
</feature>
<feature type="strand" evidence="105">
    <location>
        <begin position="15"/>
        <end position="17"/>
    </location>
</feature>
<feature type="strand" evidence="105">
    <location>
        <begin position="19"/>
        <end position="21"/>
    </location>
</feature>
<feature type="strand" evidence="104">
    <location>
        <begin position="25"/>
        <end position="32"/>
    </location>
</feature>
<feature type="strand" evidence="104">
    <location>
        <begin position="34"/>
        <end position="43"/>
    </location>
</feature>
<feature type="turn" evidence="104">
    <location>
        <begin position="44"/>
        <end position="47"/>
    </location>
</feature>
<feature type="strand" evidence="104">
    <location>
        <begin position="48"/>
        <end position="57"/>
    </location>
</feature>
<feature type="helix" evidence="104">
    <location>
        <begin position="58"/>
        <end position="60"/>
    </location>
</feature>
<feature type="strand" evidence="104">
    <location>
        <begin position="63"/>
        <end position="66"/>
    </location>
</feature>
<feature type="helix" evidence="104">
    <location>
        <begin position="75"/>
        <end position="77"/>
    </location>
</feature>
<feature type="strand" evidence="107">
    <location>
        <begin position="82"/>
        <end position="85"/>
    </location>
</feature>
<feature type="helix" evidence="104">
    <location>
        <begin position="93"/>
        <end position="96"/>
    </location>
</feature>
<feature type="strand" evidence="104">
    <location>
        <begin position="100"/>
        <end position="106"/>
    </location>
</feature>
<feature type="strand" evidence="104">
    <location>
        <begin position="109"/>
        <end position="117"/>
    </location>
</feature>
<feature type="helix" evidence="104">
    <location>
        <begin position="118"/>
        <end position="132"/>
    </location>
</feature>
<feature type="strand" evidence="104">
    <location>
        <begin position="140"/>
        <end position="142"/>
    </location>
</feature>
<feature type="strand" evidence="98">
    <location>
        <begin position="149"/>
        <end position="152"/>
    </location>
</feature>
<feature type="turn" evidence="104">
    <location>
        <begin position="153"/>
        <end position="155"/>
    </location>
</feature>
<feature type="strand" evidence="104">
    <location>
        <begin position="165"/>
        <end position="167"/>
    </location>
</feature>
<feature type="turn" evidence="95">
    <location>
        <begin position="212"/>
        <end position="215"/>
    </location>
</feature>
<feature type="strand" evidence="94">
    <location>
        <begin position="218"/>
        <end position="223"/>
    </location>
</feature>
<feature type="strand" evidence="94">
    <location>
        <begin position="228"/>
        <end position="232"/>
    </location>
</feature>
<feature type="strand" evidence="94">
    <location>
        <begin position="240"/>
        <end position="242"/>
    </location>
</feature>
<feature type="strand" evidence="94">
    <location>
        <begin position="248"/>
        <end position="252"/>
    </location>
</feature>
<feature type="turn" evidence="96">
    <location>
        <begin position="257"/>
        <end position="259"/>
    </location>
</feature>
<feature type="strand" evidence="95">
    <location>
        <begin position="261"/>
        <end position="265"/>
    </location>
</feature>
<feature type="turn" evidence="94">
    <location>
        <begin position="266"/>
        <end position="268"/>
    </location>
</feature>
<feature type="strand" evidence="97">
    <location>
        <begin position="279"/>
        <end position="282"/>
    </location>
</feature>
<feature type="helix" evidence="101">
    <location>
        <begin position="288"/>
        <end position="298"/>
    </location>
</feature>
<feature type="strand" evidence="101">
    <location>
        <begin position="303"/>
        <end position="308"/>
    </location>
</feature>
<feature type="strand" evidence="101">
    <location>
        <begin position="310"/>
        <end position="313"/>
    </location>
</feature>
<feature type="strand" evidence="101">
    <location>
        <begin position="315"/>
        <end position="321"/>
    </location>
</feature>
<feature type="strand" evidence="101">
    <location>
        <begin position="330"/>
        <end position="335"/>
    </location>
</feature>
<feature type="strand" evidence="97">
    <location>
        <begin position="337"/>
        <end position="339"/>
    </location>
</feature>
<feature type="turn" evidence="97">
    <location>
        <begin position="340"/>
        <end position="342"/>
    </location>
</feature>
<feature type="strand" evidence="101">
    <location>
        <begin position="344"/>
        <end position="347"/>
    </location>
</feature>
<feature type="strand" evidence="101">
    <location>
        <begin position="352"/>
        <end position="354"/>
    </location>
</feature>
<feature type="helix" evidence="101">
    <location>
        <begin position="355"/>
        <end position="362"/>
    </location>
</feature>
<feature type="strand" evidence="101">
    <location>
        <begin position="369"/>
        <end position="371"/>
    </location>
</feature>
<feature type="strand" evidence="97">
    <location>
        <begin position="373"/>
        <end position="376"/>
    </location>
</feature>
<feature type="helix" evidence="103">
    <location>
        <begin position="393"/>
        <end position="395"/>
    </location>
</feature>
<feature type="helix" evidence="99">
    <location>
        <begin position="399"/>
        <end position="401"/>
    </location>
</feature>
<feature type="strand" evidence="99">
    <location>
        <begin position="402"/>
        <end position="410"/>
    </location>
</feature>
<feature type="strand" evidence="106">
    <location>
        <begin position="412"/>
        <end position="414"/>
    </location>
</feature>
<feature type="strand" evidence="99">
    <location>
        <begin position="415"/>
        <end position="421"/>
    </location>
</feature>
<feature type="turn" evidence="99">
    <location>
        <begin position="422"/>
        <end position="424"/>
    </location>
</feature>
<feature type="strand" evidence="99">
    <location>
        <begin position="425"/>
        <end position="431"/>
    </location>
</feature>
<feature type="turn" evidence="108">
    <location>
        <begin position="434"/>
        <end position="436"/>
    </location>
</feature>
<feature type="helix" evidence="99">
    <location>
        <begin position="439"/>
        <end position="450"/>
    </location>
</feature>
<feature type="strand" evidence="99">
    <location>
        <begin position="460"/>
        <end position="464"/>
    </location>
</feature>
<feature type="strand" evidence="99">
    <location>
        <begin position="466"/>
        <end position="469"/>
    </location>
</feature>
<feature type="strand" evidence="99">
    <location>
        <begin position="471"/>
        <end position="474"/>
    </location>
</feature>
<feature type="helix" evidence="99">
    <location>
        <begin position="482"/>
        <end position="487"/>
    </location>
</feature>
<feature type="helix" evidence="99">
    <location>
        <begin position="489"/>
        <end position="491"/>
    </location>
</feature>
<feature type="helix" evidence="99">
    <location>
        <begin position="495"/>
        <end position="514"/>
    </location>
</feature>
<feature type="turn" evidence="99">
    <location>
        <begin position="524"/>
        <end position="526"/>
    </location>
</feature>
<feature type="strand" evidence="100">
    <location>
        <begin position="527"/>
        <end position="529"/>
    </location>
</feature>
<feature type="strand" evidence="99">
    <location>
        <begin position="535"/>
        <end position="537"/>
    </location>
</feature>
<feature type="helix" evidence="99">
    <location>
        <begin position="542"/>
        <end position="545"/>
    </location>
</feature>
<feature type="helix" evidence="99">
    <location>
        <begin position="549"/>
        <end position="551"/>
    </location>
</feature>
<feature type="strand" evidence="102">
    <location>
        <begin position="556"/>
        <end position="559"/>
    </location>
</feature>
<feature type="helix" evidence="99">
    <location>
        <begin position="561"/>
        <end position="563"/>
    </location>
</feature>
<feature type="helix" evidence="99">
    <location>
        <begin position="566"/>
        <end position="571"/>
    </location>
</feature>
<feature type="helix" evidence="99">
    <location>
        <begin position="576"/>
        <end position="591"/>
    </location>
</feature>
<feature type="turn" evidence="99">
    <location>
        <begin position="592"/>
        <end position="594"/>
    </location>
</feature>
<feature type="turn" evidence="99">
    <location>
        <begin position="597"/>
        <end position="600"/>
    </location>
</feature>
<feature type="helix" evidence="99">
    <location>
        <begin position="603"/>
        <end position="611"/>
    </location>
</feature>
<feature type="helix" evidence="99">
    <location>
        <begin position="624"/>
        <end position="632"/>
    </location>
</feature>
<feature type="helix" evidence="99">
    <location>
        <begin position="638"/>
        <end position="640"/>
    </location>
</feature>
<feature type="helix" evidence="99">
    <location>
        <begin position="644"/>
        <end position="657"/>
    </location>
</feature>
<dbReference type="EC" id="2.7.10.2" evidence="20 43"/>
<dbReference type="EMBL" id="X58957">
    <property type="protein sequence ID" value="CAA41728.1"/>
    <property type="molecule type" value="mRNA"/>
</dbReference>
<dbReference type="EMBL" id="U10087">
    <property type="protein sequence ID" value="AAB60639.1"/>
    <property type="molecule type" value="Genomic_DNA"/>
</dbReference>
<dbReference type="EMBL" id="U10084">
    <property type="protein sequence ID" value="AAB60639.1"/>
    <property type="status" value="JOINED"/>
    <property type="molecule type" value="Genomic_DNA"/>
</dbReference>
<dbReference type="EMBL" id="U10085">
    <property type="protein sequence ID" value="AAB60639.1"/>
    <property type="status" value="JOINED"/>
    <property type="molecule type" value="Genomic_DNA"/>
</dbReference>
<dbReference type="EMBL" id="U10086">
    <property type="protein sequence ID" value="AAB60639.1"/>
    <property type="status" value="JOINED"/>
    <property type="molecule type" value="Genomic_DNA"/>
</dbReference>
<dbReference type="EMBL" id="L31572">
    <property type="protein sequence ID" value="AAA61479.1"/>
    <property type="molecule type" value="Genomic_DNA"/>
</dbReference>
<dbReference type="EMBL" id="L31557">
    <property type="protein sequence ID" value="AAA61479.1"/>
    <property type="status" value="JOINED"/>
    <property type="molecule type" value="Genomic_DNA"/>
</dbReference>
<dbReference type="EMBL" id="L31558">
    <property type="protein sequence ID" value="AAA61479.1"/>
    <property type="status" value="JOINED"/>
    <property type="molecule type" value="Genomic_DNA"/>
</dbReference>
<dbReference type="EMBL" id="L31559">
    <property type="protein sequence ID" value="AAA61479.1"/>
    <property type="status" value="JOINED"/>
    <property type="molecule type" value="Genomic_DNA"/>
</dbReference>
<dbReference type="EMBL" id="L31561">
    <property type="protein sequence ID" value="AAA61479.1"/>
    <property type="status" value="JOINED"/>
    <property type="molecule type" value="Genomic_DNA"/>
</dbReference>
<dbReference type="EMBL" id="L31563">
    <property type="protein sequence ID" value="AAA61479.1"/>
    <property type="status" value="JOINED"/>
    <property type="molecule type" value="Genomic_DNA"/>
</dbReference>
<dbReference type="EMBL" id="L31564">
    <property type="protein sequence ID" value="AAA61479.1"/>
    <property type="status" value="JOINED"/>
    <property type="molecule type" value="Genomic_DNA"/>
</dbReference>
<dbReference type="EMBL" id="L31565">
    <property type="protein sequence ID" value="AAA61479.1"/>
    <property type="status" value="JOINED"/>
    <property type="molecule type" value="Genomic_DNA"/>
</dbReference>
<dbReference type="EMBL" id="L31566">
    <property type="protein sequence ID" value="AAA61479.1"/>
    <property type="status" value="JOINED"/>
    <property type="molecule type" value="Genomic_DNA"/>
</dbReference>
<dbReference type="EMBL" id="L31567">
    <property type="protein sequence ID" value="AAA61479.1"/>
    <property type="status" value="JOINED"/>
    <property type="molecule type" value="Genomic_DNA"/>
</dbReference>
<dbReference type="EMBL" id="L31568">
    <property type="protein sequence ID" value="AAA61479.1"/>
    <property type="status" value="JOINED"/>
    <property type="molecule type" value="Genomic_DNA"/>
</dbReference>
<dbReference type="EMBL" id="L31569">
    <property type="protein sequence ID" value="AAA61479.1"/>
    <property type="status" value="JOINED"/>
    <property type="molecule type" value="Genomic_DNA"/>
</dbReference>
<dbReference type="EMBL" id="L31570">
    <property type="protein sequence ID" value="AAA61479.1"/>
    <property type="status" value="JOINED"/>
    <property type="molecule type" value="Genomic_DNA"/>
</dbReference>
<dbReference type="EMBL" id="L31571">
    <property type="protein sequence ID" value="AAA61479.1"/>
    <property type="status" value="JOINED"/>
    <property type="molecule type" value="Genomic_DNA"/>
</dbReference>
<dbReference type="EMBL" id="U13433">
    <property type="protein sequence ID" value="AAC51347.1"/>
    <property type="molecule type" value="Genomic_DNA"/>
</dbReference>
<dbReference type="EMBL" id="U13410">
    <property type="protein sequence ID" value="AAC51347.1"/>
    <property type="status" value="JOINED"/>
    <property type="molecule type" value="Genomic_DNA"/>
</dbReference>
<dbReference type="EMBL" id="U13412">
    <property type="protein sequence ID" value="AAC51347.1"/>
    <property type="status" value="JOINED"/>
    <property type="molecule type" value="Genomic_DNA"/>
</dbReference>
<dbReference type="EMBL" id="U13413">
    <property type="protein sequence ID" value="AAC51347.1"/>
    <property type="status" value="JOINED"/>
    <property type="molecule type" value="Genomic_DNA"/>
</dbReference>
<dbReference type="EMBL" id="U13414">
    <property type="protein sequence ID" value="AAC51347.1"/>
    <property type="status" value="JOINED"/>
    <property type="molecule type" value="Genomic_DNA"/>
</dbReference>
<dbReference type="EMBL" id="U13415">
    <property type="protein sequence ID" value="AAC51347.1"/>
    <property type="status" value="JOINED"/>
    <property type="molecule type" value="Genomic_DNA"/>
</dbReference>
<dbReference type="EMBL" id="U13416">
    <property type="protein sequence ID" value="AAC51347.1"/>
    <property type="status" value="JOINED"/>
    <property type="molecule type" value="Genomic_DNA"/>
</dbReference>
<dbReference type="EMBL" id="U13417">
    <property type="protein sequence ID" value="AAC51347.1"/>
    <property type="status" value="JOINED"/>
    <property type="molecule type" value="Genomic_DNA"/>
</dbReference>
<dbReference type="EMBL" id="U13422">
    <property type="protein sequence ID" value="AAC51347.1"/>
    <property type="status" value="JOINED"/>
    <property type="molecule type" value="Genomic_DNA"/>
</dbReference>
<dbReference type="EMBL" id="U13423">
    <property type="protein sequence ID" value="AAC51347.1"/>
    <property type="status" value="JOINED"/>
    <property type="molecule type" value="Genomic_DNA"/>
</dbReference>
<dbReference type="EMBL" id="U13424">
    <property type="protein sequence ID" value="AAC51347.1"/>
    <property type="status" value="JOINED"/>
    <property type="molecule type" value="Genomic_DNA"/>
</dbReference>
<dbReference type="EMBL" id="U13425">
    <property type="protein sequence ID" value="AAC51347.1"/>
    <property type="status" value="JOINED"/>
    <property type="molecule type" value="Genomic_DNA"/>
</dbReference>
<dbReference type="EMBL" id="U13427">
    <property type="protein sequence ID" value="AAC51347.1"/>
    <property type="status" value="JOINED"/>
    <property type="molecule type" value="Genomic_DNA"/>
</dbReference>
<dbReference type="EMBL" id="U13428">
    <property type="protein sequence ID" value="AAC51347.1"/>
    <property type="status" value="JOINED"/>
    <property type="molecule type" value="Genomic_DNA"/>
</dbReference>
<dbReference type="EMBL" id="U13429">
    <property type="protein sequence ID" value="AAC51347.1"/>
    <property type="status" value="JOINED"/>
    <property type="molecule type" value="Genomic_DNA"/>
</dbReference>
<dbReference type="EMBL" id="U13430">
    <property type="protein sequence ID" value="AAC51347.1"/>
    <property type="status" value="JOINED"/>
    <property type="molecule type" value="Genomic_DNA"/>
</dbReference>
<dbReference type="EMBL" id="U13431">
    <property type="protein sequence ID" value="AAC51347.1"/>
    <property type="status" value="JOINED"/>
    <property type="molecule type" value="Genomic_DNA"/>
</dbReference>
<dbReference type="EMBL" id="U13432">
    <property type="protein sequence ID" value="AAC51347.1"/>
    <property type="status" value="JOINED"/>
    <property type="molecule type" value="Genomic_DNA"/>
</dbReference>
<dbReference type="EMBL" id="U78027">
    <property type="protein sequence ID" value="AAB64205.1"/>
    <property type="molecule type" value="Genomic_DNA"/>
</dbReference>
<dbReference type="EMBL" id="AK314382">
    <property type="protein sequence ID" value="BAG37008.1"/>
    <property type="molecule type" value="mRNA"/>
</dbReference>
<dbReference type="EMBL" id="AL035422">
    <property type="status" value="NOT_ANNOTATED_CDS"/>
    <property type="molecule type" value="Genomic_DNA"/>
</dbReference>
<dbReference type="EMBL" id="BC109079">
    <property type="protein sequence ID" value="AAI09080.1"/>
    <property type="molecule type" value="mRNA"/>
</dbReference>
<dbReference type="EMBL" id="BC109080">
    <property type="protein sequence ID" value="AAI09081.1"/>
    <property type="molecule type" value="mRNA"/>
</dbReference>
<dbReference type="CCDS" id="CCDS14482.1">
    <molecule id="Q06187-1"/>
</dbReference>
<dbReference type="CCDS" id="CCDS76003.1">
    <molecule id="Q06187-2"/>
</dbReference>
<dbReference type="PIR" id="I37212">
    <property type="entry name" value="A45184"/>
</dbReference>
<dbReference type="RefSeq" id="NP_000052.1">
    <molecule id="Q06187-1"/>
    <property type="nucleotide sequence ID" value="NM_000061.3"/>
</dbReference>
<dbReference type="RefSeq" id="NP_001274273.1">
    <molecule id="Q06187-2"/>
    <property type="nucleotide sequence ID" value="NM_001287344.2"/>
</dbReference>
<dbReference type="RefSeq" id="NP_001274274.1">
    <property type="nucleotide sequence ID" value="NM_001287345.1"/>
</dbReference>
<dbReference type="PDB" id="1AWW">
    <property type="method" value="NMR"/>
    <property type="chains" value="A=212-275"/>
</dbReference>
<dbReference type="PDB" id="1AWX">
    <property type="method" value="NMR"/>
    <property type="chains" value="A=212-275"/>
</dbReference>
<dbReference type="PDB" id="1B55">
    <property type="method" value="X-ray"/>
    <property type="resolution" value="2.40 A"/>
    <property type="chains" value="A/B=2-170"/>
</dbReference>
<dbReference type="PDB" id="1BTK">
    <property type="method" value="X-ray"/>
    <property type="resolution" value="1.60 A"/>
    <property type="chains" value="A/B=2-170"/>
</dbReference>
<dbReference type="PDB" id="1BWN">
    <property type="method" value="X-ray"/>
    <property type="resolution" value="2.10 A"/>
    <property type="chains" value="A/B=2-170"/>
</dbReference>
<dbReference type="PDB" id="1K2P">
    <property type="method" value="X-ray"/>
    <property type="resolution" value="2.10 A"/>
    <property type="chains" value="A/B=397-659"/>
</dbReference>
<dbReference type="PDB" id="1QLY">
    <property type="method" value="NMR"/>
    <property type="chains" value="A=216-273"/>
</dbReference>
<dbReference type="PDB" id="2GE9">
    <property type="method" value="NMR"/>
    <property type="chains" value="A=270-387"/>
</dbReference>
<dbReference type="PDB" id="2Z0P">
    <property type="method" value="X-ray"/>
    <property type="resolution" value="2.58 A"/>
    <property type="chains" value="A/B/C/D=2-170"/>
</dbReference>
<dbReference type="PDB" id="3GEN">
    <property type="method" value="X-ray"/>
    <property type="resolution" value="1.60 A"/>
    <property type="chains" value="A=382-659"/>
</dbReference>
<dbReference type="PDB" id="3K54">
    <property type="method" value="X-ray"/>
    <property type="resolution" value="1.94 A"/>
    <property type="chains" value="A=382-659"/>
</dbReference>
<dbReference type="PDB" id="3OCS">
    <property type="method" value="X-ray"/>
    <property type="resolution" value="1.80 A"/>
    <property type="chains" value="A=393-656"/>
</dbReference>
<dbReference type="PDB" id="3OCT">
    <property type="method" value="X-ray"/>
    <property type="resolution" value="1.95 A"/>
    <property type="chains" value="A=393-656"/>
</dbReference>
<dbReference type="PDB" id="3P08">
    <property type="method" value="X-ray"/>
    <property type="resolution" value="2.30 A"/>
    <property type="chains" value="A/B=393-659"/>
</dbReference>
<dbReference type="PDB" id="3PIX">
    <property type="method" value="X-ray"/>
    <property type="resolution" value="1.85 A"/>
    <property type="chains" value="A=387-659"/>
</dbReference>
<dbReference type="PDB" id="3PIY">
    <property type="method" value="X-ray"/>
    <property type="resolution" value="2.55 A"/>
    <property type="chains" value="A=387-659"/>
</dbReference>
<dbReference type="PDB" id="3PIZ">
    <property type="method" value="X-ray"/>
    <property type="resolution" value="2.21 A"/>
    <property type="chains" value="A=387-659"/>
</dbReference>
<dbReference type="PDB" id="3PJ1">
    <property type="method" value="X-ray"/>
    <property type="resolution" value="2.00 A"/>
    <property type="chains" value="A=387-659"/>
</dbReference>
<dbReference type="PDB" id="3PJ2">
    <property type="method" value="X-ray"/>
    <property type="resolution" value="1.75 A"/>
    <property type="chains" value="A=387-659"/>
</dbReference>
<dbReference type="PDB" id="3PJ3">
    <property type="method" value="X-ray"/>
    <property type="resolution" value="1.85 A"/>
    <property type="chains" value="A=387-659"/>
</dbReference>
<dbReference type="PDB" id="4NWM">
    <property type="method" value="X-ray"/>
    <property type="resolution" value="2.03 A"/>
    <property type="chains" value="A/B=396-657"/>
</dbReference>
<dbReference type="PDB" id="4OT5">
    <property type="method" value="X-ray"/>
    <property type="resolution" value="1.55 A"/>
    <property type="chains" value="A=378-659"/>
</dbReference>
<dbReference type="PDB" id="4OT6">
    <property type="method" value="X-ray"/>
    <property type="resolution" value="2.05 A"/>
    <property type="chains" value="A=378-659"/>
</dbReference>
<dbReference type="PDB" id="4OTF">
    <property type="method" value="X-ray"/>
    <property type="resolution" value="1.95 A"/>
    <property type="chains" value="A=393-657"/>
</dbReference>
<dbReference type="PDB" id="4OTQ">
    <property type="method" value="X-ray"/>
    <property type="resolution" value="1.55 A"/>
    <property type="chains" value="A=378-659"/>
</dbReference>
<dbReference type="PDB" id="4OTR">
    <property type="method" value="X-ray"/>
    <property type="resolution" value="1.95 A"/>
    <property type="chains" value="A=378-659"/>
</dbReference>
<dbReference type="PDB" id="4RFY">
    <property type="method" value="X-ray"/>
    <property type="resolution" value="1.70 A"/>
    <property type="chains" value="A=378-659"/>
</dbReference>
<dbReference type="PDB" id="4RFZ">
    <property type="method" value="X-ray"/>
    <property type="resolution" value="1.17 A"/>
    <property type="chains" value="A=378-659"/>
</dbReference>
<dbReference type="PDB" id="4RG0">
    <property type="method" value="X-ray"/>
    <property type="resolution" value="2.50 A"/>
    <property type="chains" value="A=378-659"/>
</dbReference>
<dbReference type="PDB" id="4RX5">
    <property type="method" value="X-ray"/>
    <property type="resolution" value="1.36 A"/>
    <property type="chains" value="A=393-657"/>
</dbReference>
<dbReference type="PDB" id="4YHF">
    <property type="method" value="X-ray"/>
    <property type="resolution" value="2.20 A"/>
    <property type="chains" value="A/B=382-659"/>
</dbReference>
<dbReference type="PDB" id="4Z3V">
    <property type="method" value="X-ray"/>
    <property type="resolution" value="1.60 A"/>
    <property type="chains" value="A=382-659"/>
</dbReference>
<dbReference type="PDB" id="4ZLY">
    <property type="method" value="X-ray"/>
    <property type="resolution" value="1.65 A"/>
    <property type="chains" value="A=389-658"/>
</dbReference>
<dbReference type="PDB" id="4ZLZ">
    <property type="method" value="X-ray"/>
    <property type="resolution" value="2.00 A"/>
    <property type="chains" value="A=389-658"/>
</dbReference>
<dbReference type="PDB" id="5BPY">
    <property type="method" value="X-ray"/>
    <property type="resolution" value="2.31 A"/>
    <property type="chains" value="A/B=396-659"/>
</dbReference>
<dbReference type="PDB" id="5BQ0">
    <property type="method" value="X-ray"/>
    <property type="resolution" value="1.57 A"/>
    <property type="chains" value="A=382-659"/>
</dbReference>
<dbReference type="PDB" id="5FBN">
    <property type="method" value="X-ray"/>
    <property type="resolution" value="1.80 A"/>
    <property type="chains" value="C/D=389-659"/>
</dbReference>
<dbReference type="PDB" id="5FBO">
    <property type="method" value="X-ray"/>
    <property type="resolution" value="1.89 A"/>
    <property type="chains" value="A=389-659"/>
</dbReference>
<dbReference type="PDB" id="5J87">
    <property type="method" value="X-ray"/>
    <property type="resolution" value="1.59 A"/>
    <property type="chains" value="A/B/C/D=385-658"/>
</dbReference>
<dbReference type="PDB" id="5JRS">
    <property type="method" value="X-ray"/>
    <property type="resolution" value="1.97 A"/>
    <property type="chains" value="A/B=396-659"/>
</dbReference>
<dbReference type="PDB" id="5KUP">
    <property type="method" value="X-ray"/>
    <property type="resolution" value="1.39 A"/>
    <property type="chains" value="A=393-657"/>
</dbReference>
<dbReference type="PDB" id="5P9F">
    <property type="method" value="X-ray"/>
    <property type="resolution" value="1.71 A"/>
    <property type="chains" value="A=382-659"/>
</dbReference>
<dbReference type="PDB" id="5P9G">
    <property type="method" value="X-ray"/>
    <property type="resolution" value="1.75 A"/>
    <property type="chains" value="A=382-659"/>
</dbReference>
<dbReference type="PDB" id="5P9H">
    <property type="method" value="X-ray"/>
    <property type="resolution" value="1.95 A"/>
    <property type="chains" value="A=382-659"/>
</dbReference>
<dbReference type="PDB" id="5P9I">
    <property type="method" value="X-ray"/>
    <property type="resolution" value="1.11 A"/>
    <property type="chains" value="A=382-659"/>
</dbReference>
<dbReference type="PDB" id="5P9J">
    <property type="method" value="X-ray"/>
    <property type="resolution" value="1.08 A"/>
    <property type="chains" value="A=382-659"/>
</dbReference>
<dbReference type="PDB" id="5P9K">
    <property type="method" value="X-ray"/>
    <property type="resolution" value="1.28 A"/>
    <property type="chains" value="A=382-659"/>
</dbReference>
<dbReference type="PDB" id="5P9L">
    <property type="method" value="X-ray"/>
    <property type="resolution" value="1.25 A"/>
    <property type="chains" value="A=382-659"/>
</dbReference>
<dbReference type="PDB" id="5P9M">
    <property type="method" value="X-ray"/>
    <property type="resolution" value="1.41 A"/>
    <property type="chains" value="A=382-659"/>
</dbReference>
<dbReference type="PDB" id="5T18">
    <property type="method" value="X-ray"/>
    <property type="resolution" value="1.50 A"/>
    <property type="chains" value="A=396-659"/>
</dbReference>
<dbReference type="PDB" id="5U9D">
    <property type="method" value="X-ray"/>
    <property type="resolution" value="1.33 A"/>
    <property type="chains" value="A=389-659"/>
</dbReference>
<dbReference type="PDB" id="5VFI">
    <property type="method" value="X-ray"/>
    <property type="resolution" value="1.59 A"/>
    <property type="chains" value="A=389-659"/>
</dbReference>
<dbReference type="PDB" id="5VGO">
    <property type="method" value="X-ray"/>
    <property type="resolution" value="1.62 A"/>
    <property type="chains" value="A=393-657"/>
</dbReference>
<dbReference type="PDB" id="5XYZ">
    <property type="method" value="X-ray"/>
    <property type="resolution" value="2.64 A"/>
    <property type="chains" value="A/B=393-656"/>
</dbReference>
<dbReference type="PDB" id="5ZZ4">
    <property type="method" value="X-ray"/>
    <property type="resolution" value="2.90 A"/>
    <property type="chains" value="A/B/C/D/E/F=393-656"/>
</dbReference>
<dbReference type="PDB" id="6AUA">
    <property type="method" value="X-ray"/>
    <property type="resolution" value="1.66 A"/>
    <property type="chains" value="A=394-656"/>
</dbReference>
<dbReference type="PDB" id="6AUB">
    <property type="method" value="X-ray"/>
    <property type="resolution" value="1.65 A"/>
    <property type="chains" value="A=395-657"/>
</dbReference>
<dbReference type="PDB" id="6BIK">
    <property type="method" value="X-ray"/>
    <property type="resolution" value="1.90 A"/>
    <property type="chains" value="A=392-657"/>
</dbReference>
<dbReference type="PDB" id="6BKE">
    <property type="method" value="X-ray"/>
    <property type="resolution" value="1.95 A"/>
    <property type="chains" value="A=392-657"/>
</dbReference>
<dbReference type="PDB" id="6BKH">
    <property type="method" value="X-ray"/>
    <property type="resolution" value="1.79 A"/>
    <property type="chains" value="A=392-657"/>
</dbReference>
<dbReference type="PDB" id="6BKW">
    <property type="method" value="X-ray"/>
    <property type="resolution" value="1.50 A"/>
    <property type="chains" value="A=392-657"/>
</dbReference>
<dbReference type="PDB" id="6BLN">
    <property type="method" value="X-ray"/>
    <property type="resolution" value="1.30 A"/>
    <property type="chains" value="A=392-657"/>
</dbReference>
<dbReference type="PDB" id="6DI0">
    <property type="method" value="X-ray"/>
    <property type="resolution" value="1.30 A"/>
    <property type="chains" value="A=389-659"/>
</dbReference>
<dbReference type="PDB" id="6DI1">
    <property type="method" value="X-ray"/>
    <property type="resolution" value="1.10 A"/>
    <property type="chains" value="A=389-659"/>
</dbReference>
<dbReference type="PDB" id="6DI3">
    <property type="method" value="X-ray"/>
    <property type="resolution" value="2.00 A"/>
    <property type="chains" value="A=389-659"/>
</dbReference>
<dbReference type="PDB" id="6DI5">
    <property type="method" value="X-ray"/>
    <property type="resolution" value="1.42 A"/>
    <property type="chains" value="A=389-659"/>
</dbReference>
<dbReference type="PDB" id="6DI9">
    <property type="method" value="X-ray"/>
    <property type="resolution" value="1.25 A"/>
    <property type="chains" value="A=389-659"/>
</dbReference>
<dbReference type="PDB" id="6E4F">
    <property type="method" value="X-ray"/>
    <property type="resolution" value="1.15 A"/>
    <property type="chains" value="A=387-659"/>
</dbReference>
<dbReference type="PDB" id="6EP9">
    <property type="method" value="X-ray"/>
    <property type="resolution" value="2.01 A"/>
    <property type="chains" value="A=378-659"/>
</dbReference>
<dbReference type="PDB" id="6HRP">
    <property type="method" value="X-ray"/>
    <property type="resolution" value="1.12 A"/>
    <property type="chains" value="A=378-659"/>
</dbReference>
<dbReference type="PDB" id="6HRT">
    <property type="method" value="X-ray"/>
    <property type="resolution" value="1.36 A"/>
    <property type="chains" value="A=378-659"/>
</dbReference>
<dbReference type="PDB" id="6HTF">
    <property type="method" value="X-ray"/>
    <property type="resolution" value="2.10 A"/>
    <property type="chains" value="A=271-383"/>
</dbReference>
<dbReference type="PDB" id="6J6M">
    <property type="method" value="X-ray"/>
    <property type="resolution" value="1.25 A"/>
    <property type="chains" value="A=393-659"/>
</dbReference>
<dbReference type="PDB" id="6N9P">
    <property type="method" value="X-ray"/>
    <property type="resolution" value="2.23 A"/>
    <property type="chains" value="A=389-659"/>
</dbReference>
<dbReference type="PDB" id="6NFH">
    <property type="method" value="X-ray"/>
    <property type="resolution" value="1.40 A"/>
    <property type="chains" value="A=389-659"/>
</dbReference>
<dbReference type="PDB" id="6NFI">
    <property type="method" value="X-ray"/>
    <property type="resolution" value="2.41 A"/>
    <property type="chains" value="A=392-659"/>
</dbReference>
<dbReference type="PDB" id="6NZM">
    <property type="method" value="X-ray"/>
    <property type="resolution" value="1.72 A"/>
    <property type="chains" value="A/D=382-659"/>
</dbReference>
<dbReference type="PDB" id="6O8I">
    <property type="method" value="X-ray"/>
    <property type="resolution" value="1.42 A"/>
    <property type="chains" value="A=391-659"/>
</dbReference>
<dbReference type="PDB" id="6OMU">
    <property type="method" value="X-ray"/>
    <property type="resolution" value="1.41 A"/>
    <property type="chains" value="A=389-659"/>
</dbReference>
<dbReference type="PDB" id="6S90">
    <property type="method" value="X-ray"/>
    <property type="resolution" value="1.82 A"/>
    <property type="chains" value="A/B=393-658"/>
</dbReference>
<dbReference type="PDB" id="6TFP">
    <property type="method" value="X-ray"/>
    <property type="resolution" value="2.00 A"/>
    <property type="chains" value="A/B/C/D/E=385-659"/>
</dbReference>
<dbReference type="PDB" id="6TSE">
    <property type="method" value="X-ray"/>
    <property type="resolution" value="1.41 A"/>
    <property type="chains" value="A/B=2-170"/>
</dbReference>
<dbReference type="PDB" id="6TT2">
    <property type="method" value="X-ray"/>
    <property type="resolution" value="1.36 A"/>
    <property type="chains" value="A/B=2-170"/>
</dbReference>
<dbReference type="PDB" id="6TUH">
    <property type="method" value="X-ray"/>
    <property type="resolution" value="2.25 A"/>
    <property type="chains" value="A/B/C/D=2-170"/>
</dbReference>
<dbReference type="PDB" id="6TVN">
    <property type="method" value="X-ray"/>
    <property type="resolution" value="2.31 A"/>
    <property type="chains" value="A/B/C/D=2-170"/>
</dbReference>
<dbReference type="PDB" id="6VXQ">
    <property type="method" value="X-ray"/>
    <property type="resolution" value="1.40 A"/>
    <property type="chains" value="A=371-659"/>
</dbReference>
<dbReference type="PDB" id="6W06">
    <property type="method" value="X-ray"/>
    <property type="resolution" value="1.55 A"/>
    <property type="chains" value="A=371-659"/>
</dbReference>
<dbReference type="PDB" id="6W07">
    <property type="method" value="X-ray"/>
    <property type="resolution" value="1.51 A"/>
    <property type="chains" value="A=371-659"/>
</dbReference>
<dbReference type="PDB" id="6W7O">
    <property type="method" value="X-ray"/>
    <property type="resolution" value="2.17 A"/>
    <property type="chains" value="A/B=384-659"/>
</dbReference>
<dbReference type="PDB" id="6W8I">
    <property type="method" value="X-ray"/>
    <property type="resolution" value="3.80 A"/>
    <property type="chains" value="A/B/C=384-659"/>
</dbReference>
<dbReference type="PDB" id="6X3N">
    <property type="method" value="X-ray"/>
    <property type="resolution" value="1.95 A"/>
    <property type="chains" value="A=389-659"/>
</dbReference>
<dbReference type="PDB" id="6X3O">
    <property type="method" value="X-ray"/>
    <property type="resolution" value="1.90 A"/>
    <property type="chains" value="A/B=389-659"/>
</dbReference>
<dbReference type="PDB" id="6X3P">
    <property type="method" value="X-ray"/>
    <property type="resolution" value="1.34 A"/>
    <property type="chains" value="A=389-659"/>
</dbReference>
<dbReference type="PDB" id="6XE4">
    <property type="method" value="X-ray"/>
    <property type="resolution" value="1.60 A"/>
    <property type="chains" value="A=393-657"/>
</dbReference>
<dbReference type="PDB" id="6YYF">
    <property type="method" value="X-ray"/>
    <property type="resolution" value="1.93 A"/>
    <property type="chains" value="A/B=2-170"/>
</dbReference>
<dbReference type="PDB" id="6YYG">
    <property type="method" value="X-ray"/>
    <property type="resolution" value="1.95 A"/>
    <property type="chains" value="A/B/C/D=2-170"/>
</dbReference>
<dbReference type="PDB" id="6YYK">
    <property type="method" value="X-ray"/>
    <property type="resolution" value="2.04 A"/>
    <property type="chains" value="A/B=2-170"/>
</dbReference>
<dbReference type="PDB" id="7KXL">
    <property type="method" value="X-ray"/>
    <property type="resolution" value="1.84 A"/>
    <property type="chains" value="A=392-659"/>
</dbReference>
<dbReference type="PDB" id="7KXM">
    <property type="method" value="X-ray"/>
    <property type="resolution" value="1.33 A"/>
    <property type="chains" value="A=389-659"/>
</dbReference>
<dbReference type="PDB" id="7KXN">
    <property type="method" value="X-ray"/>
    <property type="resolution" value="1.34 A"/>
    <property type="chains" value="A=393-659"/>
</dbReference>
<dbReference type="PDB" id="7KXO">
    <property type="method" value="X-ray"/>
    <property type="resolution" value="1.94 A"/>
    <property type="chains" value="A=393-659"/>
</dbReference>
<dbReference type="PDB" id="7KXP">
    <property type="method" value="X-ray"/>
    <property type="resolution" value="1.83 A"/>
    <property type="chains" value="A=389-659"/>
</dbReference>
<dbReference type="PDB" id="7KXQ">
    <property type="method" value="X-ray"/>
    <property type="resolution" value="1.38 A"/>
    <property type="chains" value="A=390-659"/>
</dbReference>
<dbReference type="PDB" id="7L5O">
    <property type="method" value="X-ray"/>
    <property type="resolution" value="1.21 A"/>
    <property type="chains" value="A=389-659"/>
</dbReference>
<dbReference type="PDB" id="7L5P">
    <property type="method" value="X-ray"/>
    <property type="resolution" value="2.14 A"/>
    <property type="chains" value="A/B=389-659"/>
</dbReference>
<dbReference type="PDB" id="7LTY">
    <property type="method" value="X-ray"/>
    <property type="resolution" value="1.69 A"/>
    <property type="chains" value="A=393-659"/>
</dbReference>
<dbReference type="PDB" id="7LTZ">
    <property type="method" value="X-ray"/>
    <property type="resolution" value="1.53 A"/>
    <property type="chains" value="A=393-659"/>
</dbReference>
<dbReference type="PDB" id="7N4Q">
    <property type="method" value="X-ray"/>
    <property type="resolution" value="1.50 A"/>
    <property type="chains" value="A=391-659"/>
</dbReference>
<dbReference type="PDB" id="7N4R">
    <property type="method" value="X-ray"/>
    <property type="resolution" value="1.62 A"/>
    <property type="chains" value="A=391-659"/>
</dbReference>
<dbReference type="PDB" id="7N4S">
    <property type="method" value="X-ray"/>
    <property type="resolution" value="2.05 A"/>
    <property type="chains" value="A=391-659"/>
</dbReference>
<dbReference type="PDB" id="7N5O">
    <property type="method" value="X-ray"/>
    <property type="resolution" value="1.25 A"/>
    <property type="chains" value="A=382-659"/>
</dbReference>
<dbReference type="PDB" id="7N5R">
    <property type="method" value="X-ray"/>
    <property type="resolution" value="1.55 A"/>
    <property type="chains" value="A=382-659"/>
</dbReference>
<dbReference type="PDB" id="7N5X">
    <property type="method" value="X-ray"/>
    <property type="resolution" value="1.60 A"/>
    <property type="chains" value="A=382-659"/>
</dbReference>
<dbReference type="PDB" id="7N5Y">
    <property type="method" value="X-ray"/>
    <property type="resolution" value="1.85 A"/>
    <property type="chains" value="A=382-659"/>
</dbReference>
<dbReference type="PDB" id="7R60">
    <property type="method" value="X-ray"/>
    <property type="resolution" value="1.94 A"/>
    <property type="chains" value="A=389-659"/>
</dbReference>
<dbReference type="PDB" id="7R61">
    <property type="method" value="X-ray"/>
    <property type="resolution" value="1.52 A"/>
    <property type="chains" value="A=390-659"/>
</dbReference>
<dbReference type="PDB" id="7YC9">
    <property type="method" value="X-ray"/>
    <property type="resolution" value="1.40 A"/>
    <property type="chains" value="A=393-659"/>
</dbReference>
<dbReference type="PDB" id="8DSO">
    <property type="method" value="X-ray"/>
    <property type="resolution" value="2.33 A"/>
    <property type="chains" value="B=384-659"/>
</dbReference>
<dbReference type="PDB" id="8E2M">
    <property type="method" value="X-ray"/>
    <property type="resolution" value="1.90 A"/>
    <property type="chains" value="A=389-659"/>
</dbReference>
<dbReference type="PDB" id="8EJB">
    <property type="method" value="X-ray"/>
    <property type="resolution" value="1.58 A"/>
    <property type="chains" value="A=389-658"/>
</dbReference>
<dbReference type="PDB" id="8FLG">
    <property type="method" value="X-ray"/>
    <property type="resolution" value="2.20 A"/>
    <property type="chains" value="A=371-659"/>
</dbReference>
<dbReference type="PDB" id="8FLH">
    <property type="method" value="X-ray"/>
    <property type="resolution" value="1.55 A"/>
    <property type="chains" value="A=382-659"/>
</dbReference>
<dbReference type="PDB" id="8FLL">
    <property type="method" value="X-ray"/>
    <property type="resolution" value="1.50 A"/>
    <property type="chains" value="A=389-659"/>
</dbReference>
<dbReference type="PDB" id="8FLN">
    <property type="method" value="X-ray"/>
    <property type="resolution" value="1.33 A"/>
    <property type="chains" value="A=389-659"/>
</dbReference>
<dbReference type="PDB" id="8FLV">
    <property type="method" value="X-ray"/>
    <property type="resolution" value="1.30 A"/>
    <property type="chains" value="A=382-659"/>
</dbReference>
<dbReference type="PDB" id="8GC7">
    <property type="method" value="X-ray"/>
    <property type="resolution" value="1.90 A"/>
    <property type="chains" value="A=389-658"/>
</dbReference>
<dbReference type="PDB" id="8GC8">
    <property type="method" value="X-ray"/>
    <property type="resolution" value="1.75 A"/>
    <property type="chains" value="A=389-658"/>
</dbReference>
<dbReference type="PDB" id="8TU3">
    <property type="method" value="X-ray"/>
    <property type="resolution" value="1.70 A"/>
    <property type="chains" value="A=382-659"/>
</dbReference>
<dbReference type="PDB" id="8TU4">
    <property type="method" value="X-ray"/>
    <property type="resolution" value="1.60 A"/>
    <property type="chains" value="A=382-659"/>
</dbReference>
<dbReference type="PDB" id="8TU5">
    <property type="method" value="X-ray"/>
    <property type="resolution" value="2.10 A"/>
    <property type="chains" value="A=382-659"/>
</dbReference>
<dbReference type="PDB" id="8U2D">
    <property type="method" value="X-ray"/>
    <property type="resolution" value="1.95 A"/>
    <property type="chains" value="A=389-658"/>
</dbReference>
<dbReference type="PDB" id="8U2E">
    <property type="method" value="X-ray"/>
    <property type="resolution" value="1.90 A"/>
    <property type="chains" value="A=389-658"/>
</dbReference>
<dbReference type="PDB" id="8YVV">
    <property type="method" value="X-ray"/>
    <property type="resolution" value="2.25 A"/>
    <property type="chains" value="A/B=394-659"/>
</dbReference>
<dbReference type="PDBsum" id="1AWW"/>
<dbReference type="PDBsum" id="1AWX"/>
<dbReference type="PDBsum" id="1B55"/>
<dbReference type="PDBsum" id="1BTK"/>
<dbReference type="PDBsum" id="1BWN"/>
<dbReference type="PDBsum" id="1K2P"/>
<dbReference type="PDBsum" id="1QLY"/>
<dbReference type="PDBsum" id="2GE9"/>
<dbReference type="PDBsum" id="2Z0P"/>
<dbReference type="PDBsum" id="3GEN"/>
<dbReference type="PDBsum" id="3K54"/>
<dbReference type="PDBsum" id="3OCS"/>
<dbReference type="PDBsum" id="3OCT"/>
<dbReference type="PDBsum" id="3P08"/>
<dbReference type="PDBsum" id="3PIX"/>
<dbReference type="PDBsum" id="3PIY"/>
<dbReference type="PDBsum" id="3PIZ"/>
<dbReference type="PDBsum" id="3PJ1"/>
<dbReference type="PDBsum" id="3PJ2"/>
<dbReference type="PDBsum" id="3PJ3"/>
<dbReference type="PDBsum" id="4NWM"/>
<dbReference type="PDBsum" id="4OT5"/>
<dbReference type="PDBsum" id="4OT6"/>
<dbReference type="PDBsum" id="4OTF"/>
<dbReference type="PDBsum" id="4OTQ"/>
<dbReference type="PDBsum" id="4OTR"/>
<dbReference type="PDBsum" id="4RFY"/>
<dbReference type="PDBsum" id="4RFZ"/>
<dbReference type="PDBsum" id="4RG0"/>
<dbReference type="PDBsum" id="4RX5"/>
<dbReference type="PDBsum" id="4YHF"/>
<dbReference type="PDBsum" id="4Z3V"/>
<dbReference type="PDBsum" id="4ZLY"/>
<dbReference type="PDBsum" id="4ZLZ"/>
<dbReference type="PDBsum" id="5BPY"/>
<dbReference type="PDBsum" id="5BQ0"/>
<dbReference type="PDBsum" id="5FBN"/>
<dbReference type="PDBsum" id="5FBO"/>
<dbReference type="PDBsum" id="5J87"/>
<dbReference type="PDBsum" id="5JRS"/>
<dbReference type="PDBsum" id="5KUP"/>
<dbReference type="PDBsum" id="5P9F"/>
<dbReference type="PDBsum" id="5P9G"/>
<dbReference type="PDBsum" id="5P9H"/>
<dbReference type="PDBsum" id="5P9I"/>
<dbReference type="PDBsum" id="5P9J"/>
<dbReference type="PDBsum" id="5P9K"/>
<dbReference type="PDBsum" id="5P9L"/>
<dbReference type="PDBsum" id="5P9M"/>
<dbReference type="PDBsum" id="5T18"/>
<dbReference type="PDBsum" id="5U9D"/>
<dbReference type="PDBsum" id="5VFI"/>
<dbReference type="PDBsum" id="5VGO"/>
<dbReference type="PDBsum" id="5XYZ"/>
<dbReference type="PDBsum" id="5ZZ4"/>
<dbReference type="PDBsum" id="6AUA"/>
<dbReference type="PDBsum" id="6AUB"/>
<dbReference type="PDBsum" id="6BIK"/>
<dbReference type="PDBsum" id="6BKE"/>
<dbReference type="PDBsum" id="6BKH"/>
<dbReference type="PDBsum" id="6BKW"/>
<dbReference type="PDBsum" id="6BLN"/>
<dbReference type="PDBsum" id="6DI0"/>
<dbReference type="PDBsum" id="6DI1"/>
<dbReference type="PDBsum" id="6DI3"/>
<dbReference type="PDBsum" id="6DI5"/>
<dbReference type="PDBsum" id="6DI9"/>
<dbReference type="PDBsum" id="6E4F"/>
<dbReference type="PDBsum" id="6EP9"/>
<dbReference type="PDBsum" id="6HRP"/>
<dbReference type="PDBsum" id="6HRT"/>
<dbReference type="PDBsum" id="6HTF"/>
<dbReference type="PDBsum" id="6J6M"/>
<dbReference type="PDBsum" id="6N9P"/>
<dbReference type="PDBsum" id="6NFH"/>
<dbReference type="PDBsum" id="6NFI"/>
<dbReference type="PDBsum" id="6NZM"/>
<dbReference type="PDBsum" id="6O8I"/>
<dbReference type="PDBsum" id="6OMU"/>
<dbReference type="PDBsum" id="6S90"/>
<dbReference type="PDBsum" id="6TFP"/>
<dbReference type="PDBsum" id="6TSE"/>
<dbReference type="PDBsum" id="6TT2"/>
<dbReference type="PDBsum" id="6TUH"/>
<dbReference type="PDBsum" id="6TVN"/>
<dbReference type="PDBsum" id="6VXQ"/>
<dbReference type="PDBsum" id="6W06"/>
<dbReference type="PDBsum" id="6W07"/>
<dbReference type="PDBsum" id="6W7O"/>
<dbReference type="PDBsum" id="6W8I"/>
<dbReference type="PDBsum" id="6X3N"/>
<dbReference type="PDBsum" id="6X3O"/>
<dbReference type="PDBsum" id="6X3P"/>
<dbReference type="PDBsum" id="6XE4"/>
<dbReference type="PDBsum" id="6YYF"/>
<dbReference type="PDBsum" id="6YYG"/>
<dbReference type="PDBsum" id="6YYK"/>
<dbReference type="PDBsum" id="7KXL"/>
<dbReference type="PDBsum" id="7KXM"/>
<dbReference type="PDBsum" id="7KXN"/>
<dbReference type="PDBsum" id="7KXO"/>
<dbReference type="PDBsum" id="7KXP"/>
<dbReference type="PDBsum" id="7KXQ"/>
<dbReference type="PDBsum" id="7L5O"/>
<dbReference type="PDBsum" id="7L5P"/>
<dbReference type="PDBsum" id="7LTY"/>
<dbReference type="PDBsum" id="7LTZ"/>
<dbReference type="PDBsum" id="7N4Q"/>
<dbReference type="PDBsum" id="7N4R"/>
<dbReference type="PDBsum" id="7N4S"/>
<dbReference type="PDBsum" id="7N5O"/>
<dbReference type="PDBsum" id="7N5R"/>
<dbReference type="PDBsum" id="7N5X"/>
<dbReference type="PDBsum" id="7N5Y"/>
<dbReference type="PDBsum" id="7R60"/>
<dbReference type="PDBsum" id="7R61"/>
<dbReference type="PDBsum" id="7YC9"/>
<dbReference type="PDBsum" id="8DSO"/>
<dbReference type="PDBsum" id="8E2M"/>
<dbReference type="PDBsum" id="8EJB"/>
<dbReference type="PDBsum" id="8FLG"/>
<dbReference type="PDBsum" id="8FLH"/>
<dbReference type="PDBsum" id="8FLL"/>
<dbReference type="PDBsum" id="8FLN"/>
<dbReference type="PDBsum" id="8FLV"/>
<dbReference type="PDBsum" id="8GC7"/>
<dbReference type="PDBsum" id="8GC8"/>
<dbReference type="PDBsum" id="8TU3"/>
<dbReference type="PDBsum" id="8TU4"/>
<dbReference type="PDBsum" id="8TU5"/>
<dbReference type="PDBsum" id="8U2D"/>
<dbReference type="PDBsum" id="8U2E"/>
<dbReference type="PDBsum" id="8YVV"/>
<dbReference type="BMRB" id="Q06187"/>
<dbReference type="SASBDB" id="Q06187"/>
<dbReference type="SMR" id="Q06187"/>
<dbReference type="BioGRID" id="107160">
    <property type="interactions" value="105"/>
</dbReference>
<dbReference type="CORUM" id="Q06187"/>
<dbReference type="DIP" id="DIP-34071N"/>
<dbReference type="ELM" id="Q06187"/>
<dbReference type="FunCoup" id="Q06187">
    <property type="interactions" value="988"/>
</dbReference>
<dbReference type="IntAct" id="Q06187">
    <property type="interactions" value="69"/>
</dbReference>
<dbReference type="MINT" id="Q06187"/>
<dbReference type="STRING" id="9606.ENSP00000483570"/>
<dbReference type="BindingDB" id="Q06187"/>
<dbReference type="ChEMBL" id="CHEMBL5251"/>
<dbReference type="DrugBank" id="DB18632">
    <property type="generic name" value="1-(3-fluoro-4-(7-(5-methyl-1H-imidazol-2-yl)-1-oxo-2,3-dihydro-1H-isoindo-1-4-yl)-phenyl)-3-(3-trifluoromethyl-phenyl)-urea"/>
</dbReference>
<dbReference type="DrugBank" id="DB15327">
    <property type="generic name" value="Abivertinib"/>
</dbReference>
<dbReference type="DrugBank" id="DB11703">
    <property type="generic name" value="Acalabrutinib"/>
</dbReference>
<dbReference type="DrugBank" id="DB15291">
    <property type="generic name" value="BMS-986142"/>
</dbReference>
<dbReference type="DrugBank" id="DB15347">
    <property type="generic name" value="Branebrutinib"/>
</dbReference>
<dbReference type="DrugBank" id="DB01254">
    <property type="generic name" value="Dasatinib"/>
</dbReference>
<dbReference type="DrugBank" id="DB15170">
    <property type="generic name" value="Evobrutinib"/>
</dbReference>
<dbReference type="DrugBank" id="DB14785">
    <property type="generic name" value="Fenebrutinib"/>
</dbReference>
<dbReference type="DrugBank" id="DB12010">
    <property type="generic name" value="Fostamatinib"/>
</dbReference>
<dbReference type="DrugBank" id="DB09053">
    <property type="generic name" value="Ibrutinib"/>
</dbReference>
<dbReference type="DrugBank" id="DB01863">
    <property type="generic name" value="Inositol 1,3,4,5-Tetrakisphosphate"/>
</dbReference>
<dbReference type="DrugBank" id="DB18866">
    <property type="generic name" value="Nemtabrutinib"/>
</dbReference>
<dbReference type="DrugBank" id="DB16272">
    <property type="generic name" value="Orelabrutinib"/>
</dbReference>
<dbReference type="DrugBank" id="DB17472">
    <property type="generic name" value="Pirtobrutinib"/>
</dbReference>
<dbReference type="DrugBank" id="DB16299">
    <property type="generic name" value="Poseltinib"/>
</dbReference>
<dbReference type="DrugBank" id="DB14924">
    <property type="generic name" value="Ritlecitinib"/>
</dbReference>
<dbReference type="DrugBank" id="DB11764">
    <property type="generic name" value="Spebrutinib"/>
</dbReference>
<dbReference type="DrugBank" id="DB15227">
    <property type="generic name" value="Tirabrutinib"/>
</dbReference>
<dbReference type="DrugBank" id="DB18715">
    <property type="generic name" value="Tolebrutinib"/>
</dbReference>
<dbReference type="DrugBank" id="DB16657">
    <property type="generic name" value="Vecabrutinib"/>
</dbReference>
<dbReference type="DrugBank" id="DB05204">
    <property type="generic name" value="XL418"/>
</dbReference>
<dbReference type="DrugBank" id="DB15035">
    <property type="generic name" value="Zanubrutinib"/>
</dbReference>
<dbReference type="DrugCentral" id="Q06187"/>
<dbReference type="GuidetoPHARMACOLOGY" id="1948"/>
<dbReference type="GlyGen" id="Q06187">
    <property type="glycosylation" value="3 sites, 1 O-linked glycan (1 site)"/>
</dbReference>
<dbReference type="iPTMnet" id="Q06187"/>
<dbReference type="PhosphoSitePlus" id="Q06187"/>
<dbReference type="BioMuta" id="BTK"/>
<dbReference type="DMDM" id="547759"/>
<dbReference type="CPTAC" id="CPTAC-2855"/>
<dbReference type="CPTAC" id="CPTAC-2856"/>
<dbReference type="jPOST" id="Q06187"/>
<dbReference type="MassIVE" id="Q06187"/>
<dbReference type="PaxDb" id="9606-ENSP00000483570"/>
<dbReference type="PeptideAtlas" id="Q06187"/>
<dbReference type="ProteomicsDB" id="58419">
    <molecule id="Q06187-1"/>
</dbReference>
<dbReference type="Pumba" id="Q06187"/>
<dbReference type="ABCD" id="Q06187">
    <property type="antibodies" value="7 sequenced antibodies"/>
</dbReference>
<dbReference type="Antibodypedia" id="699">
    <property type="antibodies" value="1343 antibodies from 50 providers"/>
</dbReference>
<dbReference type="CPTC" id="Q06187">
    <property type="antibodies" value="1 antibody"/>
</dbReference>
<dbReference type="DNASU" id="695"/>
<dbReference type="Ensembl" id="ENST00000308731.8">
    <molecule id="Q06187-1"/>
    <property type="protein sequence ID" value="ENSP00000308176.8"/>
    <property type="gene ID" value="ENSG00000010671.18"/>
</dbReference>
<dbReference type="Ensembl" id="ENST00000621635.4">
    <molecule id="Q06187-2"/>
    <property type="protein sequence ID" value="ENSP00000483570.1"/>
    <property type="gene ID" value="ENSG00000010671.18"/>
</dbReference>
<dbReference type="Ensembl" id="ENST00000695614.1">
    <molecule id="Q06187-1"/>
    <property type="protein sequence ID" value="ENSP00000512053.1"/>
    <property type="gene ID" value="ENSG00000010671.18"/>
</dbReference>
<dbReference type="Ensembl" id="ENST00000695615.1">
    <molecule id="Q06187-1"/>
    <property type="protein sequence ID" value="ENSP00000512054.1"/>
    <property type="gene ID" value="ENSG00000010671.18"/>
</dbReference>
<dbReference type="GeneID" id="695"/>
<dbReference type="KEGG" id="hsa:695"/>
<dbReference type="MANE-Select" id="ENST00000308731.8">
    <property type="protein sequence ID" value="ENSP00000308176.8"/>
    <property type="RefSeq nucleotide sequence ID" value="NM_000061.3"/>
    <property type="RefSeq protein sequence ID" value="NP_000052.1"/>
</dbReference>
<dbReference type="UCSC" id="uc004ehg.3">
    <molecule id="Q06187-1"/>
    <property type="organism name" value="human"/>
</dbReference>
<dbReference type="AGR" id="HGNC:1133"/>
<dbReference type="CTD" id="695"/>
<dbReference type="DisGeNET" id="695"/>
<dbReference type="GeneCards" id="BTK"/>
<dbReference type="GeneReviews" id="BTK"/>
<dbReference type="HGNC" id="HGNC:1133">
    <property type="gene designation" value="BTK"/>
</dbReference>
<dbReference type="HPA" id="ENSG00000010671">
    <property type="expression patterns" value="Tissue enhanced (bone marrow, lymphoid tissue)"/>
</dbReference>
<dbReference type="MalaCards" id="BTK"/>
<dbReference type="MIM" id="300300">
    <property type="type" value="gene"/>
</dbReference>
<dbReference type="MIM" id="300755">
    <property type="type" value="phenotype"/>
</dbReference>
<dbReference type="MIM" id="307200">
    <property type="type" value="phenotype"/>
</dbReference>
<dbReference type="neXtProt" id="NX_Q06187"/>
<dbReference type="OpenTargets" id="ENSG00000010671"/>
<dbReference type="Orphanet" id="632">
    <property type="disease" value="Short stature due to isolated growth hormone deficiency with X-linked hypogammaglobulinemia"/>
</dbReference>
<dbReference type="Orphanet" id="47">
    <property type="disease" value="X-linked agammaglobulinemia"/>
</dbReference>
<dbReference type="PharmGKB" id="PA25454"/>
<dbReference type="VEuPathDB" id="HostDB:ENSG00000010671"/>
<dbReference type="eggNOG" id="KOG0197">
    <property type="taxonomic scope" value="Eukaryota"/>
</dbReference>
<dbReference type="GeneTree" id="ENSGT00940000158469"/>
<dbReference type="InParanoid" id="Q06187"/>
<dbReference type="OrthoDB" id="4062651at2759"/>
<dbReference type="PAN-GO" id="Q06187">
    <property type="GO annotations" value="1 GO annotation based on evolutionary models"/>
</dbReference>
<dbReference type="PhylomeDB" id="Q06187"/>
<dbReference type="TreeFam" id="TF351634"/>
<dbReference type="BRENDA" id="2.7.10.2">
    <property type="organism ID" value="2681"/>
</dbReference>
<dbReference type="PathwayCommons" id="Q06187"/>
<dbReference type="Reactome" id="R-HSA-1236974">
    <property type="pathway name" value="ER-Phagosome pathway"/>
</dbReference>
<dbReference type="Reactome" id="R-HSA-166058">
    <property type="pathway name" value="MyD88:MAL(TIRAP) cascade initiated on plasma membrane"/>
</dbReference>
<dbReference type="Reactome" id="R-HSA-2029482">
    <property type="pathway name" value="Regulation of actin dynamics for phagocytic cup formation"/>
</dbReference>
<dbReference type="Reactome" id="R-HSA-2424491">
    <property type="pathway name" value="DAP12 signaling"/>
</dbReference>
<dbReference type="Reactome" id="R-HSA-2871809">
    <property type="pathway name" value="FCERI mediated Ca+2 mobilization"/>
</dbReference>
<dbReference type="Reactome" id="R-HSA-416476">
    <property type="pathway name" value="G alpha (q) signalling events"/>
</dbReference>
<dbReference type="Reactome" id="R-HSA-416482">
    <property type="pathway name" value="G alpha (12/13) signalling events"/>
</dbReference>
<dbReference type="Reactome" id="R-HSA-5602498">
    <property type="pathway name" value="MyD88 deficiency (TLR2/4)"/>
</dbReference>
<dbReference type="Reactome" id="R-HSA-5603041">
    <property type="pathway name" value="IRAK4 deficiency (TLR2/4)"/>
</dbReference>
<dbReference type="Reactome" id="R-HSA-5663213">
    <property type="pathway name" value="RHO GTPases Activate WASPs and WAVEs"/>
</dbReference>
<dbReference type="Reactome" id="R-HSA-8964315">
    <property type="pathway name" value="G beta:gamma signalling through BTK"/>
</dbReference>
<dbReference type="Reactome" id="R-HSA-9664422">
    <property type="pathway name" value="FCGR3A-mediated phagocytosis"/>
</dbReference>
<dbReference type="Reactome" id="R-HSA-9679191">
    <property type="pathway name" value="Potential therapeutics for SARS"/>
</dbReference>
<dbReference type="Reactome" id="R-HSA-983695">
    <property type="pathway name" value="Antigen activates B Cell Receptor (BCR) leading to generation of second messengers"/>
</dbReference>
<dbReference type="SignaLink" id="Q06187"/>
<dbReference type="SIGNOR" id="Q06187"/>
<dbReference type="BioGRID-ORCS" id="695">
    <property type="hits" value="25 hits in 823 CRISPR screens"/>
</dbReference>
<dbReference type="ChiTaRS" id="BTK">
    <property type="organism name" value="human"/>
</dbReference>
<dbReference type="EvolutionaryTrace" id="Q06187"/>
<dbReference type="GeneWiki" id="Bruton%27s_tyrosine_kinase"/>
<dbReference type="GenomeRNAi" id="695"/>
<dbReference type="Pharos" id="Q06187">
    <property type="development level" value="Tclin"/>
</dbReference>
<dbReference type="PRO" id="PR:Q06187"/>
<dbReference type="Proteomes" id="UP000005640">
    <property type="component" value="Chromosome X"/>
</dbReference>
<dbReference type="RNAct" id="Q06187">
    <property type="molecule type" value="protein"/>
</dbReference>
<dbReference type="Bgee" id="ENSG00000010671">
    <property type="expression patterns" value="Expressed in monocyte and 140 other cell types or tissues"/>
</dbReference>
<dbReference type="ExpressionAtlas" id="Q06187">
    <property type="expression patterns" value="baseline and differential"/>
</dbReference>
<dbReference type="GO" id="GO:0005737">
    <property type="term" value="C:cytoplasm"/>
    <property type="evidence" value="ECO:0000314"/>
    <property type="project" value="UniProt"/>
</dbReference>
<dbReference type="GO" id="GO:0031410">
    <property type="term" value="C:cytoplasmic vesicle"/>
    <property type="evidence" value="ECO:0007669"/>
    <property type="project" value="Ensembl"/>
</dbReference>
<dbReference type="GO" id="GO:0005829">
    <property type="term" value="C:cytosol"/>
    <property type="evidence" value="ECO:0000314"/>
    <property type="project" value="HPA"/>
</dbReference>
<dbReference type="GO" id="GO:0045121">
    <property type="term" value="C:membrane raft"/>
    <property type="evidence" value="ECO:0000314"/>
    <property type="project" value="HGNC-UCL"/>
</dbReference>
<dbReference type="GO" id="GO:0005634">
    <property type="term" value="C:nucleus"/>
    <property type="evidence" value="ECO:0000304"/>
    <property type="project" value="UniProtKB"/>
</dbReference>
<dbReference type="GO" id="GO:0048471">
    <property type="term" value="C:perinuclear region of cytoplasm"/>
    <property type="evidence" value="ECO:0007669"/>
    <property type="project" value="Ensembl"/>
</dbReference>
<dbReference type="GO" id="GO:0005886">
    <property type="term" value="C:plasma membrane"/>
    <property type="evidence" value="ECO:0000314"/>
    <property type="project" value="HPA"/>
</dbReference>
<dbReference type="GO" id="GO:0005524">
    <property type="term" value="F:ATP binding"/>
    <property type="evidence" value="ECO:0000304"/>
    <property type="project" value="HGNC-UCL"/>
</dbReference>
<dbReference type="GO" id="GO:0042802">
    <property type="term" value="F:identical protein binding"/>
    <property type="evidence" value="ECO:0000353"/>
    <property type="project" value="IntAct"/>
</dbReference>
<dbReference type="GO" id="GO:0004715">
    <property type="term" value="F:non-membrane spanning protein tyrosine kinase activity"/>
    <property type="evidence" value="ECO:0000314"/>
    <property type="project" value="ARUK-UCL"/>
</dbReference>
<dbReference type="GO" id="GO:0005547">
    <property type="term" value="F:phosphatidylinositol-3,4,5-trisphosphate binding"/>
    <property type="evidence" value="ECO:0000314"/>
    <property type="project" value="UniProtKB"/>
</dbReference>
<dbReference type="GO" id="GO:0016004">
    <property type="term" value="F:phospholipase activator activity"/>
    <property type="evidence" value="ECO:0000314"/>
    <property type="project" value="ARUK-UCL"/>
</dbReference>
<dbReference type="GO" id="GO:0043274">
    <property type="term" value="F:phospholipase binding"/>
    <property type="evidence" value="ECO:0000353"/>
    <property type="project" value="ARUK-UCL"/>
</dbReference>
<dbReference type="GO" id="GO:0004713">
    <property type="term" value="F:protein tyrosine kinase activity"/>
    <property type="evidence" value="ECO:0000314"/>
    <property type="project" value="UniProtKB"/>
</dbReference>
<dbReference type="GO" id="GO:0008270">
    <property type="term" value="F:zinc ion binding"/>
    <property type="evidence" value="ECO:0007669"/>
    <property type="project" value="UniProtKB-KW"/>
</dbReference>
<dbReference type="GO" id="GO:0002250">
    <property type="term" value="P:adaptive immune response"/>
    <property type="evidence" value="ECO:0000318"/>
    <property type="project" value="GO_Central"/>
</dbReference>
<dbReference type="GO" id="GO:0097190">
    <property type="term" value="P:apoptotic signaling pathway"/>
    <property type="evidence" value="ECO:0000304"/>
    <property type="project" value="ProtInc"/>
</dbReference>
<dbReference type="GO" id="GO:0042113">
    <property type="term" value="P:B cell activation"/>
    <property type="evidence" value="ECO:0000304"/>
    <property type="project" value="UniProtKB"/>
</dbReference>
<dbReference type="GO" id="GO:0002344">
    <property type="term" value="P:B cell affinity maturation"/>
    <property type="evidence" value="ECO:0007669"/>
    <property type="project" value="Ensembl"/>
</dbReference>
<dbReference type="GO" id="GO:0050853">
    <property type="term" value="P:B cell receptor signaling pathway"/>
    <property type="evidence" value="ECO:0000314"/>
    <property type="project" value="ARUK-UCL"/>
</dbReference>
<dbReference type="GO" id="GO:0019722">
    <property type="term" value="P:calcium-mediated signaling"/>
    <property type="evidence" value="ECO:0000304"/>
    <property type="project" value="HGNC-UCL"/>
</dbReference>
<dbReference type="GO" id="GO:0048469">
    <property type="term" value="P:cell maturation"/>
    <property type="evidence" value="ECO:0007669"/>
    <property type="project" value="Ensembl"/>
</dbReference>
<dbReference type="GO" id="GO:0098761">
    <property type="term" value="P:cellular response to interleukin-7"/>
    <property type="evidence" value="ECO:0007669"/>
    <property type="project" value="Ensembl"/>
</dbReference>
<dbReference type="GO" id="GO:0071226">
    <property type="term" value="P:cellular response to molecule of fungal origin"/>
    <property type="evidence" value="ECO:0007669"/>
    <property type="project" value="Ensembl"/>
</dbReference>
<dbReference type="GO" id="GO:0034614">
    <property type="term" value="P:cellular response to reactive oxygen species"/>
    <property type="evidence" value="ECO:0007669"/>
    <property type="project" value="Ensembl"/>
</dbReference>
<dbReference type="GO" id="GO:1990959">
    <property type="term" value="P:eosinophil homeostasis"/>
    <property type="evidence" value="ECO:0007669"/>
    <property type="project" value="Ensembl"/>
</dbReference>
<dbReference type="GO" id="GO:0038095">
    <property type="term" value="P:Fc-epsilon receptor signaling pathway"/>
    <property type="evidence" value="ECO:0000304"/>
    <property type="project" value="Reactome"/>
</dbReference>
<dbReference type="GO" id="GO:0002553">
    <property type="term" value="P:histamine secretion by mast cell"/>
    <property type="evidence" value="ECO:0007669"/>
    <property type="project" value="Ensembl"/>
</dbReference>
<dbReference type="GO" id="GO:0045087">
    <property type="term" value="P:innate immune response"/>
    <property type="evidence" value="ECO:0000304"/>
    <property type="project" value="UniProtKB"/>
</dbReference>
<dbReference type="GO" id="GO:0035556">
    <property type="term" value="P:intracellular signal transduction"/>
    <property type="evidence" value="ECO:0000314"/>
    <property type="project" value="ARUK-UCL"/>
</dbReference>
<dbReference type="GO" id="GO:0007498">
    <property type="term" value="P:mesoderm development"/>
    <property type="evidence" value="ECO:0000304"/>
    <property type="project" value="ProtInc"/>
</dbReference>
<dbReference type="GO" id="GO:0061516">
    <property type="term" value="P:monocyte proliferation"/>
    <property type="evidence" value="ECO:0007669"/>
    <property type="project" value="Ensembl"/>
</dbReference>
<dbReference type="GO" id="GO:0002755">
    <property type="term" value="P:MyD88-dependent toll-like receptor signaling pathway"/>
    <property type="evidence" value="ECO:0000304"/>
    <property type="project" value="Reactome"/>
</dbReference>
<dbReference type="GO" id="GO:0030889">
    <property type="term" value="P:negative regulation of B cell proliferation"/>
    <property type="evidence" value="ECO:0007669"/>
    <property type="project" value="Ensembl"/>
</dbReference>
<dbReference type="GO" id="GO:0032693">
    <property type="term" value="P:negative regulation of interleukin-10 production"/>
    <property type="evidence" value="ECO:0007669"/>
    <property type="project" value="Ensembl"/>
</dbReference>
<dbReference type="GO" id="GO:0001780">
    <property type="term" value="P:neutrophil homeostasis"/>
    <property type="evidence" value="ECO:0007669"/>
    <property type="project" value="Ensembl"/>
</dbReference>
<dbReference type="GO" id="GO:0018108">
    <property type="term" value="P:peptidyl-tyrosine phosphorylation"/>
    <property type="evidence" value="ECO:0000314"/>
    <property type="project" value="CACAO"/>
</dbReference>
<dbReference type="GO" id="GO:0045579">
    <property type="term" value="P:positive regulation of B cell differentiation"/>
    <property type="evidence" value="ECO:0000304"/>
    <property type="project" value="UniProtKB"/>
</dbReference>
<dbReference type="GO" id="GO:0030890">
    <property type="term" value="P:positive regulation of B cell proliferation"/>
    <property type="evidence" value="ECO:0007669"/>
    <property type="project" value="Ensembl"/>
</dbReference>
<dbReference type="GO" id="GO:0043123">
    <property type="term" value="P:positive regulation of canonical NF-kappaB signal transduction"/>
    <property type="evidence" value="ECO:0000304"/>
    <property type="project" value="HGNC-UCL"/>
</dbReference>
<dbReference type="GO" id="GO:0141111">
    <property type="term" value="P:positive regulation of cGAS/STING signaling pathway"/>
    <property type="evidence" value="ECO:0000314"/>
    <property type="project" value="UniProt"/>
</dbReference>
<dbReference type="GO" id="GO:0002639">
    <property type="term" value="P:positive regulation of immunoglobulin production"/>
    <property type="evidence" value="ECO:0007669"/>
    <property type="project" value="Ensembl"/>
</dbReference>
<dbReference type="GO" id="GO:0150153">
    <property type="term" value="P:positive regulation of interleukin-17A production"/>
    <property type="evidence" value="ECO:0007669"/>
    <property type="project" value="Ensembl"/>
</dbReference>
<dbReference type="GO" id="GO:0032755">
    <property type="term" value="P:positive regulation of interleukin-6 production"/>
    <property type="evidence" value="ECO:0007669"/>
    <property type="project" value="Ensembl"/>
</dbReference>
<dbReference type="GO" id="GO:0051092">
    <property type="term" value="P:positive regulation of NF-kappaB transcription factor activity"/>
    <property type="evidence" value="ECO:0000304"/>
    <property type="project" value="UniProtKB"/>
</dbReference>
<dbReference type="GO" id="GO:1900227">
    <property type="term" value="P:positive regulation of NLRP3 inflammasome complex assembly"/>
    <property type="evidence" value="ECO:0000314"/>
    <property type="project" value="UniProtKB"/>
</dbReference>
<dbReference type="GO" id="GO:0050766">
    <property type="term" value="P:positive regulation of phagocytosis"/>
    <property type="evidence" value="ECO:0007669"/>
    <property type="project" value="Ensembl"/>
</dbReference>
<dbReference type="GO" id="GO:1901647">
    <property type="term" value="P:positive regulation of synoviocyte proliferation"/>
    <property type="evidence" value="ECO:0007669"/>
    <property type="project" value="Ensembl"/>
</dbReference>
<dbReference type="GO" id="GO:0032760">
    <property type="term" value="P:positive regulation of tumor necrosis factor production"/>
    <property type="evidence" value="ECO:0007669"/>
    <property type="project" value="Ensembl"/>
</dbReference>
<dbReference type="GO" id="GO:0001812">
    <property type="term" value="P:positive regulation of type I hypersensitivity"/>
    <property type="evidence" value="ECO:0007669"/>
    <property type="project" value="Ensembl"/>
</dbReference>
<dbReference type="GO" id="GO:0001805">
    <property type="term" value="P:positive regulation of type III hypersensitivity"/>
    <property type="evidence" value="ECO:0007669"/>
    <property type="project" value="Ensembl"/>
</dbReference>
<dbReference type="GO" id="GO:0030167">
    <property type="term" value="P:proteoglycan catabolic process"/>
    <property type="evidence" value="ECO:0007669"/>
    <property type="project" value="Ensembl"/>
</dbReference>
<dbReference type="GO" id="GO:0002902">
    <property type="term" value="P:regulation of B cell apoptotic process"/>
    <property type="evidence" value="ECO:0000304"/>
    <property type="project" value="UniProtKB"/>
</dbReference>
<dbReference type="GO" id="GO:0002721">
    <property type="term" value="P:regulation of B cell cytokine production"/>
    <property type="evidence" value="ECO:0000304"/>
    <property type="project" value="UniProtKB"/>
</dbReference>
<dbReference type="GO" id="GO:0032496">
    <property type="term" value="P:response to lipopolysaccharide"/>
    <property type="evidence" value="ECO:0007669"/>
    <property type="project" value="Ensembl"/>
</dbReference>
<dbReference type="GO" id="GO:0050852">
    <property type="term" value="P:T cell receptor signaling pathway"/>
    <property type="evidence" value="ECO:0000318"/>
    <property type="project" value="GO_Central"/>
</dbReference>
<dbReference type="CDD" id="cd01238">
    <property type="entry name" value="PH_Btk"/>
    <property type="match status" value="1"/>
</dbReference>
<dbReference type="CDD" id="cd05113">
    <property type="entry name" value="PTKc_Btk_Bmx"/>
    <property type="match status" value="1"/>
</dbReference>
<dbReference type="CDD" id="cd10397">
    <property type="entry name" value="SH2_Tec_Btk"/>
    <property type="match status" value="1"/>
</dbReference>
<dbReference type="CDD" id="cd11906">
    <property type="entry name" value="SH3_BTK"/>
    <property type="match status" value="1"/>
</dbReference>
<dbReference type="FunFam" id="1.10.510.10:FF:000052">
    <property type="entry name" value="Tyrosine-protein kinase"/>
    <property type="match status" value="1"/>
</dbReference>
<dbReference type="FunFam" id="2.30.29.30:FF:000191">
    <property type="entry name" value="Tyrosine-protein kinase"/>
    <property type="match status" value="1"/>
</dbReference>
<dbReference type="FunFam" id="2.30.30.40:FF:000125">
    <property type="entry name" value="Tyrosine-protein kinase"/>
    <property type="match status" value="1"/>
</dbReference>
<dbReference type="FunFam" id="3.30.200.20:FF:000053">
    <property type="entry name" value="Tyrosine-protein kinase"/>
    <property type="match status" value="1"/>
</dbReference>
<dbReference type="FunFam" id="3.30.505.10:FF:000040">
    <property type="entry name" value="Tyrosine-protein kinase"/>
    <property type="match status" value="1"/>
</dbReference>
<dbReference type="Gene3D" id="2.30.29.30">
    <property type="entry name" value="Pleckstrin-homology domain (PH domain)/Phosphotyrosine-binding domain (PTB)"/>
    <property type="match status" value="1"/>
</dbReference>
<dbReference type="Gene3D" id="3.30.505.10">
    <property type="entry name" value="SH2 domain"/>
    <property type="match status" value="1"/>
</dbReference>
<dbReference type="Gene3D" id="2.30.30.40">
    <property type="entry name" value="SH3 Domains"/>
    <property type="match status" value="1"/>
</dbReference>
<dbReference type="Gene3D" id="1.10.510.10">
    <property type="entry name" value="Transferase(Phosphotransferase) domain 1"/>
    <property type="match status" value="1"/>
</dbReference>
<dbReference type="InterPro" id="IPR035574">
    <property type="entry name" value="BTK_SH3"/>
</dbReference>
<dbReference type="InterPro" id="IPR011009">
    <property type="entry name" value="Kinase-like_dom_sf"/>
</dbReference>
<dbReference type="InterPro" id="IPR050198">
    <property type="entry name" value="Non-receptor_tyrosine_kinases"/>
</dbReference>
<dbReference type="InterPro" id="IPR011993">
    <property type="entry name" value="PH-like_dom_sf"/>
</dbReference>
<dbReference type="InterPro" id="IPR001849">
    <property type="entry name" value="PH_domain"/>
</dbReference>
<dbReference type="InterPro" id="IPR000719">
    <property type="entry name" value="Prot_kinase_dom"/>
</dbReference>
<dbReference type="InterPro" id="IPR017441">
    <property type="entry name" value="Protein_kinase_ATP_BS"/>
</dbReference>
<dbReference type="InterPro" id="IPR001245">
    <property type="entry name" value="Ser-Thr/Tyr_kinase_cat_dom"/>
</dbReference>
<dbReference type="InterPro" id="IPR000980">
    <property type="entry name" value="SH2"/>
</dbReference>
<dbReference type="InterPro" id="IPR036860">
    <property type="entry name" value="SH2_dom_sf"/>
</dbReference>
<dbReference type="InterPro" id="IPR036028">
    <property type="entry name" value="SH3-like_dom_sf"/>
</dbReference>
<dbReference type="InterPro" id="IPR001452">
    <property type="entry name" value="SH3_domain"/>
</dbReference>
<dbReference type="InterPro" id="IPR008266">
    <property type="entry name" value="Tyr_kinase_AS"/>
</dbReference>
<dbReference type="InterPro" id="IPR020635">
    <property type="entry name" value="Tyr_kinase_cat_dom"/>
</dbReference>
<dbReference type="InterPro" id="IPR001562">
    <property type="entry name" value="Znf_Btk_motif"/>
</dbReference>
<dbReference type="PANTHER" id="PTHR24418">
    <property type="entry name" value="TYROSINE-PROTEIN KINASE"/>
    <property type="match status" value="1"/>
</dbReference>
<dbReference type="Pfam" id="PF00779">
    <property type="entry name" value="BTK"/>
    <property type="match status" value="1"/>
</dbReference>
<dbReference type="Pfam" id="PF00169">
    <property type="entry name" value="PH"/>
    <property type="match status" value="1"/>
</dbReference>
<dbReference type="Pfam" id="PF07714">
    <property type="entry name" value="PK_Tyr_Ser-Thr"/>
    <property type="match status" value="1"/>
</dbReference>
<dbReference type="Pfam" id="PF00017">
    <property type="entry name" value="SH2"/>
    <property type="match status" value="1"/>
</dbReference>
<dbReference type="Pfam" id="PF00018">
    <property type="entry name" value="SH3_1"/>
    <property type="match status" value="1"/>
</dbReference>
<dbReference type="PRINTS" id="PR00401">
    <property type="entry name" value="SH2DOMAIN"/>
</dbReference>
<dbReference type="PRINTS" id="PR00452">
    <property type="entry name" value="SH3DOMAIN"/>
</dbReference>
<dbReference type="PRINTS" id="PR00402">
    <property type="entry name" value="TECBTKDOMAIN"/>
</dbReference>
<dbReference type="PRINTS" id="PR00109">
    <property type="entry name" value="TYRKINASE"/>
</dbReference>
<dbReference type="SMART" id="SM00107">
    <property type="entry name" value="BTK"/>
    <property type="match status" value="1"/>
</dbReference>
<dbReference type="SMART" id="SM00233">
    <property type="entry name" value="PH"/>
    <property type="match status" value="1"/>
</dbReference>
<dbReference type="SMART" id="SM00252">
    <property type="entry name" value="SH2"/>
    <property type="match status" value="1"/>
</dbReference>
<dbReference type="SMART" id="SM00326">
    <property type="entry name" value="SH3"/>
    <property type="match status" value="1"/>
</dbReference>
<dbReference type="SMART" id="SM00219">
    <property type="entry name" value="TyrKc"/>
    <property type="match status" value="1"/>
</dbReference>
<dbReference type="SUPFAM" id="SSF50729">
    <property type="entry name" value="PH domain-like"/>
    <property type="match status" value="1"/>
</dbReference>
<dbReference type="SUPFAM" id="SSF56112">
    <property type="entry name" value="Protein kinase-like (PK-like)"/>
    <property type="match status" value="1"/>
</dbReference>
<dbReference type="SUPFAM" id="SSF55550">
    <property type="entry name" value="SH2 domain"/>
    <property type="match status" value="1"/>
</dbReference>
<dbReference type="SUPFAM" id="SSF50044">
    <property type="entry name" value="SH3-domain"/>
    <property type="match status" value="1"/>
</dbReference>
<dbReference type="PROSITE" id="PS50003">
    <property type="entry name" value="PH_DOMAIN"/>
    <property type="match status" value="1"/>
</dbReference>
<dbReference type="PROSITE" id="PS00107">
    <property type="entry name" value="PROTEIN_KINASE_ATP"/>
    <property type="match status" value="1"/>
</dbReference>
<dbReference type="PROSITE" id="PS50011">
    <property type="entry name" value="PROTEIN_KINASE_DOM"/>
    <property type="match status" value="1"/>
</dbReference>
<dbReference type="PROSITE" id="PS00109">
    <property type="entry name" value="PROTEIN_KINASE_TYR"/>
    <property type="match status" value="1"/>
</dbReference>
<dbReference type="PROSITE" id="PS50001">
    <property type="entry name" value="SH2"/>
    <property type="match status" value="1"/>
</dbReference>
<dbReference type="PROSITE" id="PS50002">
    <property type="entry name" value="SH3"/>
    <property type="match status" value="1"/>
</dbReference>
<dbReference type="PROSITE" id="PS51113">
    <property type="entry name" value="ZF_BTK"/>
    <property type="match status" value="1"/>
</dbReference>